<sequence>MSRSVALAVLALLSLSGLEAIQRTPKIQVYSRHPAENGKSNFLNCYVSGFHPSDIEVDLLKNGERIEKVEHSDLSFSKDWSFYLLYYTEFTPTEKDEYACRVNHVTLSQPKIVKWDRDM</sequence>
<gene>
    <name evidence="26" type="primary">B2M</name>
    <name type="ORF">CDABP0092</name>
    <name type="ORF">HDCMA22P</name>
</gene>
<dbReference type="EMBL" id="M17987">
    <property type="protein sequence ID" value="AAA51811.1"/>
    <property type="molecule type" value="Genomic_DNA"/>
</dbReference>
<dbReference type="EMBL" id="M17986">
    <property type="protein sequence ID" value="AAA51811.1"/>
    <property type="status" value="JOINED"/>
    <property type="molecule type" value="Genomic_DNA"/>
</dbReference>
<dbReference type="EMBL" id="AY187687">
    <property type="protein sequence ID" value="AAO20842.1"/>
    <property type="molecule type" value="mRNA"/>
</dbReference>
<dbReference type="EMBL" id="AB021288">
    <property type="protein sequence ID" value="BAA35182.1"/>
    <property type="molecule type" value="mRNA"/>
</dbReference>
<dbReference type="EMBL" id="DQ217933">
    <property type="protein sequence ID" value="ABB01003.1"/>
    <property type="molecule type" value="Genomic_DNA"/>
</dbReference>
<dbReference type="EMBL" id="AF072097">
    <property type="protein sequence ID" value="AAD48083.1"/>
    <property type="molecule type" value="mRNA"/>
</dbReference>
<dbReference type="EMBL" id="AY007153">
    <property type="protein sequence ID" value="AAG02006.1"/>
    <property type="molecule type" value="mRNA"/>
</dbReference>
<dbReference type="EMBL" id="CR457066">
    <property type="protein sequence ID" value="CAG33347.1"/>
    <property type="molecule type" value="mRNA"/>
</dbReference>
<dbReference type="EMBL" id="AK315776">
    <property type="protein sequence ID" value="BAG38125.1"/>
    <property type="molecule type" value="mRNA"/>
</dbReference>
<dbReference type="EMBL" id="CH471082">
    <property type="protein sequence ID" value="EAW77277.1"/>
    <property type="molecule type" value="Genomic_DNA"/>
</dbReference>
<dbReference type="EMBL" id="BC032589">
    <property type="protein sequence ID" value="AAH32589.1"/>
    <property type="molecule type" value="mRNA"/>
</dbReference>
<dbReference type="EMBL" id="BC064910">
    <property type="protein sequence ID" value="AAH64910.1"/>
    <property type="molecule type" value="mRNA"/>
</dbReference>
<dbReference type="EMBL" id="V00567">
    <property type="protein sequence ID" value="CAA23830.1"/>
    <property type="molecule type" value="mRNA"/>
</dbReference>
<dbReference type="CCDS" id="CCDS10113.1"/>
<dbReference type="PIR" id="A90976">
    <property type="entry name" value="MGHUB2"/>
</dbReference>
<dbReference type="RefSeq" id="NP_004039.1">
    <property type="nucleotide sequence ID" value="NM_004048.4"/>
</dbReference>
<dbReference type="PDB" id="1A1M">
    <property type="method" value="X-ray"/>
    <property type="resolution" value="2.30 A"/>
    <property type="chains" value="B=21-119"/>
</dbReference>
<dbReference type="PDB" id="1A1N">
    <property type="method" value="X-ray"/>
    <property type="resolution" value="2.00 A"/>
    <property type="chains" value="B=21-119"/>
</dbReference>
<dbReference type="PDB" id="1A1O">
    <property type="method" value="X-ray"/>
    <property type="resolution" value="2.30 A"/>
    <property type="chains" value="B=21-119"/>
</dbReference>
<dbReference type="PDB" id="1A6Z">
    <property type="method" value="X-ray"/>
    <property type="resolution" value="2.60 A"/>
    <property type="chains" value="B/D=21-119"/>
</dbReference>
<dbReference type="PDB" id="1A9B">
    <property type="method" value="X-ray"/>
    <property type="resolution" value="3.20 A"/>
    <property type="chains" value="B/E=21-119"/>
</dbReference>
<dbReference type="PDB" id="1A9E">
    <property type="method" value="X-ray"/>
    <property type="resolution" value="2.50 A"/>
    <property type="chains" value="B=21-119"/>
</dbReference>
<dbReference type="PDB" id="1AGB">
    <property type="method" value="X-ray"/>
    <property type="resolution" value="2.20 A"/>
    <property type="chains" value="B=21-119"/>
</dbReference>
<dbReference type="PDB" id="1AGC">
    <property type="method" value="X-ray"/>
    <property type="resolution" value="2.10 A"/>
    <property type="chains" value="B=21-119"/>
</dbReference>
<dbReference type="PDB" id="1AGD">
    <property type="method" value="X-ray"/>
    <property type="resolution" value="2.05 A"/>
    <property type="chains" value="B=21-119"/>
</dbReference>
<dbReference type="PDB" id="1AGE">
    <property type="method" value="X-ray"/>
    <property type="resolution" value="2.30 A"/>
    <property type="chains" value="B=21-119"/>
</dbReference>
<dbReference type="PDB" id="1AGF">
    <property type="method" value="X-ray"/>
    <property type="resolution" value="2.20 A"/>
    <property type="chains" value="B=21-119"/>
</dbReference>
<dbReference type="PDB" id="1AKJ">
    <property type="method" value="X-ray"/>
    <property type="resolution" value="2.65 A"/>
    <property type="chains" value="B=21-119"/>
</dbReference>
<dbReference type="PDB" id="1AO7">
    <property type="method" value="X-ray"/>
    <property type="resolution" value="2.60 A"/>
    <property type="chains" value="B=21-119"/>
</dbReference>
<dbReference type="PDB" id="1B0G">
    <property type="method" value="X-ray"/>
    <property type="resolution" value="2.50 A"/>
    <property type="chains" value="B/E=21-119"/>
</dbReference>
<dbReference type="PDB" id="1B0R">
    <property type="method" value="X-ray"/>
    <property type="resolution" value="2.90 A"/>
    <property type="chains" value="B=21-119"/>
</dbReference>
<dbReference type="PDB" id="1BD2">
    <property type="method" value="X-ray"/>
    <property type="resolution" value="2.50 A"/>
    <property type="chains" value="B=21-119"/>
</dbReference>
<dbReference type="PDB" id="1C16">
    <property type="method" value="X-ray"/>
    <property type="resolution" value="3.10 A"/>
    <property type="chains" value="B/D/F/H=21-119"/>
</dbReference>
<dbReference type="PDB" id="1CE6">
    <property type="method" value="X-ray"/>
    <property type="resolution" value="2.90 A"/>
    <property type="chains" value="B=21-119"/>
</dbReference>
<dbReference type="PDB" id="1CG9">
    <property type="method" value="X-ray"/>
    <property type="resolution" value="2.70 A"/>
    <property type="chains" value="B=21-119"/>
</dbReference>
<dbReference type="PDB" id="1DE4">
    <property type="method" value="X-ray"/>
    <property type="resolution" value="2.80 A"/>
    <property type="chains" value="B/E/H=21-119"/>
</dbReference>
<dbReference type="PDB" id="1DUY">
    <property type="method" value="X-ray"/>
    <property type="resolution" value="2.15 A"/>
    <property type="chains" value="B/E=21-119"/>
</dbReference>
<dbReference type="PDB" id="1DUZ">
    <property type="method" value="X-ray"/>
    <property type="resolution" value="1.80 A"/>
    <property type="chains" value="B/E=21-119"/>
</dbReference>
<dbReference type="PDB" id="1E27">
    <property type="method" value="X-ray"/>
    <property type="resolution" value="2.20 A"/>
    <property type="chains" value="B=21-119"/>
</dbReference>
<dbReference type="PDB" id="1E28">
    <property type="method" value="X-ray"/>
    <property type="resolution" value="3.00 A"/>
    <property type="chains" value="B=21-119"/>
</dbReference>
<dbReference type="PDB" id="1EEY">
    <property type="method" value="X-ray"/>
    <property type="resolution" value="2.25 A"/>
    <property type="chains" value="B/E=21-119"/>
</dbReference>
<dbReference type="PDB" id="1EEZ">
    <property type="method" value="X-ray"/>
    <property type="resolution" value="2.30 A"/>
    <property type="chains" value="B/E=21-119"/>
</dbReference>
<dbReference type="PDB" id="1EFX">
    <property type="method" value="X-ray"/>
    <property type="resolution" value="3.00 A"/>
    <property type="chains" value="B=21-119"/>
</dbReference>
<dbReference type="PDB" id="1EXU">
    <property type="method" value="X-ray"/>
    <property type="resolution" value="2.70 A"/>
    <property type="chains" value="B=21-119"/>
</dbReference>
<dbReference type="PDB" id="1GZP">
    <property type="method" value="X-ray"/>
    <property type="resolution" value="2.80 A"/>
    <property type="chains" value="B=21-119"/>
</dbReference>
<dbReference type="PDB" id="1GZQ">
    <property type="method" value="X-ray"/>
    <property type="resolution" value="2.26 A"/>
    <property type="chains" value="B=21-119"/>
</dbReference>
<dbReference type="PDB" id="1HHG">
    <property type="method" value="X-ray"/>
    <property type="resolution" value="2.60 A"/>
    <property type="chains" value="B/E=21-119"/>
</dbReference>
<dbReference type="PDB" id="1HHH">
    <property type="method" value="X-ray"/>
    <property type="resolution" value="3.00 A"/>
    <property type="chains" value="B=21-119"/>
</dbReference>
<dbReference type="PDB" id="1HHI">
    <property type="method" value="X-ray"/>
    <property type="resolution" value="2.50 A"/>
    <property type="chains" value="B/E=21-119"/>
</dbReference>
<dbReference type="PDB" id="1HHJ">
    <property type="method" value="X-ray"/>
    <property type="resolution" value="2.50 A"/>
    <property type="chains" value="B/E=21-119"/>
</dbReference>
<dbReference type="PDB" id="1HHK">
    <property type="method" value="X-ray"/>
    <property type="resolution" value="2.50 A"/>
    <property type="chains" value="B/E=21-119"/>
</dbReference>
<dbReference type="PDB" id="1HLA">
    <property type="method" value="X-ray"/>
    <property type="resolution" value="3.50 A"/>
    <property type="chains" value="M=21-117"/>
</dbReference>
<dbReference type="PDB" id="1HSA">
    <property type="method" value="X-ray"/>
    <property type="resolution" value="2.10 A"/>
    <property type="chains" value="B/E=21-119"/>
</dbReference>
<dbReference type="PDB" id="1HSB">
    <property type="method" value="X-ray"/>
    <property type="resolution" value="1.90 A"/>
    <property type="chains" value="B=21-119"/>
</dbReference>
<dbReference type="PDB" id="1I1F">
    <property type="method" value="X-ray"/>
    <property type="resolution" value="2.80 A"/>
    <property type="chains" value="B/E=21-119"/>
</dbReference>
<dbReference type="PDB" id="1I1Y">
    <property type="method" value="X-ray"/>
    <property type="resolution" value="2.20 A"/>
    <property type="chains" value="B/E=21-119"/>
</dbReference>
<dbReference type="PDB" id="1I4F">
    <property type="method" value="X-ray"/>
    <property type="resolution" value="1.40 A"/>
    <property type="chains" value="B=21-119"/>
</dbReference>
<dbReference type="PDB" id="1I7R">
    <property type="method" value="X-ray"/>
    <property type="resolution" value="2.20 A"/>
    <property type="chains" value="B/E=21-119"/>
</dbReference>
<dbReference type="PDB" id="1I7T">
    <property type="method" value="X-ray"/>
    <property type="resolution" value="2.80 A"/>
    <property type="chains" value="B/E=21-119"/>
</dbReference>
<dbReference type="PDB" id="1I7U">
    <property type="method" value="X-ray"/>
    <property type="resolution" value="1.80 A"/>
    <property type="chains" value="B/E=21-119"/>
</dbReference>
<dbReference type="PDB" id="1IM3">
    <property type="method" value="X-ray"/>
    <property type="resolution" value="2.20 A"/>
    <property type="chains" value="B/F/J/N=21-119"/>
</dbReference>
<dbReference type="PDB" id="1IM9">
    <property type="method" value="X-ray"/>
    <property type="resolution" value="2.80 A"/>
    <property type="chains" value="B/F=21-119"/>
</dbReference>
<dbReference type="PDB" id="1JF1">
    <property type="method" value="X-ray"/>
    <property type="resolution" value="1.85 A"/>
    <property type="chains" value="B=21-119"/>
</dbReference>
<dbReference type="PDB" id="1JGD">
    <property type="method" value="X-ray"/>
    <property type="resolution" value="1.90 A"/>
    <property type="chains" value="B=21-119"/>
</dbReference>
<dbReference type="PDB" id="1JGE">
    <property type="method" value="X-ray"/>
    <property type="resolution" value="2.10 A"/>
    <property type="chains" value="B=21-119"/>
</dbReference>
<dbReference type="PDB" id="1JHT">
    <property type="method" value="X-ray"/>
    <property type="resolution" value="2.15 A"/>
    <property type="chains" value="B=21-119"/>
</dbReference>
<dbReference type="PDB" id="1JNJ">
    <property type="method" value="NMR"/>
    <property type="chains" value="A=21-119"/>
</dbReference>
<dbReference type="PDB" id="1K5N">
    <property type="method" value="X-ray"/>
    <property type="resolution" value="1.09 A"/>
    <property type="chains" value="B=21-119"/>
</dbReference>
<dbReference type="PDB" id="1KPR">
    <property type="method" value="X-ray"/>
    <property type="resolution" value="2.80 A"/>
    <property type="chains" value="B/D=21-119"/>
</dbReference>
<dbReference type="PDB" id="1KTL">
    <property type="method" value="X-ray"/>
    <property type="resolution" value="3.10 A"/>
    <property type="chains" value="B/D=21-119"/>
</dbReference>
<dbReference type="PDB" id="1LDS">
    <property type="method" value="X-ray"/>
    <property type="resolution" value="1.80 A"/>
    <property type="chains" value="A=21-119"/>
</dbReference>
<dbReference type="PDB" id="1LP9">
    <property type="method" value="X-ray"/>
    <property type="resolution" value="2.00 A"/>
    <property type="chains" value="B/I=21-119"/>
</dbReference>
<dbReference type="PDB" id="1M05">
    <property type="method" value="X-ray"/>
    <property type="resolution" value="1.90 A"/>
    <property type="chains" value="B/D=21-119"/>
</dbReference>
<dbReference type="PDB" id="1M6O">
    <property type="method" value="X-ray"/>
    <property type="resolution" value="1.60 A"/>
    <property type="chains" value="B=21-119"/>
</dbReference>
<dbReference type="PDB" id="1MHE">
    <property type="method" value="X-ray"/>
    <property type="resolution" value="2.85 A"/>
    <property type="chains" value="B/D=21-119"/>
</dbReference>
<dbReference type="PDB" id="1MI5">
    <property type="method" value="X-ray"/>
    <property type="resolution" value="2.50 A"/>
    <property type="chains" value="B=21-119"/>
</dbReference>
<dbReference type="PDB" id="1N2R">
    <property type="method" value="X-ray"/>
    <property type="resolution" value="1.70 A"/>
    <property type="chains" value="B=21-119"/>
</dbReference>
<dbReference type="PDB" id="1OF2">
    <property type="method" value="X-ray"/>
    <property type="resolution" value="2.20 A"/>
    <property type="chains" value="B=21-119"/>
</dbReference>
<dbReference type="PDB" id="1OGA">
    <property type="method" value="X-ray"/>
    <property type="resolution" value="1.40 A"/>
    <property type="chains" value="B=21-119"/>
</dbReference>
<dbReference type="PDB" id="1OGT">
    <property type="method" value="X-ray"/>
    <property type="resolution" value="1.47 A"/>
    <property type="chains" value="B=21-119"/>
</dbReference>
<dbReference type="PDB" id="1ONQ">
    <property type="method" value="X-ray"/>
    <property type="resolution" value="2.15 A"/>
    <property type="chains" value="B/D=21-119"/>
</dbReference>
<dbReference type="PDB" id="1P7Q">
    <property type="method" value="X-ray"/>
    <property type="resolution" value="3.40 A"/>
    <property type="chains" value="B=21-119"/>
</dbReference>
<dbReference type="PDB" id="1PY4">
    <property type="method" value="X-ray"/>
    <property type="resolution" value="2.90 A"/>
    <property type="chains" value="A/B/C/D=21-119"/>
</dbReference>
<dbReference type="PDB" id="1Q94">
    <property type="method" value="X-ray"/>
    <property type="resolution" value="2.40 A"/>
    <property type="chains" value="B/E=21-119"/>
</dbReference>
<dbReference type="PDB" id="1QEW">
    <property type="method" value="X-ray"/>
    <property type="resolution" value="2.20 A"/>
    <property type="chains" value="B=21-119"/>
</dbReference>
<dbReference type="PDB" id="1QLF">
    <property type="method" value="X-ray"/>
    <property type="resolution" value="2.65 A"/>
    <property type="chains" value="B=21-119"/>
</dbReference>
<dbReference type="PDB" id="1QQD">
    <property type="method" value="X-ray"/>
    <property type="resolution" value="2.70 A"/>
    <property type="chains" value="B=21-118"/>
</dbReference>
<dbReference type="PDB" id="1QR1">
    <property type="method" value="X-ray"/>
    <property type="resolution" value="2.40 A"/>
    <property type="chains" value="B/E=20-119"/>
</dbReference>
<dbReference type="PDB" id="1QRN">
    <property type="method" value="X-ray"/>
    <property type="resolution" value="2.80 A"/>
    <property type="chains" value="B=21-119"/>
</dbReference>
<dbReference type="PDB" id="1QSE">
    <property type="method" value="X-ray"/>
    <property type="resolution" value="2.80 A"/>
    <property type="chains" value="B=20-119"/>
</dbReference>
<dbReference type="PDB" id="1QSF">
    <property type="method" value="X-ray"/>
    <property type="resolution" value="2.80 A"/>
    <property type="chains" value="B=20-119"/>
</dbReference>
<dbReference type="PDB" id="1QVO">
    <property type="method" value="X-ray"/>
    <property type="resolution" value="2.22 A"/>
    <property type="chains" value="B/E=21-119"/>
</dbReference>
<dbReference type="PDB" id="1R3H">
    <property type="method" value="X-ray"/>
    <property type="resolution" value="2.50 A"/>
    <property type="chains" value="B/D/F/H=21-119"/>
</dbReference>
<dbReference type="PDB" id="1S8D">
    <property type="method" value="X-ray"/>
    <property type="resolution" value="2.20 A"/>
    <property type="chains" value="B=21-119"/>
</dbReference>
<dbReference type="PDB" id="1S9W">
    <property type="method" value="X-ray"/>
    <property type="resolution" value="2.20 A"/>
    <property type="chains" value="B=21-119"/>
</dbReference>
<dbReference type="PDB" id="1S9X">
    <property type="method" value="X-ray"/>
    <property type="resolution" value="2.50 A"/>
    <property type="chains" value="B=21-119"/>
</dbReference>
<dbReference type="PDB" id="1S9Y">
    <property type="method" value="X-ray"/>
    <property type="resolution" value="2.30 A"/>
    <property type="chains" value="B=21-119"/>
</dbReference>
<dbReference type="PDB" id="1SYS">
    <property type="method" value="X-ray"/>
    <property type="resolution" value="2.40 A"/>
    <property type="chains" value="B=21-119"/>
</dbReference>
<dbReference type="PDB" id="1SYV">
    <property type="method" value="X-ray"/>
    <property type="resolution" value="1.70 A"/>
    <property type="chains" value="B=21-119"/>
</dbReference>
<dbReference type="PDB" id="1T1W">
    <property type="method" value="X-ray"/>
    <property type="resolution" value="2.20 A"/>
    <property type="chains" value="B=21-119"/>
</dbReference>
<dbReference type="PDB" id="1T1X">
    <property type="method" value="X-ray"/>
    <property type="resolution" value="2.20 A"/>
    <property type="chains" value="B=21-119"/>
</dbReference>
<dbReference type="PDB" id="1T1Y">
    <property type="method" value="X-ray"/>
    <property type="resolution" value="2.00 A"/>
    <property type="chains" value="B=21-119"/>
</dbReference>
<dbReference type="PDB" id="1T1Z">
    <property type="method" value="X-ray"/>
    <property type="resolution" value="1.90 A"/>
    <property type="chains" value="B=21-119"/>
</dbReference>
<dbReference type="PDB" id="1T20">
    <property type="method" value="X-ray"/>
    <property type="resolution" value="2.20 A"/>
    <property type="chains" value="B=21-119"/>
</dbReference>
<dbReference type="PDB" id="1T21">
    <property type="method" value="X-ray"/>
    <property type="resolution" value="2.19 A"/>
    <property type="chains" value="B=21-119"/>
</dbReference>
<dbReference type="PDB" id="1T22">
    <property type="method" value="X-ray"/>
    <property type="resolution" value="2.20 A"/>
    <property type="chains" value="B=21-119"/>
</dbReference>
<dbReference type="PDB" id="1TMC">
    <property type="method" value="X-ray"/>
    <property type="resolution" value="2.30 A"/>
    <property type="chains" value="B=21-119"/>
</dbReference>
<dbReference type="PDB" id="1TVB">
    <property type="method" value="X-ray"/>
    <property type="resolution" value="1.80 A"/>
    <property type="chains" value="B/E=21-119"/>
</dbReference>
<dbReference type="PDB" id="1TVH">
    <property type="method" value="X-ray"/>
    <property type="resolution" value="1.80 A"/>
    <property type="chains" value="B/E=21-119"/>
</dbReference>
<dbReference type="PDB" id="1UQS">
    <property type="method" value="X-ray"/>
    <property type="resolution" value="3.10 A"/>
    <property type="chains" value="B=21-119"/>
</dbReference>
<dbReference type="PDB" id="1UXS">
    <property type="method" value="X-ray"/>
    <property type="resolution" value="1.55 A"/>
    <property type="chains" value="B=21-119"/>
</dbReference>
<dbReference type="PDB" id="1UXW">
    <property type="method" value="X-ray"/>
    <property type="resolution" value="1.71 A"/>
    <property type="chains" value="B=21-119"/>
</dbReference>
<dbReference type="PDB" id="1VGK">
    <property type="method" value="X-ray"/>
    <property type="resolution" value="2.06 A"/>
    <property type="chains" value="B=21-119"/>
</dbReference>
<dbReference type="PDB" id="1W0V">
    <property type="method" value="X-ray"/>
    <property type="resolution" value="2.27 A"/>
    <property type="chains" value="B=21-119"/>
</dbReference>
<dbReference type="PDB" id="1W0W">
    <property type="method" value="X-ray"/>
    <property type="resolution" value="2.10 A"/>
    <property type="chains" value="B=21-119"/>
</dbReference>
<dbReference type="PDB" id="1W72">
    <property type="method" value="X-ray"/>
    <property type="resolution" value="2.15 A"/>
    <property type="chains" value="B/E=21-119"/>
</dbReference>
<dbReference type="PDB" id="1X7Q">
    <property type="method" value="X-ray"/>
    <property type="resolution" value="1.45 A"/>
    <property type="chains" value="B=21-119"/>
</dbReference>
<dbReference type="PDB" id="1XH3">
    <property type="method" value="X-ray"/>
    <property type="resolution" value="1.48 A"/>
    <property type="chains" value="B=21-119"/>
</dbReference>
<dbReference type="PDB" id="1XR8">
    <property type="method" value="X-ray"/>
    <property type="resolution" value="2.30 A"/>
    <property type="chains" value="B=21-119"/>
</dbReference>
<dbReference type="PDB" id="1XR9">
    <property type="method" value="X-ray"/>
    <property type="resolution" value="1.79 A"/>
    <property type="chains" value="B=21-119"/>
</dbReference>
<dbReference type="PDB" id="1XZ0">
    <property type="method" value="X-ray"/>
    <property type="resolution" value="2.80 A"/>
    <property type="chains" value="B/D=21-119"/>
</dbReference>
<dbReference type="PDB" id="1YDP">
    <property type="method" value="X-ray"/>
    <property type="resolution" value="1.90 A"/>
    <property type="chains" value="B=21-119"/>
</dbReference>
<dbReference type="PDB" id="1YPZ">
    <property type="method" value="X-ray"/>
    <property type="resolution" value="3.40 A"/>
    <property type="chains" value="B/D=21-119"/>
</dbReference>
<dbReference type="PDB" id="1ZHK">
    <property type="method" value="X-ray"/>
    <property type="resolution" value="1.60 A"/>
    <property type="chains" value="B=21-119"/>
</dbReference>
<dbReference type="PDB" id="1ZHL">
    <property type="method" value="X-ray"/>
    <property type="resolution" value="1.50 A"/>
    <property type="chains" value="B=21-119"/>
</dbReference>
<dbReference type="PDB" id="1ZS8">
    <property type="method" value="X-ray"/>
    <property type="resolution" value="3.00 A"/>
    <property type="chains" value="B/D/F/H/J=21-119"/>
</dbReference>
<dbReference type="PDB" id="1ZSD">
    <property type="method" value="X-ray"/>
    <property type="resolution" value="1.70 A"/>
    <property type="chains" value="B=21-119"/>
</dbReference>
<dbReference type="PDB" id="1ZT4">
    <property type="method" value="X-ray"/>
    <property type="resolution" value="3.00 A"/>
    <property type="chains" value="B/D=21-119"/>
</dbReference>
<dbReference type="PDB" id="1ZVS">
    <property type="method" value="X-ray"/>
    <property type="resolution" value="2.80 A"/>
    <property type="chains" value="B/E=21-119"/>
</dbReference>
<dbReference type="PDB" id="2A83">
    <property type="method" value="X-ray"/>
    <property type="resolution" value="1.40 A"/>
    <property type="chains" value="B=21-119"/>
</dbReference>
<dbReference type="PDB" id="2AK4">
    <property type="method" value="X-ray"/>
    <property type="resolution" value="2.50 A"/>
    <property type="chains" value="B/G/L/R=21-119"/>
</dbReference>
<dbReference type="PDB" id="2AV1">
    <property type="method" value="X-ray"/>
    <property type="resolution" value="1.95 A"/>
    <property type="chains" value="B/E=21-119"/>
</dbReference>
<dbReference type="PDB" id="2AV7">
    <property type="method" value="X-ray"/>
    <property type="resolution" value="2.05 A"/>
    <property type="chains" value="B/E=21-119"/>
</dbReference>
<dbReference type="PDB" id="2AXF">
    <property type="method" value="X-ray"/>
    <property type="resolution" value="1.80 A"/>
    <property type="chains" value="B=21-119"/>
</dbReference>
<dbReference type="PDB" id="2AXG">
    <property type="method" value="X-ray"/>
    <property type="resolution" value="2.00 A"/>
    <property type="chains" value="B=21-119"/>
</dbReference>
<dbReference type="PDB" id="2BCK">
    <property type="method" value="X-ray"/>
    <property type="resolution" value="2.80 A"/>
    <property type="chains" value="B/E=21-119"/>
</dbReference>
<dbReference type="PDB" id="2BNQ">
    <property type="method" value="X-ray"/>
    <property type="resolution" value="1.70 A"/>
    <property type="chains" value="B=21-119"/>
</dbReference>
<dbReference type="PDB" id="2BNR">
    <property type="method" value="X-ray"/>
    <property type="resolution" value="1.90 A"/>
    <property type="chains" value="B=21-119"/>
</dbReference>
<dbReference type="PDB" id="2BSR">
    <property type="method" value="X-ray"/>
    <property type="resolution" value="2.30 A"/>
    <property type="chains" value="B=21-119"/>
</dbReference>
<dbReference type="PDB" id="2BSS">
    <property type="method" value="X-ray"/>
    <property type="resolution" value="2.00 A"/>
    <property type="chains" value="B=21-119"/>
</dbReference>
<dbReference type="PDB" id="2BST">
    <property type="method" value="X-ray"/>
    <property type="resolution" value="2.10 A"/>
    <property type="chains" value="B=21-119"/>
</dbReference>
<dbReference type="PDB" id="2BVO">
    <property type="method" value="X-ray"/>
    <property type="resolution" value="1.65 A"/>
    <property type="chains" value="B=21-119"/>
</dbReference>
<dbReference type="PDB" id="2BVP">
    <property type="method" value="X-ray"/>
    <property type="resolution" value="1.35 A"/>
    <property type="chains" value="B=21-119"/>
</dbReference>
<dbReference type="PDB" id="2BVQ">
    <property type="method" value="X-ray"/>
    <property type="resolution" value="2.00 A"/>
    <property type="chains" value="B=21-119"/>
</dbReference>
<dbReference type="PDB" id="2C7U">
    <property type="method" value="X-ray"/>
    <property type="resolution" value="2.38 A"/>
    <property type="chains" value="B/E=21-119"/>
</dbReference>
<dbReference type="PDB" id="2CII">
    <property type="method" value="X-ray"/>
    <property type="resolution" value="2.55 A"/>
    <property type="chains" value="B=21-119"/>
</dbReference>
<dbReference type="PDB" id="2CIK">
    <property type="method" value="X-ray"/>
    <property type="resolution" value="1.75 A"/>
    <property type="chains" value="B=21-119"/>
</dbReference>
<dbReference type="PDB" id="2CLR">
    <property type="method" value="X-ray"/>
    <property type="resolution" value="2.00 A"/>
    <property type="chains" value="B/E=21-119"/>
</dbReference>
<dbReference type="PDB" id="2D31">
    <property type="method" value="X-ray"/>
    <property type="resolution" value="3.20 A"/>
    <property type="chains" value="B/E=21-119"/>
</dbReference>
<dbReference type="PDB" id="2D4D">
    <property type="method" value="X-ray"/>
    <property type="resolution" value="2.10 A"/>
    <property type="chains" value="A=21-119"/>
</dbReference>
<dbReference type="PDB" id="2D4F">
    <property type="method" value="X-ray"/>
    <property type="resolution" value="1.70 A"/>
    <property type="chains" value="A=21-119"/>
</dbReference>
<dbReference type="PDB" id="2DYP">
    <property type="method" value="X-ray"/>
    <property type="resolution" value="2.50 A"/>
    <property type="chains" value="B=21-119"/>
</dbReference>
<dbReference type="PDB" id="2E8D">
    <property type="method" value="NMR"/>
    <property type="chains" value="A/B/C/D=40-61"/>
</dbReference>
<dbReference type="PDB" id="2ESV">
    <property type="method" value="X-ray"/>
    <property type="resolution" value="2.60 A"/>
    <property type="chains" value="B=21-119"/>
</dbReference>
<dbReference type="PDB" id="2F53">
    <property type="method" value="X-ray"/>
    <property type="resolution" value="2.10 A"/>
    <property type="chains" value="B=21-119"/>
</dbReference>
<dbReference type="PDB" id="2F54">
    <property type="method" value="X-ray"/>
    <property type="resolution" value="2.70 A"/>
    <property type="chains" value="B/G=21-119"/>
</dbReference>
<dbReference type="PDB" id="2F74">
    <property type="method" value="X-ray"/>
    <property type="resolution" value="2.70 A"/>
    <property type="chains" value="B/E=21-119"/>
</dbReference>
<dbReference type="PDB" id="2F8O">
    <property type="method" value="X-ray"/>
    <property type="resolution" value="1.70 A"/>
    <property type="chains" value="A/B=21-119"/>
</dbReference>
<dbReference type="PDB" id="2FYY">
    <property type="method" value="X-ray"/>
    <property type="resolution" value="1.50 A"/>
    <property type="chains" value="B=21-119"/>
</dbReference>
<dbReference type="PDB" id="2FZ3">
    <property type="method" value="X-ray"/>
    <property type="resolution" value="1.90 A"/>
    <property type="chains" value="B=21-119"/>
</dbReference>
<dbReference type="PDB" id="2GIT">
    <property type="method" value="X-ray"/>
    <property type="resolution" value="1.70 A"/>
    <property type="chains" value="B/E=21-119"/>
</dbReference>
<dbReference type="PDB" id="2GJ6">
    <property type="method" value="X-ray"/>
    <property type="resolution" value="2.56 A"/>
    <property type="chains" value="B=21-119"/>
</dbReference>
<dbReference type="PDB" id="2GT9">
    <property type="method" value="X-ray"/>
    <property type="resolution" value="1.75 A"/>
    <property type="chains" value="B/E=21-119"/>
</dbReference>
<dbReference type="PDB" id="2GTW">
    <property type="method" value="X-ray"/>
    <property type="resolution" value="1.55 A"/>
    <property type="chains" value="B/E=21-119"/>
</dbReference>
<dbReference type="PDB" id="2GTZ">
    <property type="method" value="X-ray"/>
    <property type="resolution" value="1.70 A"/>
    <property type="chains" value="B/E=21-119"/>
</dbReference>
<dbReference type="PDB" id="2GUO">
    <property type="method" value="X-ray"/>
    <property type="resolution" value="1.90 A"/>
    <property type="chains" value="B/E=21-119"/>
</dbReference>
<dbReference type="PDB" id="2H26">
    <property type="method" value="X-ray"/>
    <property type="resolution" value="1.80 A"/>
    <property type="chains" value="B=21-119"/>
</dbReference>
<dbReference type="PDB" id="2H6P">
    <property type="method" value="X-ray"/>
    <property type="resolution" value="1.90 A"/>
    <property type="chains" value="B=21-119"/>
</dbReference>
<dbReference type="PDB" id="2HJK">
    <property type="method" value="X-ray"/>
    <property type="resolution" value="1.85 A"/>
    <property type="chains" value="B=21-119"/>
</dbReference>
<dbReference type="PDB" id="2HJL">
    <property type="method" value="X-ray"/>
    <property type="resolution" value="1.50 A"/>
    <property type="chains" value="B=21-119"/>
</dbReference>
<dbReference type="PDB" id="2HLA">
    <property type="method" value="X-ray"/>
    <property type="resolution" value="2.60 A"/>
    <property type="chains" value="B=21-119"/>
</dbReference>
<dbReference type="PDB" id="2HN7">
    <property type="method" value="X-ray"/>
    <property type="resolution" value="1.60 A"/>
    <property type="chains" value="B=21-119"/>
</dbReference>
<dbReference type="PDB" id="2J8U">
    <property type="method" value="X-ray"/>
    <property type="resolution" value="2.88 A"/>
    <property type="chains" value="B/I=21-119"/>
</dbReference>
<dbReference type="PDB" id="2JCC">
    <property type="method" value="X-ray"/>
    <property type="resolution" value="2.50 A"/>
    <property type="chains" value="B/I=21-119"/>
</dbReference>
<dbReference type="PDB" id="2NW3">
    <property type="method" value="X-ray"/>
    <property type="resolution" value="1.70 A"/>
    <property type="chains" value="B=21-119"/>
</dbReference>
<dbReference type="PDB" id="2NX5">
    <property type="method" value="X-ray"/>
    <property type="resolution" value="2.70 A"/>
    <property type="chains" value="B/G/L/R=21-119"/>
</dbReference>
<dbReference type="PDB" id="2P5E">
    <property type="method" value="X-ray"/>
    <property type="resolution" value="1.89 A"/>
    <property type="chains" value="B=21-119"/>
</dbReference>
<dbReference type="PDB" id="2P5W">
    <property type="method" value="X-ray"/>
    <property type="resolution" value="2.20 A"/>
    <property type="chains" value="B=21-119"/>
</dbReference>
<dbReference type="PDB" id="2PO6">
    <property type="method" value="X-ray"/>
    <property type="resolution" value="3.20 A"/>
    <property type="chains" value="B/F=21-119"/>
</dbReference>
<dbReference type="PDB" id="2PYE">
    <property type="method" value="X-ray"/>
    <property type="resolution" value="2.30 A"/>
    <property type="chains" value="B=21-119"/>
</dbReference>
<dbReference type="PDB" id="2RFX">
    <property type="method" value="X-ray"/>
    <property type="resolution" value="2.50 A"/>
    <property type="chains" value="B=21-119"/>
</dbReference>
<dbReference type="PDB" id="2UWE">
    <property type="method" value="X-ray"/>
    <property type="resolution" value="2.40 A"/>
    <property type="chains" value="B/I=21-119"/>
</dbReference>
<dbReference type="PDB" id="2V2W">
    <property type="method" value="X-ray"/>
    <property type="resolution" value="1.60 A"/>
    <property type="chains" value="B/E=21-119"/>
</dbReference>
<dbReference type="PDB" id="2V2X">
    <property type="method" value="X-ray"/>
    <property type="resolution" value="1.60 A"/>
    <property type="chains" value="B/E=21-119"/>
</dbReference>
<dbReference type="PDB" id="2VB5">
    <property type="method" value="NMR"/>
    <property type="chains" value="A=21-119"/>
</dbReference>
<dbReference type="PDB" id="2VLJ">
    <property type="method" value="X-ray"/>
    <property type="resolution" value="2.40 A"/>
    <property type="chains" value="B=21-119"/>
</dbReference>
<dbReference type="PDB" id="2VLK">
    <property type="method" value="X-ray"/>
    <property type="resolution" value="2.50 A"/>
    <property type="chains" value="B=21-119"/>
</dbReference>
<dbReference type="PDB" id="2VLL">
    <property type="method" value="X-ray"/>
    <property type="resolution" value="1.60 A"/>
    <property type="chains" value="B/E=21-119"/>
</dbReference>
<dbReference type="PDB" id="2VLR">
    <property type="method" value="X-ray"/>
    <property type="resolution" value="2.30 A"/>
    <property type="chains" value="B/G=21-119"/>
</dbReference>
<dbReference type="PDB" id="2X4N">
    <property type="method" value="X-ray"/>
    <property type="resolution" value="2.34 A"/>
    <property type="chains" value="B/E=21-119"/>
</dbReference>
<dbReference type="PDB" id="2X4O">
    <property type="method" value="X-ray"/>
    <property type="resolution" value="2.30 A"/>
    <property type="chains" value="B/E=21-119"/>
</dbReference>
<dbReference type="PDB" id="2X4P">
    <property type="method" value="X-ray"/>
    <property type="resolution" value="2.30 A"/>
    <property type="chains" value="B/E=21-119"/>
</dbReference>
<dbReference type="PDB" id="2X4Q">
    <property type="method" value="X-ray"/>
    <property type="resolution" value="1.90 A"/>
    <property type="chains" value="B/E=21-119"/>
</dbReference>
<dbReference type="PDB" id="2X4R">
    <property type="method" value="X-ray"/>
    <property type="resolution" value="2.30 A"/>
    <property type="chains" value="B/E=21-119"/>
</dbReference>
<dbReference type="PDB" id="2X4S">
    <property type="method" value="X-ray"/>
    <property type="resolution" value="2.55 A"/>
    <property type="chains" value="B/E=21-119"/>
</dbReference>
<dbReference type="PDB" id="2X4T">
    <property type="method" value="X-ray"/>
    <property type="resolution" value="2.30 A"/>
    <property type="chains" value="B/E=21-119"/>
</dbReference>
<dbReference type="PDB" id="2X4U">
    <property type="method" value="X-ray"/>
    <property type="resolution" value="2.10 A"/>
    <property type="chains" value="B/E=21-119"/>
</dbReference>
<dbReference type="PDB" id="2X70">
    <property type="method" value="X-ray"/>
    <property type="resolution" value="2.00 A"/>
    <property type="chains" value="B/E=21-119"/>
</dbReference>
<dbReference type="PDB" id="2X89">
    <property type="method" value="X-ray"/>
    <property type="resolution" value="2.16 A"/>
    <property type="chains" value="D/E/F/G=27-119"/>
</dbReference>
<dbReference type="PDB" id="2XKS">
    <property type="method" value="NMR"/>
    <property type="chains" value="A=21-119"/>
</dbReference>
<dbReference type="PDB" id="2XKU">
    <property type="method" value="NMR"/>
    <property type="chains" value="A=27-119"/>
</dbReference>
<dbReference type="PDB" id="2XPG">
    <property type="method" value="X-ray"/>
    <property type="resolution" value="2.60 A"/>
    <property type="chains" value="B=22-118"/>
</dbReference>
<dbReference type="PDB" id="2YPK">
    <property type="method" value="X-ray"/>
    <property type="resolution" value="1.95 A"/>
    <property type="chains" value="B=21-119"/>
</dbReference>
<dbReference type="PDB" id="2YPL">
    <property type="method" value="X-ray"/>
    <property type="resolution" value="2.40 A"/>
    <property type="chains" value="B=21-119"/>
</dbReference>
<dbReference type="PDB" id="2YXF">
    <property type="method" value="X-ray"/>
    <property type="resolution" value="1.13 A"/>
    <property type="chains" value="A=21-119"/>
</dbReference>
<dbReference type="PDB" id="2Z9T">
    <property type="method" value="X-ray"/>
    <property type="resolution" value="1.80 A"/>
    <property type="chains" value="A=21-119"/>
</dbReference>
<dbReference type="PDB" id="3AM8">
    <property type="method" value="X-ray"/>
    <property type="resolution" value="2.80 A"/>
    <property type="chains" value="C/D=21-119"/>
</dbReference>
<dbReference type="PDB" id="3B3I">
    <property type="method" value="X-ray"/>
    <property type="resolution" value="1.86 A"/>
    <property type="chains" value="B=21-119"/>
</dbReference>
<dbReference type="PDB" id="3B6S">
    <property type="method" value="X-ray"/>
    <property type="resolution" value="1.80 A"/>
    <property type="chains" value="B=21-119"/>
</dbReference>
<dbReference type="PDB" id="3BGM">
    <property type="method" value="X-ray"/>
    <property type="resolution" value="1.60 A"/>
    <property type="chains" value="B=21-119"/>
</dbReference>
<dbReference type="PDB" id="3BH8">
    <property type="method" value="X-ray"/>
    <property type="resolution" value="1.65 A"/>
    <property type="chains" value="B=21-119"/>
</dbReference>
<dbReference type="PDB" id="3BH9">
    <property type="method" value="X-ray"/>
    <property type="resolution" value="1.70 A"/>
    <property type="chains" value="B=21-119"/>
</dbReference>
<dbReference type="PDB" id="3BHB">
    <property type="method" value="X-ray"/>
    <property type="resolution" value="2.20 A"/>
    <property type="chains" value="B=22-119"/>
</dbReference>
<dbReference type="PDB" id="3BO8">
    <property type="method" value="X-ray"/>
    <property type="resolution" value="1.80 A"/>
    <property type="chains" value="B=21-119"/>
</dbReference>
<dbReference type="PDB" id="3BP4">
    <property type="method" value="X-ray"/>
    <property type="resolution" value="1.85 A"/>
    <property type="chains" value="B=21-119"/>
</dbReference>
<dbReference type="PDB" id="3BP7">
    <property type="method" value="X-ray"/>
    <property type="resolution" value="1.80 A"/>
    <property type="chains" value="B=21-119"/>
</dbReference>
<dbReference type="PDB" id="3BVN">
    <property type="method" value="X-ray"/>
    <property type="resolution" value="2.55 A"/>
    <property type="chains" value="B/E=21-119"/>
</dbReference>
<dbReference type="PDB" id="3BW9">
    <property type="method" value="X-ray"/>
    <property type="resolution" value="1.75 A"/>
    <property type="chains" value="B=21-119"/>
</dbReference>
<dbReference type="PDB" id="3BWA">
    <property type="method" value="X-ray"/>
    <property type="resolution" value="1.30 A"/>
    <property type="chains" value="B=21-119"/>
</dbReference>
<dbReference type="PDB" id="3BXN">
    <property type="method" value="X-ray"/>
    <property type="resolution" value="1.86 A"/>
    <property type="chains" value="B=21-119"/>
</dbReference>
<dbReference type="PDB" id="3BZE">
    <property type="method" value="X-ray"/>
    <property type="resolution" value="2.50 A"/>
    <property type="chains" value="B/D/F/H=21-119"/>
</dbReference>
<dbReference type="PDB" id="3BZF">
    <property type="method" value="X-ray"/>
    <property type="resolution" value="2.50 A"/>
    <property type="chains" value="B/D=23-119"/>
</dbReference>
<dbReference type="PDB" id="3C9N">
    <property type="method" value="X-ray"/>
    <property type="resolution" value="1.87 A"/>
    <property type="chains" value="B=21-119"/>
</dbReference>
<dbReference type="PDB" id="3CDG">
    <property type="method" value="X-ray"/>
    <property type="resolution" value="3.40 A"/>
    <property type="chains" value="B/D=21-119"/>
</dbReference>
<dbReference type="PDB" id="3CII">
    <property type="method" value="X-ray"/>
    <property type="resolution" value="4.41 A"/>
    <property type="chains" value="B/E=21-119"/>
</dbReference>
<dbReference type="PDB" id="3CIQ">
    <property type="method" value="X-ray"/>
    <property type="resolution" value="2.90 A"/>
    <property type="chains" value="A/B/C/D/E/F/G/H/I/J/K/L=21-119"/>
</dbReference>
<dbReference type="PDB" id="3CZF">
    <property type="method" value="X-ray"/>
    <property type="resolution" value="1.20 A"/>
    <property type="chains" value="B=21-119"/>
</dbReference>
<dbReference type="PDB" id="3D18">
    <property type="method" value="X-ray"/>
    <property type="resolution" value="1.74 A"/>
    <property type="chains" value="B=21-119"/>
</dbReference>
<dbReference type="PDB" id="3D25">
    <property type="method" value="X-ray"/>
    <property type="resolution" value="1.30 A"/>
    <property type="chains" value="B=22-119"/>
</dbReference>
<dbReference type="PDB" id="3D2U">
    <property type="method" value="X-ray"/>
    <property type="resolution" value="2.21 A"/>
    <property type="chains" value="B/F=21-119"/>
</dbReference>
<dbReference type="PDB" id="3D39">
    <property type="method" value="X-ray"/>
    <property type="resolution" value="2.81 A"/>
    <property type="chains" value="B=21-119"/>
</dbReference>
<dbReference type="PDB" id="3D3V">
    <property type="method" value="X-ray"/>
    <property type="resolution" value="2.80 A"/>
    <property type="chains" value="B=21-119"/>
</dbReference>
<dbReference type="PDB" id="3DBX">
    <property type="method" value="X-ray"/>
    <property type="resolution" value="2.00 A"/>
    <property type="chains" value="B=21-119"/>
</dbReference>
<dbReference type="PDB" id="3DHJ">
    <property type="method" value="X-ray"/>
    <property type="resolution" value="2.00 A"/>
    <property type="chains" value="A=21-119"/>
</dbReference>
<dbReference type="PDB" id="3DHM">
    <property type="method" value="X-ray"/>
    <property type="resolution" value="1.80 A"/>
    <property type="chains" value="A=21-119"/>
</dbReference>
<dbReference type="PDB" id="3DTX">
    <property type="method" value="X-ray"/>
    <property type="resolution" value="2.10 A"/>
    <property type="chains" value="B=21-119"/>
</dbReference>
<dbReference type="PDB" id="3DX6">
    <property type="method" value="X-ray"/>
    <property type="resolution" value="1.70 A"/>
    <property type="chains" value="B=21-119"/>
</dbReference>
<dbReference type="PDB" id="3DX7">
    <property type="method" value="X-ray"/>
    <property type="resolution" value="1.60 A"/>
    <property type="chains" value="B=21-119"/>
</dbReference>
<dbReference type="PDB" id="3DX8">
    <property type="method" value="X-ray"/>
    <property type="resolution" value="2.10 A"/>
    <property type="chains" value="B=21-119"/>
</dbReference>
<dbReference type="PDB" id="3DXA">
    <property type="method" value="X-ray"/>
    <property type="resolution" value="3.50 A"/>
    <property type="chains" value="B/G/L=21-119"/>
</dbReference>
<dbReference type="PDB" id="3EKC">
    <property type="method" value="X-ray"/>
    <property type="resolution" value="1.80 A"/>
    <property type="chains" value="A=21-119"/>
</dbReference>
<dbReference type="PDB" id="3FFC">
    <property type="method" value="X-ray"/>
    <property type="resolution" value="2.80 A"/>
    <property type="chains" value="B/G=21-119"/>
</dbReference>
<dbReference type="PDB" id="3FQN">
    <property type="method" value="X-ray"/>
    <property type="resolution" value="1.65 A"/>
    <property type="chains" value="B=22-119"/>
</dbReference>
<dbReference type="PDB" id="3FQR">
    <property type="method" value="X-ray"/>
    <property type="resolution" value="1.70 A"/>
    <property type="chains" value="B=22-119"/>
</dbReference>
<dbReference type="PDB" id="3FQT">
    <property type="method" value="X-ray"/>
    <property type="resolution" value="1.80 A"/>
    <property type="chains" value="B=22-119"/>
</dbReference>
<dbReference type="PDB" id="3FQU">
    <property type="method" value="X-ray"/>
    <property type="resolution" value="1.80 A"/>
    <property type="chains" value="B=22-119"/>
</dbReference>
<dbReference type="PDB" id="3FQW">
    <property type="method" value="X-ray"/>
    <property type="resolution" value="1.93 A"/>
    <property type="chains" value="B=22-119"/>
</dbReference>
<dbReference type="PDB" id="3FQX">
    <property type="method" value="X-ray"/>
    <property type="resolution" value="1.70 A"/>
    <property type="chains" value="B=22-119"/>
</dbReference>
<dbReference type="PDB" id="3FT2">
    <property type="method" value="X-ray"/>
    <property type="resolution" value="1.80 A"/>
    <property type="chains" value="B=21-119"/>
</dbReference>
<dbReference type="PDB" id="3FT3">
    <property type="method" value="X-ray"/>
    <property type="resolution" value="1.95 A"/>
    <property type="chains" value="B=21-119"/>
</dbReference>
<dbReference type="PDB" id="3FT4">
    <property type="method" value="X-ray"/>
    <property type="resolution" value="1.90 A"/>
    <property type="chains" value="B=21-119"/>
</dbReference>
<dbReference type="PDB" id="3GIV">
    <property type="method" value="X-ray"/>
    <property type="resolution" value="2.00 A"/>
    <property type="chains" value="B/E=21-119"/>
</dbReference>
<dbReference type="PDB" id="3GJF">
    <property type="method" value="X-ray"/>
    <property type="resolution" value="1.90 A"/>
    <property type="chains" value="B/E=21-119"/>
</dbReference>
<dbReference type="PDB" id="3GSN">
    <property type="method" value="X-ray"/>
    <property type="resolution" value="2.80 A"/>
    <property type="chains" value="L=21-119"/>
</dbReference>
<dbReference type="PDB" id="3GSO">
    <property type="method" value="X-ray"/>
    <property type="resolution" value="1.60 A"/>
    <property type="chains" value="B=21-119"/>
</dbReference>
<dbReference type="PDB" id="3GSQ">
    <property type="method" value="X-ray"/>
    <property type="resolution" value="2.12 A"/>
    <property type="chains" value="B=21-119"/>
</dbReference>
<dbReference type="PDB" id="3GSR">
    <property type="method" value="X-ray"/>
    <property type="resolution" value="1.95 A"/>
    <property type="chains" value="B=21-119"/>
</dbReference>
<dbReference type="PDB" id="3GSU">
    <property type="method" value="X-ray"/>
    <property type="resolution" value="1.80 A"/>
    <property type="chains" value="B=21-119"/>
</dbReference>
<dbReference type="PDB" id="3GSV">
    <property type="method" value="X-ray"/>
    <property type="resolution" value="1.90 A"/>
    <property type="chains" value="B=21-119"/>
</dbReference>
<dbReference type="PDB" id="3GSW">
    <property type="method" value="X-ray"/>
    <property type="resolution" value="1.81 A"/>
    <property type="chains" value="B=21-119"/>
</dbReference>
<dbReference type="PDB" id="3GSX">
    <property type="method" value="X-ray"/>
    <property type="resolution" value="2.10 A"/>
    <property type="chains" value="B=21-119"/>
</dbReference>
<dbReference type="PDB" id="3H7B">
    <property type="method" value="X-ray"/>
    <property type="resolution" value="1.88 A"/>
    <property type="chains" value="B/E=21-119"/>
</dbReference>
<dbReference type="PDB" id="3H9H">
    <property type="method" value="X-ray"/>
    <property type="resolution" value="2.00 A"/>
    <property type="chains" value="B/E=21-119"/>
</dbReference>
<dbReference type="PDB" id="3H9S">
    <property type="method" value="X-ray"/>
    <property type="resolution" value="2.70 A"/>
    <property type="chains" value="B=21-119"/>
</dbReference>
<dbReference type="PDB" id="3HAE">
    <property type="method" value="X-ray"/>
    <property type="resolution" value="2.90 A"/>
    <property type="chains" value="B/E/K/Q=21-119"/>
</dbReference>
<dbReference type="PDB" id="3HCV">
    <property type="method" value="X-ray"/>
    <property type="resolution" value="1.95 A"/>
    <property type="chains" value="B=21-119"/>
</dbReference>
<dbReference type="PDB" id="3HG1">
    <property type="method" value="X-ray"/>
    <property type="resolution" value="3.00 A"/>
    <property type="chains" value="B=21-119"/>
</dbReference>
<dbReference type="PDB" id="3HLA">
    <property type="method" value="X-ray"/>
    <property type="resolution" value="2.60 A"/>
    <property type="chains" value="B=21-119"/>
</dbReference>
<dbReference type="PDB" id="3HPJ">
    <property type="method" value="X-ray"/>
    <property type="resolution" value="2.00 A"/>
    <property type="chains" value="B/E=21-119"/>
</dbReference>
<dbReference type="PDB" id="3HUJ">
    <property type="method" value="X-ray"/>
    <property type="resolution" value="2.50 A"/>
    <property type="chains" value="B/D=21-119"/>
</dbReference>
<dbReference type="PDB" id="3I6G">
    <property type="method" value="X-ray"/>
    <property type="resolution" value="2.20 A"/>
    <property type="chains" value="B/E=21-119"/>
</dbReference>
<dbReference type="PDB" id="3I6K">
    <property type="method" value="X-ray"/>
    <property type="resolution" value="2.80 A"/>
    <property type="chains" value="B/F=21-119"/>
</dbReference>
<dbReference type="PDB" id="3I6L">
    <property type="method" value="X-ray"/>
    <property type="resolution" value="2.40 A"/>
    <property type="chains" value="E=21-119"/>
</dbReference>
<dbReference type="PDB" id="3IB4">
    <property type="method" value="X-ray"/>
    <property type="resolution" value="1.25 A"/>
    <property type="chains" value="A=21-119"/>
</dbReference>
<dbReference type="PDB" id="3IXA">
    <property type="method" value="X-ray"/>
    <property type="resolution" value="2.10 A"/>
    <property type="chains" value="B/E=21-119"/>
</dbReference>
<dbReference type="PDB" id="3JTS">
    <property type="method" value="X-ray"/>
    <property type="resolution" value="2.80 A"/>
    <property type="chains" value="B/E/H=1-119"/>
</dbReference>
<dbReference type="PDB" id="3KLA">
    <property type="method" value="X-ray"/>
    <property type="resolution" value="1.65 A"/>
    <property type="chains" value="B/E=21-119"/>
</dbReference>
<dbReference type="PDB" id="3KPL">
    <property type="method" value="X-ray"/>
    <property type="resolution" value="1.96 A"/>
    <property type="chains" value="B=21-119"/>
</dbReference>
<dbReference type="PDB" id="3KPM">
    <property type="method" value="X-ray"/>
    <property type="resolution" value="1.60 A"/>
    <property type="chains" value="B=21-119"/>
</dbReference>
<dbReference type="PDB" id="3KPN">
    <property type="method" value="X-ray"/>
    <property type="resolution" value="2.00 A"/>
    <property type="chains" value="B=21-119"/>
</dbReference>
<dbReference type="PDB" id="3KPO">
    <property type="method" value="X-ray"/>
    <property type="resolution" value="2.30 A"/>
    <property type="chains" value="B=21-119"/>
</dbReference>
<dbReference type="PDB" id="3KPP">
    <property type="method" value="X-ray"/>
    <property type="resolution" value="1.90 A"/>
    <property type="chains" value="B=21-119"/>
</dbReference>
<dbReference type="PDB" id="3KPQ">
    <property type="method" value="X-ray"/>
    <property type="resolution" value="1.84 A"/>
    <property type="chains" value="B=21-119"/>
</dbReference>
<dbReference type="PDB" id="3KPR">
    <property type="method" value="X-ray"/>
    <property type="resolution" value="2.60 A"/>
    <property type="chains" value="B/G=21-119"/>
</dbReference>
<dbReference type="PDB" id="3KPS">
    <property type="method" value="X-ray"/>
    <property type="resolution" value="2.70 A"/>
    <property type="chains" value="B=21-119"/>
</dbReference>
<dbReference type="PDB" id="3KWW">
    <property type="method" value="X-ray"/>
    <property type="resolution" value="2.18 A"/>
    <property type="chains" value="B=21-119"/>
</dbReference>
<dbReference type="PDB" id="3KXF">
    <property type="method" value="X-ray"/>
    <property type="resolution" value="3.10 A"/>
    <property type="chains" value="B/F/J/L=21-119"/>
</dbReference>
<dbReference type="PDB" id="3KYN">
    <property type="method" value="X-ray"/>
    <property type="resolution" value="2.40 A"/>
    <property type="chains" value="B=21-119"/>
</dbReference>
<dbReference type="PDB" id="3KYO">
    <property type="method" value="X-ray"/>
    <property type="resolution" value="1.70 A"/>
    <property type="chains" value="B/D=21-119"/>
</dbReference>
<dbReference type="PDB" id="3L3D">
    <property type="method" value="X-ray"/>
    <property type="resolution" value="1.80 A"/>
    <property type="chains" value="B=21-119"/>
</dbReference>
<dbReference type="PDB" id="3L3G">
    <property type="method" value="X-ray"/>
    <property type="resolution" value="2.10 A"/>
    <property type="chains" value="B=21-119"/>
</dbReference>
<dbReference type="PDB" id="3L3I">
    <property type="method" value="X-ray"/>
    <property type="resolution" value="1.70 A"/>
    <property type="chains" value="B=21-119"/>
</dbReference>
<dbReference type="PDB" id="3L3J">
    <property type="method" value="X-ray"/>
    <property type="resolution" value="2.40 A"/>
    <property type="chains" value="B=21-119"/>
</dbReference>
<dbReference type="PDB" id="3L3K">
    <property type="method" value="X-ray"/>
    <property type="resolution" value="2.60 A"/>
    <property type="chains" value="B=21-119"/>
</dbReference>
<dbReference type="PDB" id="3LKN">
    <property type="method" value="X-ray"/>
    <property type="resolution" value="2.00 A"/>
    <property type="chains" value="B=21-119"/>
</dbReference>
<dbReference type="PDB" id="3LKO">
    <property type="method" value="X-ray"/>
    <property type="resolution" value="1.80 A"/>
    <property type="chains" value="B=21-119"/>
</dbReference>
<dbReference type="PDB" id="3LKP">
    <property type="method" value="X-ray"/>
    <property type="resolution" value="1.80 A"/>
    <property type="chains" value="B=21-119"/>
</dbReference>
<dbReference type="PDB" id="3LKQ">
    <property type="method" value="X-ray"/>
    <property type="resolution" value="1.80 A"/>
    <property type="chains" value="B=21-119"/>
</dbReference>
<dbReference type="PDB" id="3LKR">
    <property type="method" value="X-ray"/>
    <property type="resolution" value="2.00 A"/>
    <property type="chains" value="B=21-119"/>
</dbReference>
<dbReference type="PDB" id="3LKS">
    <property type="method" value="X-ray"/>
    <property type="resolution" value="1.90 A"/>
    <property type="chains" value="B=21-119"/>
</dbReference>
<dbReference type="PDB" id="3LN4">
    <property type="method" value="X-ray"/>
    <property type="resolution" value="1.30 A"/>
    <property type="chains" value="B=21-119"/>
</dbReference>
<dbReference type="PDB" id="3LN5">
    <property type="method" value="X-ray"/>
    <property type="resolution" value="1.90 A"/>
    <property type="chains" value="B=21-119"/>
</dbReference>
<dbReference type="PDB" id="3LOW">
    <property type="method" value="X-ray"/>
    <property type="resolution" value="2.30 A"/>
    <property type="chains" value="A/B=21-119"/>
</dbReference>
<dbReference type="PDB" id="3LOZ">
    <property type="method" value="X-ray"/>
    <property type="resolution" value="1.80 A"/>
    <property type="chains" value="A/B/C/D=74-79"/>
</dbReference>
<dbReference type="PDB" id="3LV3">
    <property type="method" value="X-ray"/>
    <property type="resolution" value="1.94 A"/>
    <property type="chains" value="B=21-119"/>
</dbReference>
<dbReference type="PDB" id="3M17">
    <property type="method" value="X-ray"/>
    <property type="resolution" value="2.60 A"/>
    <property type="chains" value="B/D/F/H=21-119"/>
</dbReference>
<dbReference type="PDB" id="3M1B">
    <property type="method" value="X-ray"/>
    <property type="resolution" value="3.10 A"/>
    <property type="chains" value="B/D/F/H=21-119"/>
</dbReference>
<dbReference type="PDB" id="3MGO">
    <property type="method" value="X-ray"/>
    <property type="resolution" value="2.30 A"/>
    <property type="chains" value="B/E/H/K=21-119"/>
</dbReference>
<dbReference type="PDB" id="3MGT">
    <property type="method" value="X-ray"/>
    <property type="resolution" value="2.20 A"/>
    <property type="chains" value="B/E/H/K=21-119"/>
</dbReference>
<dbReference type="PDB" id="3MR9">
    <property type="method" value="X-ray"/>
    <property type="resolution" value="1.93 A"/>
    <property type="chains" value="B=21-119"/>
</dbReference>
<dbReference type="PDB" id="3MRB">
    <property type="method" value="X-ray"/>
    <property type="resolution" value="1.40 A"/>
    <property type="chains" value="B=21-119"/>
</dbReference>
<dbReference type="PDB" id="3MRC">
    <property type="method" value="X-ray"/>
    <property type="resolution" value="1.80 A"/>
    <property type="chains" value="B=21-119"/>
</dbReference>
<dbReference type="PDB" id="3MRD">
    <property type="method" value="X-ray"/>
    <property type="resolution" value="1.70 A"/>
    <property type="chains" value="B=21-119"/>
</dbReference>
<dbReference type="PDB" id="3MRE">
    <property type="method" value="X-ray"/>
    <property type="resolution" value="1.10 A"/>
    <property type="chains" value="B=21-119"/>
</dbReference>
<dbReference type="PDB" id="3MRF">
    <property type="method" value="X-ray"/>
    <property type="resolution" value="2.30 A"/>
    <property type="chains" value="B=21-119"/>
</dbReference>
<dbReference type="PDB" id="3MRG">
    <property type="method" value="X-ray"/>
    <property type="resolution" value="1.30 A"/>
    <property type="chains" value="B=21-119"/>
</dbReference>
<dbReference type="PDB" id="3MRH">
    <property type="method" value="X-ray"/>
    <property type="resolution" value="2.40 A"/>
    <property type="chains" value="B=21-119"/>
</dbReference>
<dbReference type="PDB" id="3MRI">
    <property type="method" value="X-ray"/>
    <property type="resolution" value="2.10 A"/>
    <property type="chains" value="B=21-119"/>
</dbReference>
<dbReference type="PDB" id="3MRJ">
    <property type="method" value="X-ray"/>
    <property type="resolution" value="1.87 A"/>
    <property type="chains" value="B=21-119"/>
</dbReference>
<dbReference type="PDB" id="3MRK">
    <property type="method" value="X-ray"/>
    <property type="resolution" value="1.40 A"/>
    <property type="chains" value="B=21-119"/>
</dbReference>
<dbReference type="PDB" id="3MRL">
    <property type="method" value="X-ray"/>
    <property type="resolution" value="2.41 A"/>
    <property type="chains" value="B=21-119"/>
</dbReference>
<dbReference type="PDB" id="3MRM">
    <property type="method" value="X-ray"/>
    <property type="resolution" value="1.90 A"/>
    <property type="chains" value="B=21-119"/>
</dbReference>
<dbReference type="PDB" id="3MRN">
    <property type="method" value="X-ray"/>
    <property type="resolution" value="2.30 A"/>
    <property type="chains" value="B=21-119"/>
</dbReference>
<dbReference type="PDB" id="3MRO">
    <property type="method" value="X-ray"/>
    <property type="resolution" value="2.35 A"/>
    <property type="chains" value="B=21-119"/>
</dbReference>
<dbReference type="PDB" id="3MRP">
    <property type="method" value="X-ray"/>
    <property type="resolution" value="2.10 A"/>
    <property type="chains" value="B=21-119"/>
</dbReference>
<dbReference type="PDB" id="3MRQ">
    <property type="method" value="X-ray"/>
    <property type="resolution" value="2.20 A"/>
    <property type="chains" value="B=21-119"/>
</dbReference>
<dbReference type="PDB" id="3MRR">
    <property type="method" value="X-ray"/>
    <property type="resolution" value="1.60 A"/>
    <property type="chains" value="B=21-119"/>
</dbReference>
<dbReference type="PDB" id="3MV7">
    <property type="method" value="X-ray"/>
    <property type="resolution" value="2.00 A"/>
    <property type="chains" value="B=21-119"/>
</dbReference>
<dbReference type="PDB" id="3MV8">
    <property type="method" value="X-ray"/>
    <property type="resolution" value="2.10 A"/>
    <property type="chains" value="B=21-119"/>
</dbReference>
<dbReference type="PDB" id="3MV9">
    <property type="method" value="X-ray"/>
    <property type="resolution" value="2.70 A"/>
    <property type="chains" value="B=21-119"/>
</dbReference>
<dbReference type="PDB" id="3MYJ">
    <property type="method" value="X-ray"/>
    <property type="resolution" value="1.89 A"/>
    <property type="chains" value="B/E=21-119"/>
</dbReference>
<dbReference type="PDB" id="3MYZ">
    <property type="method" value="X-ray"/>
    <property type="resolution" value="1.60 A"/>
    <property type="chains" value="A/B=21-119"/>
</dbReference>
<dbReference type="PDB" id="3MZT">
    <property type="method" value="X-ray"/>
    <property type="resolution" value="2.70 A"/>
    <property type="chains" value="A/B/C/D/E/F=21-119"/>
</dbReference>
<dbReference type="PDB" id="3NA4">
    <property type="method" value="X-ray"/>
    <property type="resolution" value="1.90 A"/>
    <property type="chains" value="A=21-119"/>
</dbReference>
<dbReference type="PDB" id="3NFN">
    <property type="method" value="X-ray"/>
    <property type="resolution" value="2.39 A"/>
    <property type="chains" value="B=21-119"/>
</dbReference>
<dbReference type="PDB" id="3O3A">
    <property type="method" value="X-ray"/>
    <property type="resolution" value="1.80 A"/>
    <property type="chains" value="B/E=21-119"/>
</dbReference>
<dbReference type="PDB" id="3O3B">
    <property type="method" value="X-ray"/>
    <property type="resolution" value="1.90 A"/>
    <property type="chains" value="B/E=21-119"/>
</dbReference>
<dbReference type="PDB" id="3O3D">
    <property type="method" value="X-ray"/>
    <property type="resolution" value="1.70 A"/>
    <property type="chains" value="B/E=21-119"/>
</dbReference>
<dbReference type="PDB" id="3O3E">
    <property type="method" value="X-ray"/>
    <property type="resolution" value="1.85 A"/>
    <property type="chains" value="B/E=21-119"/>
</dbReference>
<dbReference type="PDB" id="3O4L">
    <property type="method" value="X-ray"/>
    <property type="resolution" value="2.54 A"/>
    <property type="chains" value="B=21-119"/>
</dbReference>
<dbReference type="PDB" id="3OV6">
    <property type="method" value="X-ray"/>
    <property type="resolution" value="2.50 A"/>
    <property type="chains" value="A=21-119"/>
</dbReference>
<dbReference type="PDB" id="3OX8">
    <property type="method" value="X-ray"/>
    <property type="resolution" value="2.16 A"/>
    <property type="chains" value="B/E=21-119"/>
</dbReference>
<dbReference type="PDB" id="3OXR">
    <property type="method" value="X-ray"/>
    <property type="resolution" value="1.70 A"/>
    <property type="chains" value="B=21-119"/>
</dbReference>
<dbReference type="PDB" id="3OXS">
    <property type="method" value="X-ray"/>
    <property type="resolution" value="1.75 A"/>
    <property type="chains" value="B=21-119"/>
</dbReference>
<dbReference type="PDB" id="3PWJ">
    <property type="method" value="X-ray"/>
    <property type="resolution" value="1.70 A"/>
    <property type="chains" value="B/E=21-119"/>
</dbReference>
<dbReference type="PDB" id="3PWL">
    <property type="method" value="X-ray"/>
    <property type="resolution" value="1.65 A"/>
    <property type="chains" value="B/E=21-119"/>
</dbReference>
<dbReference type="PDB" id="3PWN">
    <property type="method" value="X-ray"/>
    <property type="resolution" value="1.60 A"/>
    <property type="chains" value="B/E=21-119"/>
</dbReference>
<dbReference type="PDB" id="3PWP">
    <property type="method" value="X-ray"/>
    <property type="resolution" value="2.69 A"/>
    <property type="chains" value="B=21-119"/>
</dbReference>
<dbReference type="PDB" id="3QDA">
    <property type="method" value="X-ray"/>
    <property type="resolution" value="1.57 A"/>
    <property type="chains" value="A=21-119"/>
</dbReference>
<dbReference type="PDB" id="3QDG">
    <property type="method" value="X-ray"/>
    <property type="resolution" value="2.69 A"/>
    <property type="chains" value="B=21-119"/>
</dbReference>
<dbReference type="PDB" id="3QDJ">
    <property type="method" value="X-ray"/>
    <property type="resolution" value="2.30 A"/>
    <property type="chains" value="B=21-119"/>
</dbReference>
<dbReference type="PDB" id="3QDM">
    <property type="method" value="X-ray"/>
    <property type="resolution" value="2.80 A"/>
    <property type="chains" value="B=21-119"/>
</dbReference>
<dbReference type="PDB" id="3QEQ">
    <property type="method" value="X-ray"/>
    <property type="resolution" value="2.59 A"/>
    <property type="chains" value="B=21-119"/>
</dbReference>
<dbReference type="PDB" id="3QFD">
    <property type="method" value="X-ray"/>
    <property type="resolution" value="1.68 A"/>
    <property type="chains" value="B/E=21-119"/>
</dbReference>
<dbReference type="PDB" id="3QFJ">
    <property type="method" value="X-ray"/>
    <property type="resolution" value="2.29 A"/>
    <property type="chains" value="B=21-119"/>
</dbReference>
<dbReference type="PDB" id="3QZW">
    <property type="method" value="X-ray"/>
    <property type="resolution" value="2.80 A"/>
    <property type="chains" value="B/E=21-119"/>
</dbReference>
<dbReference type="PDB" id="3REW">
    <property type="method" value="X-ray"/>
    <property type="resolution" value="1.90 A"/>
    <property type="chains" value="B/E=21-119"/>
</dbReference>
<dbReference type="PDB" id="3RL1">
    <property type="method" value="X-ray"/>
    <property type="resolution" value="2.00 A"/>
    <property type="chains" value="B=21-119"/>
</dbReference>
<dbReference type="PDB" id="3RL2">
    <property type="method" value="X-ray"/>
    <property type="resolution" value="2.39 A"/>
    <property type="chains" value="B=21-119"/>
</dbReference>
<dbReference type="PDB" id="3RWJ">
    <property type="method" value="X-ray"/>
    <property type="resolution" value="2.70 A"/>
    <property type="chains" value="B=21-119"/>
</dbReference>
<dbReference type="PDB" id="3S6C">
    <property type="method" value="X-ray"/>
    <property type="resolution" value="2.90 A"/>
    <property type="chains" value="A=21-119"/>
</dbReference>
<dbReference type="PDB" id="3SDX">
    <property type="method" value="X-ray"/>
    <property type="resolution" value="3.12 A"/>
    <property type="chains" value="B/D=21-119"/>
</dbReference>
<dbReference type="PDB" id="3SJV">
    <property type="method" value="X-ray"/>
    <property type="resolution" value="3.10 A"/>
    <property type="chains" value="B/G/L/Q=21-119"/>
</dbReference>
<dbReference type="PDB" id="3SKM">
    <property type="method" value="X-ray"/>
    <property type="resolution" value="1.80 A"/>
    <property type="chains" value="B=21-119"/>
</dbReference>
<dbReference type="PDB" id="3SKO">
    <property type="method" value="X-ray"/>
    <property type="resolution" value="1.60 A"/>
    <property type="chains" value="B=21-119"/>
</dbReference>
<dbReference type="PDB" id="3SPV">
    <property type="method" value="X-ray"/>
    <property type="resolution" value="1.30 A"/>
    <property type="chains" value="B=21-119"/>
</dbReference>
<dbReference type="PDB" id="3T8X">
    <property type="method" value="X-ray"/>
    <property type="resolution" value="1.90 A"/>
    <property type="chains" value="B/D=21-119"/>
</dbReference>
<dbReference type="PDB" id="3TID">
    <property type="method" value="X-ray"/>
    <property type="resolution" value="1.65 A"/>
    <property type="chains" value="B=21-119"/>
</dbReference>
<dbReference type="PDB" id="3TIE">
    <property type="method" value="X-ray"/>
    <property type="resolution" value="2.25 A"/>
    <property type="chains" value="B/E=21-119"/>
</dbReference>
<dbReference type="PDB" id="3TLR">
    <property type="method" value="X-ray"/>
    <property type="resolution" value="2.45 A"/>
    <property type="chains" value="A/B/C/D=21-119"/>
</dbReference>
<dbReference type="PDB" id="3TM6">
    <property type="method" value="X-ray"/>
    <property type="resolution" value="2.70 A"/>
    <property type="chains" value="A/B/C/D/E/F/G/H=21-119"/>
</dbReference>
<dbReference type="PDB" id="3TO2">
    <property type="method" value="X-ray"/>
    <property type="resolution" value="2.60 A"/>
    <property type="chains" value="B=21-119"/>
</dbReference>
<dbReference type="PDB" id="3TZV">
    <property type="method" value="X-ray"/>
    <property type="resolution" value="3.06 A"/>
    <property type="chains" value="D=21-119"/>
</dbReference>
<dbReference type="PDB" id="3U0P">
    <property type="method" value="X-ray"/>
    <property type="resolution" value="2.80 A"/>
    <property type="chains" value="B/D/F=21-119"/>
</dbReference>
<dbReference type="PDB" id="3UPR">
    <property type="method" value="X-ray"/>
    <property type="resolution" value="2.00 A"/>
    <property type="chains" value="B/D=21-119"/>
</dbReference>
<dbReference type="PDB" id="3UTQ">
    <property type="method" value="X-ray"/>
    <property type="resolution" value="1.67 A"/>
    <property type="chains" value="B=21-119"/>
</dbReference>
<dbReference type="PDB" id="3UTS">
    <property type="method" value="X-ray"/>
    <property type="resolution" value="2.71 A"/>
    <property type="chains" value="B/G=21-119"/>
</dbReference>
<dbReference type="PDB" id="3UTT">
    <property type="method" value="X-ray"/>
    <property type="resolution" value="2.60 A"/>
    <property type="chains" value="B/G=21-119"/>
</dbReference>
<dbReference type="PDB" id="3V5D">
    <property type="method" value="X-ray"/>
    <property type="resolution" value="2.00 A"/>
    <property type="chains" value="B/E=21-119"/>
</dbReference>
<dbReference type="PDB" id="3V5H">
    <property type="method" value="X-ray"/>
    <property type="resolution" value="1.63 A"/>
    <property type="chains" value="B/E=21-119"/>
</dbReference>
<dbReference type="PDB" id="3V5K">
    <property type="method" value="X-ray"/>
    <property type="resolution" value="2.31 A"/>
    <property type="chains" value="B/E=21-119"/>
</dbReference>
<dbReference type="PDB" id="3VCL">
    <property type="method" value="X-ray"/>
    <property type="resolution" value="1.70 A"/>
    <property type="chains" value="B=21-119"/>
</dbReference>
<dbReference type="PDB" id="3VFM">
    <property type="method" value="X-ray"/>
    <property type="resolution" value="1.90 A"/>
    <property type="chains" value="B=21-119"/>
</dbReference>
<dbReference type="PDB" id="3VFN">
    <property type="method" value="X-ray"/>
    <property type="resolution" value="1.50 A"/>
    <property type="chains" value="B=21-119"/>
</dbReference>
<dbReference type="PDB" id="3VFO">
    <property type="method" value="X-ray"/>
    <property type="resolution" value="1.70 A"/>
    <property type="chains" value="B=21-119"/>
</dbReference>
<dbReference type="PDB" id="3VFP">
    <property type="method" value="X-ray"/>
    <property type="resolution" value="1.85 A"/>
    <property type="chains" value="B=21-119"/>
</dbReference>
<dbReference type="PDB" id="3VFR">
    <property type="method" value="X-ray"/>
    <property type="resolution" value="1.85 A"/>
    <property type="chains" value="B=21-119"/>
</dbReference>
<dbReference type="PDB" id="3VFS">
    <property type="method" value="X-ray"/>
    <property type="resolution" value="1.85 A"/>
    <property type="chains" value="B=21-119"/>
</dbReference>
<dbReference type="PDB" id="3VFT">
    <property type="method" value="X-ray"/>
    <property type="resolution" value="1.95 A"/>
    <property type="chains" value="B=21-119"/>
</dbReference>
<dbReference type="PDB" id="3VFU">
    <property type="method" value="X-ray"/>
    <property type="resolution" value="1.65 A"/>
    <property type="chains" value="B=21-119"/>
</dbReference>
<dbReference type="PDB" id="3VFV">
    <property type="method" value="X-ray"/>
    <property type="resolution" value="1.55 A"/>
    <property type="chains" value="B=21-119"/>
</dbReference>
<dbReference type="PDB" id="3VFW">
    <property type="method" value="X-ray"/>
    <property type="resolution" value="2.30 A"/>
    <property type="chains" value="B=21-119"/>
</dbReference>
<dbReference type="PDB" id="3VH8">
    <property type="method" value="X-ray"/>
    <property type="resolution" value="1.80 A"/>
    <property type="chains" value="B/E=21-119"/>
</dbReference>
<dbReference type="PDB" id="3VRI">
    <property type="method" value="X-ray"/>
    <property type="resolution" value="1.60 A"/>
    <property type="chains" value="B=21-119"/>
</dbReference>
<dbReference type="PDB" id="3VRJ">
    <property type="method" value="X-ray"/>
    <property type="resolution" value="1.90 A"/>
    <property type="chains" value="B=21-119"/>
</dbReference>
<dbReference type="PDB" id="3VWJ">
    <property type="method" value="X-ray"/>
    <property type="resolution" value="3.09 A"/>
    <property type="chains" value="B=21-119"/>
</dbReference>
<dbReference type="PDB" id="3VWK">
    <property type="method" value="X-ray"/>
    <property type="resolution" value="2.94 A"/>
    <property type="chains" value="B=21-119"/>
</dbReference>
<dbReference type="PDB" id="3VXM">
    <property type="method" value="X-ray"/>
    <property type="resolution" value="2.50 A"/>
    <property type="chains" value="B=21-119"/>
</dbReference>
<dbReference type="PDB" id="3VXN">
    <property type="method" value="X-ray"/>
    <property type="resolution" value="1.95 A"/>
    <property type="chains" value="B=21-119"/>
</dbReference>
<dbReference type="PDB" id="3VXO">
    <property type="method" value="X-ray"/>
    <property type="resolution" value="2.61 A"/>
    <property type="chains" value="B/E=21-119"/>
</dbReference>
<dbReference type="PDB" id="3VXP">
    <property type="method" value="X-ray"/>
    <property type="resolution" value="2.50 A"/>
    <property type="chains" value="B/E=21-119"/>
</dbReference>
<dbReference type="PDB" id="3VXR">
    <property type="method" value="X-ray"/>
    <property type="resolution" value="2.40 A"/>
    <property type="chains" value="B=21-119"/>
</dbReference>
<dbReference type="PDB" id="3VXS">
    <property type="method" value="X-ray"/>
    <property type="resolution" value="1.80 A"/>
    <property type="chains" value="B=21-119"/>
</dbReference>
<dbReference type="PDB" id="3VXU">
    <property type="method" value="X-ray"/>
    <property type="resolution" value="2.70 A"/>
    <property type="chains" value="B/G=21-119"/>
</dbReference>
<dbReference type="PDB" id="3W0W">
    <property type="method" value="X-ray"/>
    <property type="resolution" value="2.60 A"/>
    <property type="chains" value="B=21-119"/>
</dbReference>
<dbReference type="PDB" id="3W39">
    <property type="method" value="X-ray"/>
    <property type="resolution" value="3.10 A"/>
    <property type="chains" value="B/E=21-119"/>
</dbReference>
<dbReference type="PDB" id="3WL9">
    <property type="method" value="X-ray"/>
    <property type="resolution" value="1.66 A"/>
    <property type="chains" value="B=21-119"/>
</dbReference>
<dbReference type="PDB" id="3WLB">
    <property type="method" value="X-ray"/>
    <property type="resolution" value="2.00 A"/>
    <property type="chains" value="B=21-119"/>
</dbReference>
<dbReference type="PDB" id="3WUW">
    <property type="method" value="X-ray"/>
    <property type="resolution" value="2.00 A"/>
    <property type="chains" value="B=22-119"/>
</dbReference>
<dbReference type="PDB" id="3X11">
    <property type="method" value="X-ray"/>
    <property type="resolution" value="2.15 A"/>
    <property type="chains" value="B=21-119"/>
</dbReference>
<dbReference type="PDB" id="3X12">
    <property type="method" value="X-ray"/>
    <property type="resolution" value="1.80 A"/>
    <property type="chains" value="B=21-119"/>
</dbReference>
<dbReference type="PDB" id="3X13">
    <property type="method" value="X-ray"/>
    <property type="resolution" value="1.80 A"/>
    <property type="chains" value="B=21-119"/>
</dbReference>
<dbReference type="PDB" id="3X14">
    <property type="method" value="X-ray"/>
    <property type="resolution" value="2.00 A"/>
    <property type="chains" value="B=21-119"/>
</dbReference>
<dbReference type="PDB" id="4E0K">
    <property type="method" value="X-ray"/>
    <property type="resolution" value="0.97 A"/>
    <property type="chains" value="A/B/C/D=78-83"/>
</dbReference>
<dbReference type="PDB" id="4E0L">
    <property type="method" value="X-ray"/>
    <property type="resolution" value="1.70 A"/>
    <property type="chains" value="A/B/C/D=82-89"/>
</dbReference>
<dbReference type="PDB" id="4E5X">
    <property type="method" value="X-ray"/>
    <property type="resolution" value="1.95 A"/>
    <property type="chains" value="B/E=21-119"/>
</dbReference>
<dbReference type="PDB" id="4EN3">
    <property type="method" value="X-ray"/>
    <property type="resolution" value="2.57 A"/>
    <property type="chains" value="D=21-119"/>
</dbReference>
<dbReference type="PDB" id="4EUP">
    <property type="method" value="X-ray"/>
    <property type="resolution" value="2.88 A"/>
    <property type="chains" value="B/E=21-119"/>
</dbReference>
<dbReference type="PDB" id="4F7M">
    <property type="method" value="X-ray"/>
    <property type="resolution" value="2.40 A"/>
    <property type="chains" value="B/E=21-119"/>
</dbReference>
<dbReference type="PDB" id="4F7P">
    <property type="method" value="X-ray"/>
    <property type="resolution" value="1.90 A"/>
    <property type="chains" value="B=21-119"/>
</dbReference>
<dbReference type="PDB" id="4F7T">
    <property type="method" value="X-ray"/>
    <property type="resolution" value="1.70 A"/>
    <property type="chains" value="B/E=21-119"/>
</dbReference>
<dbReference type="PDB" id="4FTV">
    <property type="method" value="X-ray"/>
    <property type="resolution" value="2.74 A"/>
    <property type="chains" value="B=21-119"/>
</dbReference>
<dbReference type="PDB" id="4FXL">
    <property type="method" value="X-ray"/>
    <property type="resolution" value="1.40 A"/>
    <property type="chains" value="A=21-119"/>
</dbReference>
<dbReference type="PDB" id="4G8G">
    <property type="method" value="X-ray"/>
    <property type="resolution" value="2.40 A"/>
    <property type="chains" value="B=21-119"/>
</dbReference>
<dbReference type="PDB" id="4G8I">
    <property type="method" value="X-ray"/>
    <property type="resolution" value="1.60 A"/>
    <property type="chains" value="B=21-119"/>
</dbReference>
<dbReference type="PDB" id="4G9D">
    <property type="method" value="X-ray"/>
    <property type="resolution" value="1.60 A"/>
    <property type="chains" value="B=21-119"/>
</dbReference>
<dbReference type="PDB" id="4G9F">
    <property type="method" value="X-ray"/>
    <property type="resolution" value="1.90 A"/>
    <property type="chains" value="B=21-119"/>
</dbReference>
<dbReference type="PDB" id="4GKN">
    <property type="method" value="X-ray"/>
    <property type="resolution" value="2.75 A"/>
    <property type="chains" value="B/E=21-119"/>
</dbReference>
<dbReference type="PDB" id="4GKS">
    <property type="method" value="X-ray"/>
    <property type="resolution" value="2.35 A"/>
    <property type="chains" value="B/E=21-119"/>
</dbReference>
<dbReference type="PDB" id="4GUP">
    <property type="method" value="X-ray"/>
    <property type="resolution" value="3.20 A"/>
    <property type="chains" value="B/D=21-119"/>
</dbReference>
<dbReference type="PDB" id="4HKJ">
    <property type="method" value="X-ray"/>
    <property type="resolution" value="3.00 A"/>
    <property type="chains" value="B/F/J/N=21-119"/>
</dbReference>
<dbReference type="PDB" id="4HWZ">
    <property type="method" value="X-ray"/>
    <property type="resolution" value="2.40 A"/>
    <property type="chains" value="B=21-119"/>
</dbReference>
<dbReference type="PDB" id="4HX1">
    <property type="method" value="X-ray"/>
    <property type="resolution" value="1.80 A"/>
    <property type="chains" value="B=21-119"/>
</dbReference>
<dbReference type="PDB" id="4I48">
    <property type="method" value="X-ray"/>
    <property type="resolution" value="2.80 A"/>
    <property type="chains" value="B=21-119"/>
</dbReference>
<dbReference type="PDB" id="4I4W">
    <property type="method" value="X-ray"/>
    <property type="resolution" value="1.77 A"/>
    <property type="chains" value="B=21-119"/>
</dbReference>
<dbReference type="PDB" id="4JFD">
    <property type="method" value="X-ray"/>
    <property type="resolution" value="2.46 A"/>
    <property type="chains" value="B=21-119"/>
</dbReference>
<dbReference type="PDB" id="4JFE">
    <property type="method" value="X-ray"/>
    <property type="resolution" value="2.70 A"/>
    <property type="chains" value="B=21-119"/>
</dbReference>
<dbReference type="PDB" id="4JFF">
    <property type="method" value="X-ray"/>
    <property type="resolution" value="2.43 A"/>
    <property type="chains" value="B=21-119"/>
</dbReference>
<dbReference type="PDB" id="4JFO">
    <property type="method" value="X-ray"/>
    <property type="resolution" value="2.11 A"/>
    <property type="chains" value="B/E=21-119"/>
</dbReference>
<dbReference type="PDB" id="4JFP">
    <property type="method" value="X-ray"/>
    <property type="resolution" value="1.91 A"/>
    <property type="chains" value="B/E=21-119"/>
</dbReference>
<dbReference type="PDB" id="4JFQ">
    <property type="method" value="X-ray"/>
    <property type="resolution" value="1.90 A"/>
    <property type="chains" value="B/E=21-119"/>
</dbReference>
<dbReference type="PDB" id="4JQV">
    <property type="method" value="X-ray"/>
    <property type="resolution" value="1.50 A"/>
    <property type="chains" value="C=21-119"/>
</dbReference>
<dbReference type="PDB" id="4JQX">
    <property type="method" value="X-ray"/>
    <property type="resolution" value="1.90 A"/>
    <property type="chains" value="C=21-119"/>
</dbReference>
<dbReference type="PDB" id="4JRX">
    <property type="method" value="X-ray"/>
    <property type="resolution" value="2.30 A"/>
    <property type="chains" value="B=21-119"/>
</dbReference>
<dbReference type="PDB" id="4JRY">
    <property type="method" value="X-ray"/>
    <property type="resolution" value="2.80 A"/>
    <property type="chains" value="B=21-119"/>
</dbReference>
<dbReference type="PDB" id="4K71">
    <property type="method" value="X-ray"/>
    <property type="resolution" value="2.40 A"/>
    <property type="chains" value="C/F=21-119"/>
</dbReference>
<dbReference type="PDB" id="4K7F">
    <property type="method" value="X-ray"/>
    <property type="resolution" value="2.00 A"/>
    <property type="chains" value="B/E=21-119"/>
</dbReference>
<dbReference type="PDB" id="4KDT">
    <property type="method" value="X-ray"/>
    <property type="resolution" value="2.60 A"/>
    <property type="chains" value="C/D=21-119"/>
</dbReference>
<dbReference type="PDB" id="4L29">
    <property type="method" value="X-ray"/>
    <property type="resolution" value="3.09 A"/>
    <property type="chains" value="B/D/F/H/J/L/N/P/R/T/V/X/Z/b=21-119"/>
</dbReference>
<dbReference type="PDB" id="4L3C">
    <property type="method" value="X-ray"/>
    <property type="resolution" value="2.64 A"/>
    <property type="chains" value="B/D/F/H/J/L/N/P/R/T/V/X/Z/b=21-119"/>
</dbReference>
<dbReference type="PDB" id="4L3E">
    <property type="method" value="X-ray"/>
    <property type="resolution" value="2.56 A"/>
    <property type="chains" value="B=21-119"/>
</dbReference>
<dbReference type="PDB" id="4L4T">
    <property type="method" value="X-ray"/>
    <property type="resolution" value="2.00 A"/>
    <property type="chains" value="B/F=21-119"/>
</dbReference>
<dbReference type="PDB" id="4L4V">
    <property type="method" value="X-ray"/>
    <property type="resolution" value="1.90 A"/>
    <property type="chains" value="B/F=21-119"/>
</dbReference>
<dbReference type="PDB" id="4LCW">
    <property type="method" value="X-ray"/>
    <property type="resolution" value="2.40 A"/>
    <property type="chains" value="B/F=21-119"/>
</dbReference>
<dbReference type="PDB" id="4LCY">
    <property type="method" value="X-ray"/>
    <property type="resolution" value="1.60 A"/>
    <property type="chains" value="B/H=21-119"/>
</dbReference>
<dbReference type="PDB" id="4LHU">
    <property type="method" value="X-ray"/>
    <property type="resolution" value="2.87 A"/>
    <property type="chains" value="B=21-119"/>
</dbReference>
<dbReference type="PDB" id="4LNR">
    <property type="method" value="X-ray"/>
    <property type="resolution" value="2.00 A"/>
    <property type="chains" value="B=21-119"/>
</dbReference>
<dbReference type="PDB" id="4M8V">
    <property type="method" value="X-ray"/>
    <property type="resolution" value="1.95 A"/>
    <property type="chains" value="A/B=21-119"/>
</dbReference>
<dbReference type="PDB" id="4MJ5">
    <property type="method" value="X-ray"/>
    <property type="resolution" value="2.40 A"/>
    <property type="chains" value="B=21-119"/>
</dbReference>
<dbReference type="PDB" id="4MJ6">
    <property type="method" value="X-ray"/>
    <property type="resolution" value="2.57 A"/>
    <property type="chains" value="B=21-119"/>
</dbReference>
<dbReference type="PDB" id="4MJI">
    <property type="method" value="X-ray"/>
    <property type="resolution" value="2.99 A"/>
    <property type="chains" value="B/G=21-119"/>
</dbReference>
<dbReference type="PDB" id="4MNQ">
    <property type="method" value="X-ray"/>
    <property type="resolution" value="2.74 A"/>
    <property type="chains" value="B=21-119"/>
</dbReference>
<dbReference type="PDB" id="4N0F">
    <property type="method" value="X-ray"/>
    <property type="resolution" value="3.02 A"/>
    <property type="chains" value="B/F/I/L=21-119"/>
</dbReference>
<dbReference type="PDB" id="4N0U">
    <property type="method" value="X-ray"/>
    <property type="resolution" value="3.80 A"/>
    <property type="chains" value="B=21-119"/>
</dbReference>
<dbReference type="PDB" id="4N8V">
    <property type="method" value="X-ray"/>
    <property type="resolution" value="2.50 A"/>
    <property type="chains" value="B/E=21-119"/>
</dbReference>
<dbReference type="PDB" id="4NNX">
    <property type="method" value="X-ray"/>
    <property type="resolution" value="2.10 A"/>
    <property type="chains" value="B=21-119"/>
</dbReference>
<dbReference type="PDB" id="4NNY">
    <property type="method" value="X-ray"/>
    <property type="resolution" value="1.90 A"/>
    <property type="chains" value="B=21-119"/>
</dbReference>
<dbReference type="PDB" id="4NO0">
    <property type="method" value="X-ray"/>
    <property type="resolution" value="2.70 A"/>
    <property type="chains" value="B=21-119"/>
</dbReference>
<dbReference type="PDB" id="4NO2">
    <property type="method" value="X-ray"/>
    <property type="resolution" value="2.00 A"/>
    <property type="chains" value="B=21-119"/>
</dbReference>
<dbReference type="PDB" id="4NO3">
    <property type="method" value="X-ray"/>
    <property type="resolution" value="1.70 A"/>
    <property type="chains" value="B=21-119"/>
</dbReference>
<dbReference type="PDB" id="4NO5">
    <property type="method" value="X-ray"/>
    <property type="resolution" value="2.10 A"/>
    <property type="chains" value="B=22-119"/>
</dbReference>
<dbReference type="PDB" id="4NQC">
    <property type="method" value="X-ray"/>
    <property type="resolution" value="2.50 A"/>
    <property type="chains" value="B/F=21-119"/>
</dbReference>
<dbReference type="PDB" id="4NQD">
    <property type="method" value="X-ray"/>
    <property type="resolution" value="2.20 A"/>
    <property type="chains" value="B/F=21-119"/>
</dbReference>
<dbReference type="PDB" id="4NQE">
    <property type="method" value="X-ray"/>
    <property type="resolution" value="2.10 A"/>
    <property type="chains" value="B/F=21-119"/>
</dbReference>
<dbReference type="PDB" id="4NQV">
    <property type="method" value="X-ray"/>
    <property type="resolution" value="2.39 A"/>
    <property type="chains" value="B/D/F/H/J/L=21-119"/>
</dbReference>
<dbReference type="PDB" id="4NQX">
    <property type="method" value="X-ray"/>
    <property type="resolution" value="2.00 A"/>
    <property type="chains" value="B/D/F/H/J/L=21-119"/>
</dbReference>
<dbReference type="PDB" id="4NT6">
    <property type="method" value="X-ray"/>
    <property type="resolution" value="1.84 A"/>
    <property type="chains" value="B=21-118"/>
</dbReference>
<dbReference type="PDB" id="4O2C">
    <property type="method" value="X-ray"/>
    <property type="resolution" value="1.80 A"/>
    <property type="chains" value="B=21-119"/>
</dbReference>
<dbReference type="PDB" id="4O2E">
    <property type="method" value="X-ray"/>
    <property type="resolution" value="1.98 A"/>
    <property type="chains" value="B/E=21-119"/>
</dbReference>
<dbReference type="PDB" id="4O2F">
    <property type="method" value="X-ray"/>
    <property type="resolution" value="1.90 A"/>
    <property type="chains" value="B/E=21-119"/>
</dbReference>
<dbReference type="PDB" id="4ONO">
    <property type="method" value="X-ray"/>
    <property type="resolution" value="2.70 A"/>
    <property type="chains" value="A=21-119"/>
</dbReference>
<dbReference type="PDB" id="4PJ5">
    <property type="method" value="X-ray"/>
    <property type="resolution" value="2.00 A"/>
    <property type="chains" value="B/F=21-119"/>
</dbReference>
<dbReference type="PDB" id="4PJ7">
    <property type="method" value="X-ray"/>
    <property type="resolution" value="2.50 A"/>
    <property type="chains" value="B/D=21-119"/>
</dbReference>
<dbReference type="PDB" id="4PJ8">
    <property type="method" value="X-ray"/>
    <property type="resolution" value="3.30 A"/>
    <property type="chains" value="B=21-119"/>
</dbReference>
<dbReference type="PDB" id="4PJ9">
    <property type="method" value="X-ray"/>
    <property type="resolution" value="2.00 A"/>
    <property type="chains" value="B=21-119"/>
</dbReference>
<dbReference type="PDB" id="4PJA">
    <property type="method" value="X-ray"/>
    <property type="resolution" value="2.68 A"/>
    <property type="chains" value="B/D=21-119"/>
</dbReference>
<dbReference type="PDB" id="4PJB">
    <property type="method" value="X-ray"/>
    <property type="resolution" value="2.85 A"/>
    <property type="chains" value="B/D=21-119"/>
</dbReference>
<dbReference type="PDB" id="4PJC">
    <property type="method" value="X-ray"/>
    <property type="resolution" value="2.50 A"/>
    <property type="chains" value="B/D=21-119"/>
</dbReference>
<dbReference type="PDB" id="4PJD">
    <property type="method" value="X-ray"/>
    <property type="resolution" value="2.78 A"/>
    <property type="chains" value="B/D=21-119"/>
</dbReference>
<dbReference type="PDB" id="4PJE">
    <property type="method" value="X-ray"/>
    <property type="resolution" value="1.95 A"/>
    <property type="chains" value="B/D=21-119"/>
</dbReference>
<dbReference type="PDB" id="4PJF">
    <property type="method" value="X-ray"/>
    <property type="resolution" value="2.45 A"/>
    <property type="chains" value="B/D=21-119"/>
</dbReference>
<dbReference type="PDB" id="4PJG">
    <property type="method" value="X-ray"/>
    <property type="resolution" value="2.40 A"/>
    <property type="chains" value="B/D=21-119"/>
</dbReference>
<dbReference type="PDB" id="4PJH">
    <property type="method" value="X-ray"/>
    <property type="resolution" value="2.00 A"/>
    <property type="chains" value="B/D=21-119"/>
</dbReference>
<dbReference type="PDB" id="4PJI">
    <property type="method" value="X-ray"/>
    <property type="resolution" value="2.50 A"/>
    <property type="chains" value="B/D=21-119"/>
</dbReference>
<dbReference type="PDB" id="4PJX">
    <property type="method" value="X-ray"/>
    <property type="resolution" value="2.25 A"/>
    <property type="chains" value="B/D=21-119"/>
</dbReference>
<dbReference type="PDB" id="4PR5">
    <property type="method" value="X-ray"/>
    <property type="resolution" value="1.80 A"/>
    <property type="chains" value="B=21-119"/>
</dbReference>
<dbReference type="PDB" id="4PRA">
    <property type="method" value="X-ray"/>
    <property type="resolution" value="1.85 A"/>
    <property type="chains" value="B=21-119"/>
</dbReference>
<dbReference type="PDB" id="4PRB">
    <property type="method" value="X-ray"/>
    <property type="resolution" value="1.75 A"/>
    <property type="chains" value="B=21-119"/>
</dbReference>
<dbReference type="PDB" id="4PRD">
    <property type="method" value="X-ray"/>
    <property type="resolution" value="1.75 A"/>
    <property type="chains" value="B=21-119"/>
</dbReference>
<dbReference type="PDB" id="4PRE">
    <property type="method" value="X-ray"/>
    <property type="resolution" value="1.65 A"/>
    <property type="chains" value="B=21-119"/>
</dbReference>
<dbReference type="PDB" id="4PRH">
    <property type="method" value="X-ray"/>
    <property type="resolution" value="2.50 A"/>
    <property type="chains" value="B=23-119"/>
</dbReference>
<dbReference type="PDB" id="4PRI">
    <property type="method" value="X-ray"/>
    <property type="resolution" value="2.40 A"/>
    <property type="chains" value="B=21-119"/>
</dbReference>
<dbReference type="PDB" id="4PRN">
    <property type="method" value="X-ray"/>
    <property type="resolution" value="1.65 A"/>
    <property type="chains" value="B=21-119"/>
</dbReference>
<dbReference type="PDB" id="4PRP">
    <property type="method" value="X-ray"/>
    <property type="resolution" value="2.50 A"/>
    <property type="chains" value="B=21-119"/>
</dbReference>
<dbReference type="PDB" id="4QOK">
    <property type="method" value="X-ray"/>
    <property type="resolution" value="3.00 A"/>
    <property type="chains" value="B=21-119"/>
</dbReference>
<dbReference type="PDB" id="4QRP">
    <property type="method" value="X-ray"/>
    <property type="resolution" value="2.90 A"/>
    <property type="chains" value="B/G=21-119"/>
</dbReference>
<dbReference type="PDB" id="4QRQ">
    <property type="method" value="X-ray"/>
    <property type="resolution" value="1.70 A"/>
    <property type="chains" value="B=21-119"/>
</dbReference>
<dbReference type="PDB" id="4QRR">
    <property type="method" value="X-ray"/>
    <property type="resolution" value="3.00 A"/>
    <property type="chains" value="B=21-119"/>
</dbReference>
<dbReference type="PDB" id="4QRS">
    <property type="method" value="X-ray"/>
    <property type="resolution" value="1.40 A"/>
    <property type="chains" value="B=22-119"/>
</dbReference>
<dbReference type="PDB" id="4QRT">
    <property type="method" value="X-ray"/>
    <property type="resolution" value="1.40 A"/>
    <property type="chains" value="B=21-119"/>
</dbReference>
<dbReference type="PDB" id="4QRU">
    <property type="method" value="X-ray"/>
    <property type="resolution" value="1.60 A"/>
    <property type="chains" value="B=21-119"/>
</dbReference>
<dbReference type="PDB" id="4R9H">
    <property type="method" value="X-ray"/>
    <property type="resolution" value="1.90 A"/>
    <property type="chains" value="A/B/C/D=21-119"/>
</dbReference>
<dbReference type="PDB" id="4RA3">
    <property type="method" value="X-ray"/>
    <property type="resolution" value="2.80 A"/>
    <property type="chains" value="A/B/C/D=21-119"/>
</dbReference>
<dbReference type="PDB" id="4RAH">
    <property type="method" value="X-ray"/>
    <property type="resolution" value="1.40 A"/>
    <property type="chains" value="A=21-119"/>
</dbReference>
<dbReference type="PDB" id="4RMQ">
    <property type="method" value="X-ray"/>
    <property type="resolution" value="1.46 A"/>
    <property type="chains" value="A=21-119"/>
</dbReference>
<dbReference type="PDB" id="4RMR">
    <property type="method" value="X-ray"/>
    <property type="resolution" value="1.53 A"/>
    <property type="chains" value="A=21-119"/>
</dbReference>
<dbReference type="PDB" id="4RMS">
    <property type="method" value="X-ray"/>
    <property type="resolution" value="1.70 A"/>
    <property type="chains" value="A=21-119"/>
</dbReference>
<dbReference type="PDB" id="4RMT">
    <property type="method" value="X-ray"/>
    <property type="resolution" value="1.24 A"/>
    <property type="chains" value="A=21-117"/>
</dbReference>
<dbReference type="PDB" id="4RMU">
    <property type="method" value="X-ray"/>
    <property type="resolution" value="1.40 A"/>
    <property type="chains" value="A=21-119"/>
</dbReference>
<dbReference type="PDB" id="4RMV">
    <property type="method" value="X-ray"/>
    <property type="resolution" value="1.46 A"/>
    <property type="chains" value="A=21-119"/>
</dbReference>
<dbReference type="PDB" id="4RMW">
    <property type="method" value="X-ray"/>
    <property type="resolution" value="1.40 A"/>
    <property type="chains" value="A=21-119"/>
</dbReference>
<dbReference type="PDB" id="4U1H">
    <property type="method" value="X-ray"/>
    <property type="resolution" value="1.59 A"/>
    <property type="chains" value="B=21-119"/>
</dbReference>
<dbReference type="PDB" id="4U1I">
    <property type="method" value="X-ray"/>
    <property type="resolution" value="1.92 A"/>
    <property type="chains" value="B=21-119"/>
</dbReference>
<dbReference type="PDB" id="4U1J">
    <property type="method" value="X-ray"/>
    <property type="resolution" value="1.38 A"/>
    <property type="chains" value="B=21-119"/>
</dbReference>
<dbReference type="PDB" id="4U1K">
    <property type="method" value="X-ray"/>
    <property type="resolution" value="2.09 A"/>
    <property type="chains" value="B/E=21-119"/>
</dbReference>
<dbReference type="PDB" id="4U1L">
    <property type="method" value="X-ray"/>
    <property type="resolution" value="2.06 A"/>
    <property type="chains" value="B/E=21-119"/>
</dbReference>
<dbReference type="PDB" id="4U1M">
    <property type="method" value="X-ray"/>
    <property type="resolution" value="1.18 A"/>
    <property type="chains" value="B=21-119"/>
</dbReference>
<dbReference type="PDB" id="4U1N">
    <property type="method" value="X-ray"/>
    <property type="resolution" value="1.77 A"/>
    <property type="chains" value="B=21-119"/>
</dbReference>
<dbReference type="PDB" id="4U1S">
    <property type="method" value="X-ray"/>
    <property type="resolution" value="1.76 A"/>
    <property type="chains" value="B=21-119"/>
</dbReference>
<dbReference type="PDB" id="4U6X">
    <property type="method" value="X-ray"/>
    <property type="resolution" value="1.68 A"/>
    <property type="chains" value="B=21-119"/>
</dbReference>
<dbReference type="PDB" id="4U6Y">
    <property type="method" value="X-ray"/>
    <property type="resolution" value="1.47 A"/>
    <property type="chains" value="B=21-119"/>
</dbReference>
<dbReference type="PDB" id="4UQ2">
    <property type="method" value="X-ray"/>
    <property type="resolution" value="2.43 A"/>
    <property type="chains" value="B/D=21-119"/>
</dbReference>
<dbReference type="PDB" id="4UQ3">
    <property type="method" value="X-ray"/>
    <property type="resolution" value="2.10 A"/>
    <property type="chains" value="B/D=21-119"/>
</dbReference>
<dbReference type="PDB" id="4WC8">
    <property type="method" value="X-ray"/>
    <property type="resolution" value="1.91 A"/>
    <property type="chains" value="A/B/C/D/E/F/G/H/I/J/K/L=83-89"/>
</dbReference>
<dbReference type="PDB" id="4WDI">
    <property type="method" value="X-ray"/>
    <property type="resolution" value="2.31 A"/>
    <property type="chains" value="B/E=21-119"/>
</dbReference>
<dbReference type="PDB" id="4WJ5">
    <property type="method" value="X-ray"/>
    <property type="resolution" value="1.65 A"/>
    <property type="chains" value="B/E=21-119"/>
</dbReference>
<dbReference type="PDB" id="4WO4">
    <property type="method" value="X-ray"/>
    <property type="resolution" value="2.50 A"/>
    <property type="chains" value="B=21-119"/>
</dbReference>
<dbReference type="PDB" id="4WU5">
    <property type="method" value="X-ray"/>
    <property type="resolution" value="2.40 A"/>
    <property type="chains" value="B/E=21-119"/>
</dbReference>
<dbReference type="PDB" id="4WU7">
    <property type="method" value="X-ray"/>
    <property type="resolution" value="2.30 A"/>
    <property type="chains" value="B/E=21-119"/>
</dbReference>
<dbReference type="PDB" id="4WUU">
    <property type="method" value="X-ray"/>
    <property type="resolution" value="3.05 A"/>
    <property type="chains" value="B=21-119"/>
</dbReference>
<dbReference type="PDB" id="4WW2">
    <property type="method" value="X-ray"/>
    <property type="resolution" value="2.48 A"/>
    <property type="chains" value="F=21-119"/>
</dbReference>
<dbReference type="PDB" id="4WWK">
    <property type="method" value="X-ray"/>
    <property type="resolution" value="3.10 A"/>
    <property type="chains" value="D=1-119"/>
</dbReference>
<dbReference type="PDB" id="4X0S">
    <property type="method" value="X-ray"/>
    <property type="resolution" value="2.03 A"/>
    <property type="chains" value="A=83-89"/>
</dbReference>
<dbReference type="PDB" id="4X6C">
    <property type="method" value="X-ray"/>
    <property type="resolution" value="2.80 A"/>
    <property type="chains" value="B/D=21-119"/>
</dbReference>
<dbReference type="PDB" id="4X6D">
    <property type="method" value="X-ray"/>
    <property type="resolution" value="2.98 A"/>
    <property type="chains" value="B/D=21-119"/>
</dbReference>
<dbReference type="PDB" id="4X6E">
    <property type="method" value="X-ray"/>
    <property type="resolution" value="2.10 A"/>
    <property type="chains" value="B=21-119"/>
</dbReference>
<dbReference type="PDB" id="4X6F">
    <property type="method" value="X-ray"/>
    <property type="resolution" value="1.91 A"/>
    <property type="chains" value="B=21-119"/>
</dbReference>
<dbReference type="PDB" id="4XXC">
    <property type="method" value="X-ray"/>
    <property type="resolution" value="1.43 A"/>
    <property type="chains" value="C=21-119"/>
</dbReference>
<dbReference type="PDB" id="4Z76">
    <property type="method" value="X-ray"/>
    <property type="resolution" value="1.88 A"/>
    <property type="chains" value="B/E=21-119"/>
</dbReference>
<dbReference type="PDB" id="4Z77">
    <property type="method" value="X-ray"/>
    <property type="resolution" value="1.85 A"/>
    <property type="chains" value="B/E=21-119"/>
</dbReference>
<dbReference type="PDB" id="4Z78">
    <property type="method" value="X-ray"/>
    <property type="resolution" value="2.30 A"/>
    <property type="chains" value="B/E/H=21-119"/>
</dbReference>
<dbReference type="PDB" id="5B38">
    <property type="method" value="X-ray"/>
    <property type="resolution" value="2.30 A"/>
    <property type="chains" value="B=21-119"/>
</dbReference>
<dbReference type="PDB" id="5B39">
    <property type="method" value="X-ray"/>
    <property type="resolution" value="2.50 A"/>
    <property type="chains" value="B=21-119"/>
</dbReference>
<dbReference type="PDB" id="5BJT">
    <property type="method" value="X-ray"/>
    <property type="resolution" value="3.20 A"/>
    <property type="chains" value="B/D/F/H=21-119"/>
</dbReference>
<dbReference type="PDB" id="5BRZ">
    <property type="method" value="X-ray"/>
    <property type="resolution" value="2.62 A"/>
    <property type="chains" value="B=21-119"/>
</dbReference>
<dbReference type="PDB" id="5BS0">
    <property type="method" value="X-ray"/>
    <property type="resolution" value="2.40 A"/>
    <property type="chains" value="B=21-119"/>
</dbReference>
<dbReference type="PDB" id="5BXF">
    <property type="method" value="X-ray"/>
    <property type="resolution" value="2.85 A"/>
    <property type="chains" value="B/D=1-119"/>
</dbReference>
<dbReference type="PDB" id="5C07">
    <property type="method" value="X-ray"/>
    <property type="resolution" value="2.11 A"/>
    <property type="chains" value="B/G=21-119"/>
</dbReference>
<dbReference type="PDB" id="5C08">
    <property type="method" value="X-ray"/>
    <property type="resolution" value="2.33 A"/>
    <property type="chains" value="B/G=21-119"/>
</dbReference>
<dbReference type="PDB" id="5C09">
    <property type="method" value="X-ray"/>
    <property type="resolution" value="2.48 A"/>
    <property type="chains" value="B/G=21-119"/>
</dbReference>
<dbReference type="PDB" id="5C0A">
    <property type="method" value="X-ray"/>
    <property type="resolution" value="2.46 A"/>
    <property type="chains" value="B/G=21-119"/>
</dbReference>
<dbReference type="PDB" id="5C0B">
    <property type="method" value="X-ray"/>
    <property type="resolution" value="2.03 A"/>
    <property type="chains" value="B/G=21-119"/>
</dbReference>
<dbReference type="PDB" id="5C0C">
    <property type="method" value="X-ray"/>
    <property type="resolution" value="1.97 A"/>
    <property type="chains" value="B/G=21-119"/>
</dbReference>
<dbReference type="PDB" id="5C0D">
    <property type="method" value="X-ray"/>
    <property type="resolution" value="1.68 A"/>
    <property type="chains" value="B=21-119"/>
</dbReference>
<dbReference type="PDB" id="5C0E">
    <property type="method" value="X-ray"/>
    <property type="resolution" value="1.49 A"/>
    <property type="chains" value="B=21-119"/>
</dbReference>
<dbReference type="PDB" id="5C0F">
    <property type="method" value="X-ray"/>
    <property type="resolution" value="1.46 A"/>
    <property type="chains" value="B=21-119"/>
</dbReference>
<dbReference type="PDB" id="5C0G">
    <property type="method" value="X-ray"/>
    <property type="resolution" value="1.37 A"/>
    <property type="chains" value="B=21-119"/>
</dbReference>
<dbReference type="PDB" id="5C0I">
    <property type="method" value="X-ray"/>
    <property type="resolution" value="1.53 A"/>
    <property type="chains" value="B=21-119"/>
</dbReference>
<dbReference type="PDB" id="5C0J">
    <property type="method" value="X-ray"/>
    <property type="resolution" value="1.64 A"/>
    <property type="chains" value="B=21-119"/>
</dbReference>
<dbReference type="PDB" id="5C9J">
    <property type="method" value="X-ray"/>
    <property type="resolution" value="2.40 A"/>
    <property type="chains" value="B=21-118"/>
</dbReference>
<dbReference type="PDB" id="5CFH">
    <property type="method" value="X-ray"/>
    <property type="resolution" value="1.49 A"/>
    <property type="chains" value="A=21-119"/>
</dbReference>
<dbReference type="PDB" id="5CKA">
    <property type="method" value="X-ray"/>
    <property type="resolution" value="1.70 A"/>
    <property type="chains" value="A=21-119"/>
</dbReference>
<dbReference type="PDB" id="5CKG">
    <property type="method" value="X-ray"/>
    <property type="resolution" value="1.75 A"/>
    <property type="chains" value="A/B=21-119"/>
</dbReference>
<dbReference type="PDB" id="5CS7">
    <property type="method" value="X-ray"/>
    <property type="resolution" value="2.10 A"/>
    <property type="chains" value="A=21-119"/>
</dbReference>
<dbReference type="PDB" id="5CSB">
    <property type="method" value="X-ray"/>
    <property type="resolution" value="1.72 A"/>
    <property type="chains" value="A=21-119"/>
</dbReference>
<dbReference type="PDB" id="5CSG">
    <property type="method" value="X-ray"/>
    <property type="resolution" value="1.50 A"/>
    <property type="chains" value="A=21-119"/>
</dbReference>
<dbReference type="PDB" id="5D2L">
    <property type="method" value="X-ray"/>
    <property type="resolution" value="3.51 A"/>
    <property type="chains" value="B/D/H/N=21-119"/>
</dbReference>
<dbReference type="PDB" id="5D2N">
    <property type="method" value="X-ray"/>
    <property type="resolution" value="2.10 A"/>
    <property type="chains" value="B/L=21-119"/>
</dbReference>
<dbReference type="PDB" id="5D5M">
    <property type="method" value="X-ray"/>
    <property type="resolution" value="2.20 A"/>
    <property type="chains" value="B/D=21-119"/>
</dbReference>
<dbReference type="PDB" id="5D7I">
    <property type="method" value="X-ray"/>
    <property type="resolution" value="2.00 A"/>
    <property type="chains" value="B/D=21-119"/>
</dbReference>
<dbReference type="PDB" id="5D7J">
    <property type="method" value="X-ray"/>
    <property type="resolution" value="1.97 A"/>
    <property type="chains" value="D/F=21-119"/>
</dbReference>
<dbReference type="PDB" id="5D7L">
    <property type="method" value="X-ray"/>
    <property type="resolution" value="3.40 A"/>
    <property type="chains" value="B/F=21-119"/>
</dbReference>
<dbReference type="PDB" id="5D9S">
    <property type="method" value="X-ray"/>
    <property type="resolution" value="1.87 A"/>
    <property type="chains" value="B=21-119"/>
</dbReference>
<dbReference type="PDB" id="5DDH">
    <property type="method" value="X-ray"/>
    <property type="resolution" value="1.50 A"/>
    <property type="chains" value="B=21-119"/>
</dbReference>
<dbReference type="PDB" id="5DEF">
    <property type="method" value="X-ray"/>
    <property type="resolution" value="1.60 A"/>
    <property type="chains" value="B=21-119"/>
</dbReference>
<dbReference type="PDB" id="5DEG">
    <property type="method" value="X-ray"/>
    <property type="resolution" value="1.83 A"/>
    <property type="chains" value="B=21-119"/>
</dbReference>
<dbReference type="PDB" id="5E00">
    <property type="method" value="X-ray"/>
    <property type="resolution" value="1.70 A"/>
    <property type="chains" value="B=21-119"/>
</dbReference>
<dbReference type="PDB" id="5E6I">
    <property type="method" value="X-ray"/>
    <property type="resolution" value="4.00 A"/>
    <property type="chains" value="D/J/N/U=21-119"/>
</dbReference>
<dbReference type="PDB" id="5E9D">
    <property type="method" value="X-ray"/>
    <property type="resolution" value="2.51 A"/>
    <property type="chains" value="B/G=21-119"/>
</dbReference>
<dbReference type="PDB" id="5ENW">
    <property type="method" value="X-ray"/>
    <property type="resolution" value="1.85 A"/>
    <property type="chains" value="B=21-119"/>
</dbReference>
<dbReference type="PDB" id="5EO0">
    <property type="method" value="X-ray"/>
    <property type="resolution" value="1.70 A"/>
    <property type="chains" value="B=21-119"/>
</dbReference>
<dbReference type="PDB" id="5EO1">
    <property type="method" value="X-ray"/>
    <property type="resolution" value="1.85 A"/>
    <property type="chains" value="B=21-119"/>
</dbReference>
<dbReference type="PDB" id="5EOT">
    <property type="method" value="X-ray"/>
    <property type="resolution" value="2.10 A"/>
    <property type="chains" value="B=21-119"/>
</dbReference>
<dbReference type="PDB" id="5EU3">
    <property type="method" value="X-ray"/>
    <property type="resolution" value="1.97 A"/>
    <property type="chains" value="B=21-119"/>
</dbReference>
<dbReference type="PDB" id="5EU4">
    <property type="method" value="X-ray"/>
    <property type="resolution" value="2.12 A"/>
    <property type="chains" value="B/E=21-119"/>
</dbReference>
<dbReference type="PDB" id="5EU5">
    <property type="method" value="X-ray"/>
    <property type="resolution" value="1.54 A"/>
    <property type="chains" value="B=21-119"/>
</dbReference>
<dbReference type="PDB" id="5EU6">
    <property type="method" value="X-ray"/>
    <property type="resolution" value="2.02 A"/>
    <property type="chains" value="B=21-119"/>
</dbReference>
<dbReference type="PDB" id="5EUO">
    <property type="method" value="X-ray"/>
    <property type="resolution" value="2.10 A"/>
    <property type="chains" value="B/D=21-119"/>
</dbReference>
<dbReference type="PDB" id="5F1I">
    <property type="method" value="X-ray"/>
    <property type="resolution" value="2.90 A"/>
    <property type="chains" value="B/E/H/K/N/Q/T/W=21-119"/>
</dbReference>
<dbReference type="PDB" id="5F7D">
    <property type="method" value="X-ray"/>
    <property type="resolution" value="2.30 A"/>
    <property type="chains" value="B=21-119"/>
</dbReference>
<dbReference type="PDB" id="5F9J">
    <property type="method" value="X-ray"/>
    <property type="resolution" value="2.51 A"/>
    <property type="chains" value="B=21-118"/>
</dbReference>
<dbReference type="PDB" id="5FA3">
    <property type="method" value="X-ray"/>
    <property type="resolution" value="1.86 A"/>
    <property type="chains" value="B=21-119"/>
</dbReference>
<dbReference type="PDB" id="5FA4">
    <property type="method" value="X-ray"/>
    <property type="resolution" value="2.40 A"/>
    <property type="chains" value="B=21-119"/>
</dbReference>
<dbReference type="PDB" id="5FDW">
    <property type="method" value="X-ray"/>
    <property type="resolution" value="2.70 A"/>
    <property type="chains" value="B=21-119"/>
</dbReference>
<dbReference type="PDB" id="5GR7">
    <property type="method" value="X-ray"/>
    <property type="resolution" value="2.40 A"/>
    <property type="chains" value="B=21-119"/>
</dbReference>
<dbReference type="PDB" id="5GRD">
    <property type="method" value="X-ray"/>
    <property type="resolution" value="1.80 A"/>
    <property type="chains" value="B=21-119"/>
</dbReference>
<dbReference type="PDB" id="5GRG">
    <property type="method" value="X-ray"/>
    <property type="resolution" value="1.94 A"/>
    <property type="chains" value="B=21-119"/>
</dbReference>
<dbReference type="PDB" id="5GSB">
    <property type="method" value="X-ray"/>
    <property type="resolution" value="1.80 A"/>
    <property type="chains" value="B=21-119"/>
</dbReference>
<dbReference type="PDB" id="5GSD">
    <property type="method" value="X-ray"/>
    <property type="resolution" value="2.30 A"/>
    <property type="chains" value="B=21-119"/>
</dbReference>
<dbReference type="PDB" id="5GSR">
    <property type="method" value="X-ray"/>
    <property type="resolution" value="2.20 A"/>
    <property type="chains" value="B/D=20-119"/>
</dbReference>
<dbReference type="PDB" id="5GSV">
    <property type="method" value="X-ray"/>
    <property type="resolution" value="2.00 A"/>
    <property type="chains" value="B=21-119"/>
</dbReference>
<dbReference type="PDB" id="5GSX">
    <property type="method" value="X-ray"/>
    <property type="resolution" value="2.50 A"/>
    <property type="chains" value="B/E=21-119"/>
</dbReference>
<dbReference type="PDB" id="5HGA">
    <property type="method" value="X-ray"/>
    <property type="resolution" value="2.20 A"/>
    <property type="chains" value="B/E=21-119"/>
</dbReference>
<dbReference type="PDB" id="5HGB">
    <property type="method" value="X-ray"/>
    <property type="resolution" value="2.40 A"/>
    <property type="chains" value="B/E/H/K=21-119"/>
</dbReference>
<dbReference type="PDB" id="5HGD">
    <property type="method" value="X-ray"/>
    <property type="resolution" value="2.07 A"/>
    <property type="chains" value="B/E=21-119"/>
</dbReference>
<dbReference type="PDB" id="5HGH">
    <property type="method" value="X-ray"/>
    <property type="resolution" value="2.39 A"/>
    <property type="chains" value="B=21-119"/>
</dbReference>
<dbReference type="PDB" id="5HHM">
    <property type="method" value="X-ray"/>
    <property type="resolution" value="2.50 A"/>
    <property type="chains" value="B/G=21-119"/>
</dbReference>
<dbReference type="PDB" id="5HHN">
    <property type="method" value="X-ray"/>
    <property type="resolution" value="2.03 A"/>
    <property type="chains" value="B=21-119"/>
</dbReference>
<dbReference type="PDB" id="5HHO">
    <property type="method" value="X-ray"/>
    <property type="resolution" value="2.95 A"/>
    <property type="chains" value="B=21-119"/>
</dbReference>
<dbReference type="PDB" id="5HHP">
    <property type="method" value="X-ray"/>
    <property type="resolution" value="1.90 A"/>
    <property type="chains" value="B=21-119"/>
</dbReference>
<dbReference type="PDB" id="5HHQ">
    <property type="method" value="X-ray"/>
    <property type="resolution" value="2.10 A"/>
    <property type="chains" value="B=21-119"/>
</dbReference>
<dbReference type="PDB" id="5HYJ">
    <property type="method" value="X-ray"/>
    <property type="resolution" value="3.06 A"/>
    <property type="chains" value="B/G=21-119"/>
</dbReference>
<dbReference type="PDB" id="5IB1">
    <property type="method" value="X-ray"/>
    <property type="resolution" value="1.91 A"/>
    <property type="chains" value="B=21-119"/>
</dbReference>
<dbReference type="PDB" id="5IB2">
    <property type="method" value="X-ray"/>
    <property type="resolution" value="1.44 A"/>
    <property type="chains" value="B=21-119"/>
</dbReference>
<dbReference type="PDB" id="5IB3">
    <property type="method" value="X-ray"/>
    <property type="resolution" value="1.91 A"/>
    <property type="chains" value="B=21-119"/>
</dbReference>
<dbReference type="PDB" id="5IB4">
    <property type="method" value="X-ray"/>
    <property type="resolution" value="1.95 A"/>
    <property type="chains" value="B=21-119"/>
</dbReference>
<dbReference type="PDB" id="5IB5">
    <property type="method" value="X-ray"/>
    <property type="resolution" value="2.49 A"/>
    <property type="chains" value="B/E=21-119"/>
</dbReference>
<dbReference type="PDB" id="5IEH">
    <property type="method" value="X-ray"/>
    <property type="resolution" value="1.50 A"/>
    <property type="chains" value="B=21-119"/>
</dbReference>
<dbReference type="PDB" id="5IEK">
    <property type="method" value="X-ray"/>
    <property type="resolution" value="1.80 A"/>
    <property type="chains" value="B=21-119"/>
</dbReference>
<dbReference type="PDB" id="5IM7">
    <property type="method" value="X-ray"/>
    <property type="resolution" value="2.50 A"/>
    <property type="chains" value="B/D=21-119"/>
</dbReference>
<dbReference type="PDB" id="5INC">
    <property type="method" value="X-ray"/>
    <property type="resolution" value="2.88 A"/>
    <property type="chains" value="B/D=21-119"/>
</dbReference>
<dbReference type="PDB" id="5IND">
    <property type="method" value="X-ray"/>
    <property type="resolution" value="2.13 A"/>
    <property type="chains" value="B/D=21-119"/>
</dbReference>
<dbReference type="PDB" id="5IRO">
    <property type="method" value="X-ray"/>
    <property type="resolution" value="2.64 A"/>
    <property type="chains" value="C/G/K/O/S/W=21-119"/>
</dbReference>
<dbReference type="PDB" id="5ISZ">
    <property type="method" value="X-ray"/>
    <property type="resolution" value="2.06 A"/>
    <property type="chains" value="B=22-119"/>
</dbReference>
<dbReference type="PDB" id="5IUE">
    <property type="method" value="X-ray"/>
    <property type="resolution" value="2.62 A"/>
    <property type="chains" value="B/F/H/J=19-119"/>
</dbReference>
<dbReference type="PDB" id="5J1A">
    <property type="method" value="X-ray"/>
    <property type="resolution" value="1.86 A"/>
    <property type="chains" value="B=1-119"/>
</dbReference>
<dbReference type="PDB" id="5JHD">
    <property type="method" value="X-ray"/>
    <property type="resolution" value="2.46 A"/>
    <property type="chains" value="B/G=21-119"/>
</dbReference>
<dbReference type="PDB" id="5JZI">
    <property type="method" value="X-ray"/>
    <property type="resolution" value="2.50 A"/>
    <property type="chains" value="B/G=21-119"/>
</dbReference>
<dbReference type="PDB" id="5KNM">
    <property type="method" value="X-ray"/>
    <property type="resolution" value="3.30 A"/>
    <property type="chains" value="B=21-119"/>
</dbReference>
<dbReference type="PDB" id="5L2J">
    <property type="method" value="X-ray"/>
    <property type="resolution" value="1.65 A"/>
    <property type="chains" value="B=21-118"/>
</dbReference>
<dbReference type="PDB" id="5L2K">
    <property type="method" value="X-ray"/>
    <property type="resolution" value="3.20 A"/>
    <property type="chains" value="B=21-118"/>
</dbReference>
<dbReference type="PDB" id="5MEN">
    <property type="method" value="X-ray"/>
    <property type="resolution" value="2.81 A"/>
    <property type="chains" value="B=21-119"/>
</dbReference>
<dbReference type="PDB" id="5MEO">
    <property type="method" value="X-ray"/>
    <property type="resolution" value="1.77 A"/>
    <property type="chains" value="B=21-119"/>
</dbReference>
<dbReference type="PDB" id="5MEP">
    <property type="method" value="X-ray"/>
    <property type="resolution" value="2.71 A"/>
    <property type="chains" value="B/E=21-119"/>
</dbReference>
<dbReference type="PDB" id="5MEQ">
    <property type="method" value="X-ray"/>
    <property type="resolution" value="2.27 A"/>
    <property type="chains" value="B=21-119"/>
</dbReference>
<dbReference type="PDB" id="5MER">
    <property type="method" value="X-ray"/>
    <property type="resolution" value="1.88 A"/>
    <property type="chains" value="B/E=21-119"/>
</dbReference>
<dbReference type="PDB" id="5N1Y">
    <property type="method" value="X-ray"/>
    <property type="resolution" value="1.39 A"/>
    <property type="chains" value="B=21-119"/>
</dbReference>
<dbReference type="PDB" id="5N6B">
    <property type="method" value="X-ray"/>
    <property type="resolution" value="1.71 A"/>
    <property type="chains" value="B/E=21-119"/>
</dbReference>
<dbReference type="PDB" id="5NHT">
    <property type="method" value="X-ray"/>
    <property type="resolution" value="3.20 A"/>
    <property type="chains" value="L=21-119"/>
</dbReference>
<dbReference type="PDB" id="5NME">
    <property type="method" value="X-ray"/>
    <property type="resolution" value="2.94 A"/>
    <property type="chains" value="B/G=21-119"/>
</dbReference>
<dbReference type="PDB" id="5NMF">
    <property type="method" value="X-ray"/>
    <property type="resolution" value="2.89 A"/>
    <property type="chains" value="B/G=21-119"/>
</dbReference>
<dbReference type="PDB" id="5NMG">
    <property type="method" value="X-ray"/>
    <property type="resolution" value="2.75 A"/>
    <property type="chains" value="B/G=21-119"/>
</dbReference>
<dbReference type="PDB" id="5NMH">
    <property type="method" value="X-ray"/>
    <property type="resolution" value="1.55 A"/>
    <property type="chains" value="B=21-119"/>
</dbReference>
<dbReference type="PDB" id="5NMK">
    <property type="method" value="X-ray"/>
    <property type="resolution" value="1.66 A"/>
    <property type="chains" value="B=21-119"/>
</dbReference>
<dbReference type="PDB" id="5NQ1">
    <property type="method" value="X-ray"/>
    <property type="resolution" value="2.14 A"/>
    <property type="chains" value="B/E=21-119"/>
</dbReference>
<dbReference type="PDB" id="5NQ3">
    <property type="method" value="X-ray"/>
    <property type="resolution" value="1.57 A"/>
    <property type="chains" value="B/E=21-119"/>
</dbReference>
<dbReference type="PDB" id="5NQK">
    <property type="method" value="X-ray"/>
    <property type="resolution" value="3.25 A"/>
    <property type="chains" value="L=21-119"/>
</dbReference>
<dbReference type="PDB" id="5OPI">
    <property type="method" value="X-ray"/>
    <property type="resolution" value="3.30 A"/>
    <property type="chains" value="B=21-119"/>
</dbReference>
<dbReference type="PDB" id="5SWQ">
    <property type="method" value="X-ray"/>
    <property type="resolution" value="2.00 A"/>
    <property type="chains" value="B=21-119"/>
</dbReference>
<dbReference type="PDB" id="5T6W">
    <property type="method" value="X-ray"/>
    <property type="resolution" value="1.90 A"/>
    <property type="chains" value="B=21-119"/>
</dbReference>
<dbReference type="PDB" id="5T6X">
    <property type="method" value="X-ray"/>
    <property type="resolution" value="1.69 A"/>
    <property type="chains" value="B=21-119"/>
</dbReference>
<dbReference type="PDB" id="5T6Y">
    <property type="method" value="X-ray"/>
    <property type="resolution" value="1.76 A"/>
    <property type="chains" value="B=21-119"/>
</dbReference>
<dbReference type="PDB" id="5T6Z">
    <property type="method" value="X-ray"/>
    <property type="resolution" value="2.00 A"/>
    <property type="chains" value="B=21-119"/>
</dbReference>
<dbReference type="PDB" id="5T70">
    <property type="method" value="X-ray"/>
    <property type="resolution" value="2.10 A"/>
    <property type="chains" value="B=21-119"/>
</dbReference>
<dbReference type="PDB" id="5TEZ">
    <property type="method" value="X-ray"/>
    <property type="resolution" value="1.70 A"/>
    <property type="chains" value="B=20-119"/>
</dbReference>
<dbReference type="PDB" id="5TRZ">
    <property type="method" value="X-ray"/>
    <property type="resolution" value="2.25 A"/>
    <property type="chains" value="B/D=21-119"/>
</dbReference>
<dbReference type="PDB" id="5TS1">
    <property type="method" value="X-ray"/>
    <property type="resolution" value="2.30 A"/>
    <property type="chains" value="B/D/F/H=21-119"/>
</dbReference>
<dbReference type="PDB" id="5TXS">
    <property type="method" value="X-ray"/>
    <property type="resolution" value="1.70 A"/>
    <property type="chains" value="B=21-119"/>
</dbReference>
<dbReference type="PDB" id="5U16">
    <property type="method" value="X-ray"/>
    <property type="resolution" value="2.00 A"/>
    <property type="chains" value="B/D=21-119"/>
</dbReference>
<dbReference type="PDB" id="5U17">
    <property type="method" value="X-ray"/>
    <property type="resolution" value="2.15 A"/>
    <property type="chains" value="F/H=21-119"/>
</dbReference>
<dbReference type="PDB" id="5U1R">
    <property type="method" value="X-ray"/>
    <property type="resolution" value="2.70 A"/>
    <property type="chains" value="F/H=21-119"/>
</dbReference>
<dbReference type="PDB" id="5U2V">
    <property type="method" value="X-ray"/>
    <property type="resolution" value="2.20 A"/>
    <property type="chains" value="B/D=21-119"/>
</dbReference>
<dbReference type="PDB" id="5U6Q">
    <property type="method" value="X-ray"/>
    <property type="resolution" value="1.90 A"/>
    <property type="chains" value="F/H=21-119"/>
</dbReference>
<dbReference type="PDB" id="5U72">
    <property type="method" value="X-ray"/>
    <property type="resolution" value="2.50 A"/>
    <property type="chains" value="F/H=21-119"/>
</dbReference>
<dbReference type="PDB" id="5U98">
    <property type="method" value="X-ray"/>
    <property type="resolution" value="2.00 A"/>
    <property type="chains" value="B/E=21-119"/>
</dbReference>
<dbReference type="PDB" id="5V5L">
    <property type="method" value="X-ray"/>
    <property type="resolution" value="2.00 A"/>
    <property type="chains" value="B/D=21-119"/>
</dbReference>
<dbReference type="PDB" id="5V5M">
    <property type="method" value="X-ray"/>
    <property type="resolution" value="2.88 A"/>
    <property type="chains" value="B/D=21-119"/>
</dbReference>
<dbReference type="PDB" id="5VGD">
    <property type="method" value="X-ray"/>
    <property type="resolution" value="2.32 A"/>
    <property type="chains" value="B=21-119"/>
</dbReference>
<dbReference type="PDB" id="5VGE">
    <property type="method" value="X-ray"/>
    <property type="resolution" value="2.60 A"/>
    <property type="chains" value="B=21-119"/>
</dbReference>
<dbReference type="PDB" id="5VUD">
    <property type="method" value="X-ray"/>
    <property type="resolution" value="2.00 A"/>
    <property type="chains" value="B=21-119"/>
</dbReference>
<dbReference type="PDB" id="5VUE">
    <property type="method" value="X-ray"/>
    <property type="resolution" value="1.80 A"/>
    <property type="chains" value="B=21-119"/>
</dbReference>
<dbReference type="PDB" id="5VUF">
    <property type="method" value="X-ray"/>
    <property type="resolution" value="1.90 A"/>
    <property type="chains" value="B=21-119"/>
</dbReference>
<dbReference type="PDB" id="5VVP">
    <property type="method" value="X-ray"/>
    <property type="resolution" value="2.00 A"/>
    <property type="chains" value="B=21-119"/>
</dbReference>
<dbReference type="PDB" id="5VWD">
    <property type="method" value="X-ray"/>
    <property type="resolution" value="1.80 A"/>
    <property type="chains" value="B=21-119"/>
</dbReference>
<dbReference type="PDB" id="5VWF">
    <property type="method" value="X-ray"/>
    <property type="resolution" value="1.80 A"/>
    <property type="chains" value="B=21-119"/>
</dbReference>
<dbReference type="PDB" id="5VWH">
    <property type="method" value="X-ray"/>
    <property type="resolution" value="1.65 A"/>
    <property type="chains" value="B=21-119"/>
</dbReference>
<dbReference type="PDB" id="5VWJ">
    <property type="method" value="X-ray"/>
    <property type="resolution" value="2.00 A"/>
    <property type="chains" value="B=21-119"/>
</dbReference>
<dbReference type="PDB" id="5VZ5">
    <property type="method" value="X-ray"/>
    <property type="resolution" value="2.59 A"/>
    <property type="chains" value="B=21-119"/>
</dbReference>
<dbReference type="PDB" id="5W1V">
    <property type="method" value="X-ray"/>
    <property type="resolution" value="3.31 A"/>
    <property type="chains" value="B/G/L/Q=21-119"/>
</dbReference>
<dbReference type="PDB" id="5W1W">
    <property type="method" value="X-ray"/>
    <property type="resolution" value="3.10 A"/>
    <property type="chains" value="B/G/L/Q=21-119"/>
</dbReference>
<dbReference type="PDB" id="5W67">
    <property type="method" value="X-ray"/>
    <property type="resolution" value="2.30 A"/>
    <property type="chains" value="B=21-119"/>
</dbReference>
<dbReference type="PDB" id="5W69">
    <property type="method" value="X-ray"/>
    <property type="resolution" value="2.80 A"/>
    <property type="chains" value="B/D/F/H=21-119"/>
</dbReference>
<dbReference type="PDB" id="5W6A">
    <property type="method" value="X-ray"/>
    <property type="resolution" value="1.74 A"/>
    <property type="chains" value="B/D=21-119"/>
</dbReference>
<dbReference type="PDB" id="5WER">
    <property type="method" value="X-ray"/>
    <property type="resolution" value="3.41 A"/>
    <property type="chains" value="B/E/H/K=21-119"/>
</dbReference>
<dbReference type="PDB" id="5WHK">
    <property type="method" value="X-ray"/>
    <property type="resolution" value="2.50 A"/>
    <property type="chains" value="B=1-119"/>
</dbReference>
<dbReference type="PDB" id="5WJL">
    <property type="method" value="X-ray"/>
    <property type="resolution" value="3.15 A"/>
    <property type="chains" value="B/E/H=21-119"/>
</dbReference>
<dbReference type="PDB" id="5WJN">
    <property type="method" value="X-ray"/>
    <property type="resolution" value="2.85 A"/>
    <property type="chains" value="B/E/H=21-119"/>
</dbReference>
<dbReference type="PDB" id="5WKE">
    <property type="method" value="X-ray"/>
    <property type="resolution" value="1.69 A"/>
    <property type="chains" value="B=21-119"/>
</dbReference>
<dbReference type="PDB" id="5WKF">
    <property type="method" value="X-ray"/>
    <property type="resolution" value="2.95 A"/>
    <property type="chains" value="B/G=21-119"/>
</dbReference>
<dbReference type="PDB" id="5WKG">
    <property type="method" value="X-ray"/>
    <property type="resolution" value="2.06 A"/>
    <property type="chains" value="B=21-119"/>
</dbReference>
<dbReference type="PDB" id="5WKH">
    <property type="method" value="X-ray"/>
    <property type="resolution" value="3.20 A"/>
    <property type="chains" value="B/G=21-119"/>
</dbReference>
<dbReference type="PDB" id="5WKI">
    <property type="method" value="X-ray"/>
    <property type="resolution" value="2.75 A"/>
    <property type="chains" value="B=21-119"/>
</dbReference>
<dbReference type="PDB" id="5WL1">
    <property type="method" value="X-ray"/>
    <property type="resolution" value="1.38 A"/>
    <property type="chains" value="B=21-119"/>
</dbReference>
<dbReference type="PDB" id="5WMN">
    <property type="method" value="X-ray"/>
    <property type="resolution" value="1.82 A"/>
    <property type="chains" value="B/D=21-119"/>
</dbReference>
<dbReference type="PDB" id="5WMO">
    <property type="method" value="X-ray"/>
    <property type="resolution" value="1.62 A"/>
    <property type="chains" value="B=21-119"/>
</dbReference>
<dbReference type="PDB" id="5WMP">
    <property type="method" value="X-ray"/>
    <property type="resolution" value="1.60 A"/>
    <property type="chains" value="B=21-119"/>
</dbReference>
<dbReference type="PDB" id="5WMQ">
    <property type="method" value="X-ray"/>
    <property type="resolution" value="1.40 A"/>
    <property type="chains" value="B=21-119"/>
</dbReference>
<dbReference type="PDB" id="5WMR">
    <property type="method" value="X-ray"/>
    <property type="resolution" value="1.58 A"/>
    <property type="chains" value="B=21-119"/>
</dbReference>
<dbReference type="PDB" id="5WSH">
    <property type="method" value="X-ray"/>
    <property type="resolution" value="2.00 A"/>
    <property type="chains" value="B=21-119"/>
</dbReference>
<dbReference type="PDB" id="5WWI">
    <property type="method" value="X-ray"/>
    <property type="resolution" value="3.19 A"/>
    <property type="chains" value="B=20-119"/>
</dbReference>
<dbReference type="PDB" id="5WWJ">
    <property type="method" value="X-ray"/>
    <property type="resolution" value="2.29 A"/>
    <property type="chains" value="B/D=21-119"/>
</dbReference>
<dbReference type="PDB" id="5WWU">
    <property type="method" value="X-ray"/>
    <property type="resolution" value="2.79 A"/>
    <property type="chains" value="B=21-119"/>
</dbReference>
<dbReference type="PDB" id="5WXC">
    <property type="method" value="X-ray"/>
    <property type="resolution" value="2.29 A"/>
    <property type="chains" value="B/D=20-119"/>
</dbReference>
<dbReference type="PDB" id="5WXD">
    <property type="method" value="X-ray"/>
    <property type="resolution" value="3.29 A"/>
    <property type="chains" value="B=20-119"/>
</dbReference>
<dbReference type="PDB" id="5XOS">
    <property type="method" value="X-ray"/>
    <property type="resolution" value="1.70 A"/>
    <property type="chains" value="B=21-119"/>
</dbReference>
<dbReference type="PDB" id="5XOT">
    <property type="method" value="X-ray"/>
    <property type="resolution" value="2.79 A"/>
    <property type="chains" value="B=21-119"/>
</dbReference>
<dbReference type="PDB" id="5XOV">
    <property type="method" value="X-ray"/>
    <property type="resolution" value="2.68 A"/>
    <property type="chains" value="B/E=21-119"/>
</dbReference>
<dbReference type="PDB" id="5YXN">
    <property type="method" value="X-ray"/>
    <property type="resolution" value="2.03 A"/>
    <property type="chains" value="D=20-119"/>
</dbReference>
<dbReference type="PDB" id="5YXU">
    <property type="method" value="X-ray"/>
    <property type="resolution" value="2.70 A"/>
    <property type="chains" value="D/H=20-119"/>
</dbReference>
<dbReference type="PDB" id="6AEE">
    <property type="method" value="X-ray"/>
    <property type="resolution" value="3.30 A"/>
    <property type="chains" value="B/E=21-119"/>
</dbReference>
<dbReference type="PDB" id="6AM5">
    <property type="method" value="X-ray"/>
    <property type="resolution" value="2.39 A"/>
    <property type="chains" value="B=21-119"/>
</dbReference>
<dbReference type="PDB" id="6AMT">
    <property type="method" value="X-ray"/>
    <property type="resolution" value="2.50 A"/>
    <property type="chains" value="B/E=21-119"/>
</dbReference>
<dbReference type="PDB" id="6AMU">
    <property type="method" value="X-ray"/>
    <property type="resolution" value="2.15 A"/>
    <property type="chains" value="B=21-119"/>
</dbReference>
<dbReference type="PDB" id="6APN">
    <property type="method" value="X-ray"/>
    <property type="resolution" value="2.22 A"/>
    <property type="chains" value="A/B=16-119"/>
</dbReference>
<dbReference type="PDB" id="6AT5">
    <property type="method" value="X-ray"/>
    <property type="resolution" value="1.50 A"/>
    <property type="chains" value="B=1-119"/>
</dbReference>
<dbReference type="PDB" id="6AT9">
    <property type="method" value="X-ray"/>
    <property type="resolution" value="2.95 A"/>
    <property type="chains" value="B=21-119"/>
</dbReference>
<dbReference type="PDB" id="6AVF">
    <property type="method" value="X-ray"/>
    <property type="resolution" value="2.03 A"/>
    <property type="chains" value="M=21-119"/>
</dbReference>
<dbReference type="PDB" id="6AVG">
    <property type="method" value="X-ray"/>
    <property type="resolution" value="2.60 A"/>
    <property type="chains" value="A/H=13-119"/>
</dbReference>
<dbReference type="PDB" id="6BJ2">
    <property type="method" value="X-ray"/>
    <property type="resolution" value="3.35 A"/>
    <property type="chains" value="B=21-119"/>
</dbReference>
<dbReference type="PDB" id="6BJ3">
    <property type="method" value="X-ray"/>
    <property type="resolution" value="1.90 A"/>
    <property type="chains" value="B=21-119"/>
</dbReference>
<dbReference type="PDB" id="6BJ8">
    <property type="method" value="X-ray"/>
    <property type="resolution" value="1.75 A"/>
    <property type="chains" value="B=21-119"/>
</dbReference>
<dbReference type="PDB" id="6BXP">
    <property type="method" value="X-ray"/>
    <property type="resolution" value="1.45 A"/>
    <property type="chains" value="B=21-119"/>
</dbReference>
<dbReference type="PDB" id="6BXQ">
    <property type="method" value="X-ray"/>
    <property type="resolution" value="1.58 A"/>
    <property type="chains" value="C=21-119"/>
</dbReference>
<dbReference type="PDB" id="6C09">
    <property type="method" value="X-ray"/>
    <property type="resolution" value="2.95 A"/>
    <property type="chains" value="B=21-119"/>
</dbReference>
<dbReference type="PDB" id="6C15">
    <property type="method" value="X-ray"/>
    <property type="resolution" value="3.21 A"/>
    <property type="chains" value="B=21-119"/>
</dbReference>
<dbReference type="PDB" id="6C97">
    <property type="method" value="X-ray"/>
    <property type="resolution" value="2.00 A"/>
    <property type="chains" value="B/D=21-119"/>
</dbReference>
<dbReference type="PDB" id="6C98">
    <property type="method" value="X-ray"/>
    <property type="resolution" value="1.85 A"/>
    <property type="chains" value="B/D=21-119"/>
</dbReference>
<dbReference type="PDB" id="6C99">
    <property type="method" value="X-ray"/>
    <property type="resolution" value="2.00 A"/>
    <property type="chains" value="B/D=21-119"/>
</dbReference>
<dbReference type="PDB" id="6CUG">
    <property type="method" value="X-ray"/>
    <property type="resolution" value="2.40 A"/>
    <property type="chains" value="B=21-119"/>
</dbReference>
<dbReference type="PDB" id="6D29">
    <property type="method" value="X-ray"/>
    <property type="resolution" value="1.88 A"/>
    <property type="chains" value="B=21-119"/>
</dbReference>
<dbReference type="PDB" id="6D2B">
    <property type="method" value="X-ray"/>
    <property type="resolution" value="2.04 A"/>
    <property type="chains" value="B=21-119"/>
</dbReference>
<dbReference type="PDB" id="6D2R">
    <property type="method" value="X-ray"/>
    <property type="resolution" value="1.83 A"/>
    <property type="chains" value="B=21-119"/>
</dbReference>
<dbReference type="PDB" id="6D2T">
    <property type="method" value="X-ray"/>
    <property type="resolution" value="1.90 A"/>
    <property type="chains" value="B=21-119"/>
</dbReference>
<dbReference type="PDB" id="6D64">
    <property type="method" value="X-ray"/>
    <property type="resolution" value="1.70 A"/>
    <property type="chains" value="B=21-119"/>
</dbReference>
<dbReference type="PDB" id="6D78">
    <property type="method" value="X-ray"/>
    <property type="resolution" value="2.35 A"/>
    <property type="chains" value="B=21-119"/>
</dbReference>
<dbReference type="PDB" id="6DKP">
    <property type="method" value="X-ray"/>
    <property type="resolution" value="2.97 A"/>
    <property type="chains" value="B=21-119"/>
</dbReference>
<dbReference type="PDB" id="6EI2">
    <property type="method" value="X-ray"/>
    <property type="resolution" value="1.61 A"/>
    <property type="chains" value="B=21-119"/>
</dbReference>
<dbReference type="PDB" id="6ENY">
    <property type="method" value="EM"/>
    <property type="resolution" value="5.80 A"/>
    <property type="chains" value="B=21-119"/>
</dbReference>
<dbReference type="PDB" id="6EQA">
    <property type="method" value="X-ray"/>
    <property type="resolution" value="3.16 A"/>
    <property type="chains" value="B=21-119"/>
</dbReference>
<dbReference type="PDB" id="6EQB">
    <property type="method" value="X-ray"/>
    <property type="resolution" value="2.81 A"/>
    <property type="chains" value="B=21-119"/>
</dbReference>
<dbReference type="PDB" id="6EWA">
    <property type="method" value="X-ray"/>
    <property type="resolution" value="2.39 A"/>
    <property type="chains" value="B/F=21-119"/>
</dbReference>
<dbReference type="PDB" id="6EWC">
    <property type="method" value="X-ray"/>
    <property type="resolution" value="3.20 A"/>
    <property type="chains" value="B/F=21-119"/>
</dbReference>
<dbReference type="PDB" id="6EWO">
    <property type="method" value="X-ray"/>
    <property type="resolution" value="2.30 A"/>
    <property type="chains" value="B/F=21-119"/>
</dbReference>
<dbReference type="PDB" id="6FGB">
    <property type="method" value="X-ray"/>
    <property type="resolution" value="2.90 A"/>
    <property type="chains" value="B=21-119"/>
</dbReference>
<dbReference type="PDB" id="6G3J">
    <property type="method" value="X-ray"/>
    <property type="resolution" value="2.45 A"/>
    <property type="chains" value="B/E=21-119"/>
</dbReference>
<dbReference type="PDB" id="6G3K">
    <property type="method" value="X-ray"/>
    <property type="resolution" value="2.90 A"/>
    <property type="chains" value="B/E=21-119"/>
</dbReference>
<dbReference type="PDB" id="6GGM">
    <property type="method" value="X-ray"/>
    <property type="resolution" value="2.73 A"/>
    <property type="chains" value="B/D=21-119"/>
</dbReference>
<dbReference type="PDB" id="6GH1">
    <property type="method" value="X-ray"/>
    <property type="resolution" value="2.10 A"/>
    <property type="chains" value="B/D/F/H=21-119"/>
</dbReference>
<dbReference type="PDB" id="6GH4">
    <property type="method" value="X-ray"/>
    <property type="resolution" value="2.16 A"/>
    <property type="chains" value="B/D/F/H=21-119"/>
</dbReference>
<dbReference type="PDB" id="6GHN">
    <property type="method" value="X-ray"/>
    <property type="resolution" value="2.54 A"/>
    <property type="chains" value="B/D=21-119"/>
</dbReference>
<dbReference type="PDB" id="6GK3">
    <property type="method" value="EM"/>
    <property type="resolution" value="3.90 A"/>
    <property type="chains" value="A/B/C/D/E/F/G/H=42-105"/>
</dbReference>
<dbReference type="PDB" id="6GL1">
    <property type="method" value="X-ray"/>
    <property type="resolution" value="2.62 A"/>
    <property type="chains" value="B/D/F/H=21-119"/>
</dbReference>
<dbReference type="PDB" id="6ID4">
    <property type="method" value="X-ray"/>
    <property type="resolution" value="2.40 A"/>
    <property type="chains" value="B/F=21-119"/>
</dbReference>
<dbReference type="PDB" id="6IEX">
    <property type="method" value="X-ray"/>
    <property type="resolution" value="2.31 A"/>
    <property type="chains" value="B=21-119"/>
</dbReference>
<dbReference type="PDB" id="6ILM">
    <property type="method" value="EM"/>
    <property type="resolution" value="3.40 A"/>
    <property type="chains" value="F=21-119"/>
</dbReference>
<dbReference type="PDB" id="6J1V">
    <property type="method" value="X-ray"/>
    <property type="resolution" value="2.00 A"/>
    <property type="chains" value="B=21-119"/>
</dbReference>
<dbReference type="PDB" id="6J1W">
    <property type="method" value="X-ray"/>
    <property type="resolution" value="1.50 A"/>
    <property type="chains" value="B=21-119"/>
</dbReference>
<dbReference type="PDB" id="6J29">
    <property type="method" value="X-ray"/>
    <property type="resolution" value="1.60 A"/>
    <property type="chains" value="B=21-119"/>
</dbReference>
<dbReference type="PDB" id="6J2A">
    <property type="method" value="X-ray"/>
    <property type="resolution" value="1.40 A"/>
    <property type="chains" value="B=21-119"/>
</dbReference>
<dbReference type="PDB" id="6J2E">
    <property type="method" value="X-ray"/>
    <property type="resolution" value="2.10 A"/>
    <property type="chains" value="B/E=21-119"/>
</dbReference>
<dbReference type="PDB" id="6J2G">
    <property type="method" value="X-ray"/>
    <property type="resolution" value="2.41 A"/>
    <property type="chains" value="B/E=21-119"/>
</dbReference>
<dbReference type="PDB" id="6J2H">
    <property type="method" value="X-ray"/>
    <property type="resolution" value="2.30 A"/>
    <property type="chains" value="B/E=21-119"/>
</dbReference>
<dbReference type="PDB" id="6J2I">
    <property type="method" value="X-ray"/>
    <property type="resolution" value="2.30 A"/>
    <property type="chains" value="B/E=21-119"/>
</dbReference>
<dbReference type="PDB" id="6J2J">
    <property type="method" value="X-ray"/>
    <property type="resolution" value="2.50 A"/>
    <property type="chains" value="B/E=21-119"/>
</dbReference>
<dbReference type="PDB" id="6JOZ">
    <property type="method" value="X-ray"/>
    <property type="resolution" value="1.35 A"/>
    <property type="chains" value="B=21-119"/>
</dbReference>
<dbReference type="PDB" id="6JP3">
    <property type="method" value="X-ray"/>
    <property type="resolution" value="1.66 A"/>
    <property type="chains" value="B=21-119"/>
</dbReference>
<dbReference type="PDB" id="6JTN">
    <property type="method" value="X-ray"/>
    <property type="resolution" value="1.90 A"/>
    <property type="chains" value="B=21-118"/>
</dbReference>
<dbReference type="PDB" id="6JTO">
    <property type="method" value="X-ray"/>
    <property type="resolution" value="1.70 A"/>
    <property type="chains" value="B=21-118"/>
</dbReference>
<dbReference type="PDB" id="6JTP">
    <property type="method" value="X-ray"/>
    <property type="resolution" value="1.90 A"/>
    <property type="chains" value="B=21-118"/>
</dbReference>
<dbReference type="PDB" id="6K60">
    <property type="method" value="X-ray"/>
    <property type="resolution" value="3.15 A"/>
    <property type="chains" value="B/F=21-119"/>
</dbReference>
<dbReference type="PDB" id="6K7T">
    <property type="method" value="X-ray"/>
    <property type="resolution" value="1.60 A"/>
    <property type="chains" value="B=21-119"/>
</dbReference>
<dbReference type="PDB" id="6LA6">
    <property type="method" value="EM"/>
    <property type="resolution" value="2.39 A"/>
    <property type="chains" value="F=21-119"/>
</dbReference>
<dbReference type="PDB" id="6LA7">
    <property type="method" value="EM"/>
    <property type="resolution" value="2.82 A"/>
    <property type="chains" value="F=21-119"/>
</dbReference>
<dbReference type="PDB" id="6M1B">
    <property type="method" value="X-ray"/>
    <property type="resolution" value="1.88 A"/>
    <property type="chains" value="A=21-119"/>
</dbReference>
<dbReference type="PDB" id="6M24">
    <property type="method" value="X-ray"/>
    <property type="resolution" value="2.29 A"/>
    <property type="chains" value="B=21-119"/>
</dbReference>
<dbReference type="PDB" id="6M2J">
    <property type="method" value="X-ray"/>
    <property type="resolution" value="2.20 A"/>
    <property type="chains" value="B=21-119"/>
</dbReference>
<dbReference type="PDB" id="6M2K">
    <property type="method" value="X-ray"/>
    <property type="resolution" value="2.59 A"/>
    <property type="chains" value="B=21-119"/>
</dbReference>
<dbReference type="PDB" id="6MPP">
    <property type="method" value="NMR"/>
    <property type="chains" value="C=21-119"/>
</dbReference>
<dbReference type="PDB" id="6MT3">
    <property type="method" value="X-ray"/>
    <property type="resolution" value="1.21 A"/>
    <property type="chains" value="C=21-119"/>
</dbReference>
<dbReference type="PDB" id="6MT4">
    <property type="method" value="X-ray"/>
    <property type="resolution" value="1.55 A"/>
    <property type="chains" value="B=21-119"/>
</dbReference>
<dbReference type="PDB" id="6MT5">
    <property type="method" value="X-ray"/>
    <property type="resolution" value="1.55 A"/>
    <property type="chains" value="B=21-119"/>
</dbReference>
<dbReference type="PDB" id="6MT6">
    <property type="method" value="X-ray"/>
    <property type="resolution" value="1.31 A"/>
    <property type="chains" value="C=21-119"/>
</dbReference>
<dbReference type="PDB" id="6MTL">
    <property type="method" value="X-ray"/>
    <property type="resolution" value="1.35 A"/>
    <property type="chains" value="B=21-119"/>
</dbReference>
<dbReference type="PDB" id="6MTM">
    <property type="method" value="X-ray"/>
    <property type="resolution" value="3.00 A"/>
    <property type="chains" value="B=21-119"/>
</dbReference>
<dbReference type="PDB" id="6MWR">
    <property type="method" value="X-ray"/>
    <property type="resolution" value="3.30 A"/>
    <property type="chains" value="B=21-119"/>
</dbReference>
<dbReference type="PDB" id="6NCA">
    <property type="method" value="X-ray"/>
    <property type="resolution" value="3.30 A"/>
    <property type="chains" value="a/b/c/d/e/f/g/h/i/j/k/l/m/n/o/p/q/r/s/t=21-119"/>
</dbReference>
<dbReference type="PDB" id="6NHA">
    <property type="method" value="X-ray"/>
    <property type="resolution" value="2.38 A"/>
    <property type="chains" value="B=21-119"/>
</dbReference>
<dbReference type="PDB" id="6NPR">
    <property type="method" value="X-ray"/>
    <property type="resolution" value="2.37 A"/>
    <property type="chains" value="B/D=21-119"/>
</dbReference>
<dbReference type="PDB" id="6NUX">
    <property type="method" value="X-ray"/>
    <property type="resolution" value="2.20 A"/>
    <property type="chains" value="B=21-119"/>
</dbReference>
<dbReference type="PDB" id="6O4Y">
    <property type="method" value="X-ray"/>
    <property type="resolution" value="1.58 A"/>
    <property type="chains" value="B=21-119"/>
</dbReference>
<dbReference type="PDB" id="6O4Z">
    <property type="method" value="X-ray"/>
    <property type="resolution" value="1.50 A"/>
    <property type="chains" value="B=21-119"/>
</dbReference>
<dbReference type="PDB" id="6O51">
    <property type="method" value="X-ray"/>
    <property type="resolution" value="1.55 A"/>
    <property type="chains" value="B=21-119"/>
</dbReference>
<dbReference type="PDB" id="6O53">
    <property type="method" value="X-ray"/>
    <property type="resolution" value="1.40 A"/>
    <property type="chains" value="B=21-119"/>
</dbReference>
<dbReference type="PDB" id="6O9B">
    <property type="method" value="X-ray"/>
    <property type="resolution" value="2.20 A"/>
    <property type="chains" value="B=1-119"/>
</dbReference>
<dbReference type="PDB" id="6O9C">
    <property type="method" value="X-ray"/>
    <property type="resolution" value="2.45 A"/>
    <property type="chains" value="B=1-119"/>
</dbReference>
<dbReference type="PDB" id="6OPD">
    <property type="method" value="X-ray"/>
    <property type="resolution" value="1.79 A"/>
    <property type="chains" value="B=21-119"/>
</dbReference>
<dbReference type="PDB" id="6P23">
    <property type="method" value="X-ray"/>
    <property type="resolution" value="1.59 A"/>
    <property type="chains" value="B=21-119"/>
</dbReference>
<dbReference type="PDB" id="6P27">
    <property type="method" value="X-ray"/>
    <property type="resolution" value="1.59 A"/>
    <property type="chains" value="B=21-119"/>
</dbReference>
<dbReference type="PDB" id="6P2C">
    <property type="method" value="X-ray"/>
    <property type="resolution" value="1.40 A"/>
    <property type="chains" value="B=21-119"/>
</dbReference>
<dbReference type="PDB" id="6P2F">
    <property type="method" value="X-ray"/>
    <property type="resolution" value="1.48 A"/>
    <property type="chains" value="B=21-119"/>
</dbReference>
<dbReference type="PDB" id="6P2S">
    <property type="method" value="X-ray"/>
    <property type="resolution" value="1.65 A"/>
    <property type="chains" value="B=21-119"/>
</dbReference>
<dbReference type="PDB" id="6P64">
    <property type="method" value="X-ray"/>
    <property type="resolution" value="3.05 A"/>
    <property type="chains" value="B/G=21-119"/>
</dbReference>
<dbReference type="PDB" id="6PA1">
    <property type="method" value="X-ray"/>
    <property type="resolution" value="3.01 A"/>
    <property type="chains" value="B/F=21-119"/>
</dbReference>
<dbReference type="PDB" id="6PAG">
    <property type="method" value="X-ray"/>
    <property type="resolution" value="2.50 A"/>
    <property type="chains" value="B=21-119"/>
</dbReference>
<dbReference type="PDB" id="6PBH">
    <property type="method" value="X-ray"/>
    <property type="resolution" value="1.89 A"/>
    <property type="chains" value="B=21-119"/>
</dbReference>
<dbReference type="PDB" id="6PTB">
    <property type="method" value="X-ray"/>
    <property type="resolution" value="2.15 A"/>
    <property type="chains" value="B/E=21-119"/>
</dbReference>
<dbReference type="PDB" id="6PTE">
    <property type="method" value="X-ray"/>
    <property type="resolution" value="1.90 A"/>
    <property type="chains" value="B/F/I/L=21-119"/>
</dbReference>
<dbReference type="PDB" id="6PUC">
    <property type="method" value="X-ray"/>
    <property type="resolution" value="1.85 A"/>
    <property type="chains" value="B/F=21-119"/>
</dbReference>
<dbReference type="PDB" id="6PUD">
    <property type="method" value="X-ray"/>
    <property type="resolution" value="1.80 A"/>
    <property type="chains" value="B/F=21-119"/>
</dbReference>
<dbReference type="PDB" id="6PUE">
    <property type="method" value="X-ray"/>
    <property type="resolution" value="1.90 A"/>
    <property type="chains" value="B/F=21-119"/>
</dbReference>
<dbReference type="PDB" id="6PUF">
    <property type="method" value="X-ray"/>
    <property type="resolution" value="1.92 A"/>
    <property type="chains" value="B/F=21-119"/>
</dbReference>
<dbReference type="PDB" id="6PUG">
    <property type="method" value="X-ray"/>
    <property type="resolution" value="1.80 A"/>
    <property type="chains" value="B/F=21-119"/>
</dbReference>
<dbReference type="PDB" id="6PUH">
    <property type="method" value="X-ray"/>
    <property type="resolution" value="1.88 A"/>
    <property type="chains" value="F/H=21-119"/>
</dbReference>
<dbReference type="PDB" id="6PUI">
    <property type="method" value="X-ray"/>
    <property type="resolution" value="1.96 A"/>
    <property type="chains" value="F/H=21-119"/>
</dbReference>
<dbReference type="PDB" id="6PUJ">
    <property type="method" value="X-ray"/>
    <property type="resolution" value="1.92 A"/>
    <property type="chains" value="F/H=21-119"/>
</dbReference>
<dbReference type="PDB" id="6PUK">
    <property type="method" value="X-ray"/>
    <property type="resolution" value="2.08 A"/>
    <property type="chains" value="F/H=21-119"/>
</dbReference>
<dbReference type="PDB" id="6PUL">
    <property type="method" value="X-ray"/>
    <property type="resolution" value="1.84 A"/>
    <property type="chains" value="F/H=21-119"/>
</dbReference>
<dbReference type="PDB" id="6PUM">
    <property type="method" value="X-ray"/>
    <property type="resolution" value="1.96 A"/>
    <property type="chains" value="B/F=21-119"/>
</dbReference>
<dbReference type="PDB" id="6PVC">
    <property type="method" value="X-ray"/>
    <property type="resolution" value="1.96 A"/>
    <property type="chains" value="B/D=21-119"/>
</dbReference>
<dbReference type="PDB" id="6PVD">
    <property type="method" value="X-ray"/>
    <property type="resolution" value="2.14 A"/>
    <property type="chains" value="B/F=21-119"/>
</dbReference>
<dbReference type="PDB" id="6PYJ">
    <property type="method" value="X-ray"/>
    <property type="resolution" value="1.44 A"/>
    <property type="chains" value="B=21-119"/>
</dbReference>
<dbReference type="PDB" id="6PYL">
    <property type="method" value="X-ray"/>
    <property type="resolution" value="1.52 A"/>
    <property type="chains" value="B=21-119"/>
</dbReference>
<dbReference type="PDB" id="6PYV">
    <property type="method" value="X-ray"/>
    <property type="resolution" value="1.45 A"/>
    <property type="chains" value="B=21-119"/>
</dbReference>
<dbReference type="PDB" id="6PYW">
    <property type="method" value="X-ray"/>
    <property type="resolution" value="1.38 A"/>
    <property type="chains" value="B=21-119"/>
</dbReference>
<dbReference type="PDB" id="6PZ5">
    <property type="method" value="X-ray"/>
    <property type="resolution" value="1.53 A"/>
    <property type="chains" value="B=21-119"/>
</dbReference>
<dbReference type="PDB" id="6Q3K">
    <property type="method" value="X-ray"/>
    <property type="resolution" value="1.50 A"/>
    <property type="chains" value="B=21-119"/>
</dbReference>
<dbReference type="PDB" id="6Q3S">
    <property type="method" value="X-ray"/>
    <property type="resolution" value="2.50 A"/>
    <property type="chains" value="B=21-119"/>
</dbReference>
<dbReference type="PDB" id="6QIO">
    <property type="method" value="X-ray"/>
    <property type="resolution" value="1.95 A"/>
    <property type="chains" value="C=21-119"/>
</dbReference>
<dbReference type="PDB" id="6QIP">
    <property type="method" value="X-ray"/>
    <property type="resolution" value="2.45 A"/>
    <property type="chains" value="C=21-119"/>
</dbReference>
<dbReference type="PDB" id="6R2L">
    <property type="method" value="X-ray"/>
    <property type="resolution" value="2.30 A"/>
    <property type="chains" value="B=21-119"/>
</dbReference>
<dbReference type="PDB" id="6RP9">
    <property type="method" value="X-ray"/>
    <property type="resolution" value="3.12 A"/>
    <property type="chains" value="B/G=21-119"/>
</dbReference>
<dbReference type="PDB" id="6RPA">
    <property type="method" value="X-ray"/>
    <property type="resolution" value="2.56 A"/>
    <property type="chains" value="B=21-119"/>
</dbReference>
<dbReference type="PDB" id="6RPB">
    <property type="method" value="X-ray"/>
    <property type="resolution" value="2.50 A"/>
    <property type="chains" value="B/G/L/Q=21-119"/>
</dbReference>
<dbReference type="PDB" id="6RSY">
    <property type="method" value="X-ray"/>
    <property type="resolution" value="2.95 A"/>
    <property type="chains" value="B/G=21-119"/>
</dbReference>
<dbReference type="PDB" id="6SS7">
    <property type="method" value="X-ray"/>
    <property type="resolution" value="2.50 A"/>
    <property type="chains" value="B/E=21-119"/>
</dbReference>
<dbReference type="PDB" id="6SS8">
    <property type="method" value="X-ray"/>
    <property type="resolution" value="2.24 A"/>
    <property type="chains" value="B/E=21-119"/>
</dbReference>
<dbReference type="PDB" id="6SS9">
    <property type="method" value="X-ray"/>
    <property type="resolution" value="2.70 A"/>
    <property type="chains" value="B/E=21-119"/>
</dbReference>
<dbReference type="PDB" id="6SSA">
    <property type="method" value="X-ray"/>
    <property type="resolution" value="2.11 A"/>
    <property type="chains" value="B/E/H/K=21-119"/>
</dbReference>
<dbReference type="PDB" id="6TDO">
    <property type="method" value="X-ray"/>
    <property type="resolution" value="1.65 A"/>
    <property type="chains" value="B=21-119"/>
</dbReference>
<dbReference type="PDB" id="6TDP">
    <property type="method" value="X-ray"/>
    <property type="resolution" value="1.40 A"/>
    <property type="chains" value="B=21-119"/>
</dbReference>
<dbReference type="PDB" id="6TDQ">
    <property type="method" value="X-ray"/>
    <property type="resolution" value="1.60 A"/>
    <property type="chains" value="B/D=21-119"/>
</dbReference>
<dbReference type="PDB" id="6TDR">
    <property type="method" value="X-ray"/>
    <property type="resolution" value="1.75 A"/>
    <property type="chains" value="B/D=21-119"/>
</dbReference>
<dbReference type="PDB" id="6TDS">
    <property type="method" value="X-ray"/>
    <property type="resolution" value="1.70 A"/>
    <property type="chains" value="B/D=21-119"/>
</dbReference>
<dbReference type="PDB" id="6TMO">
    <property type="method" value="X-ray"/>
    <property type="resolution" value="2.10 A"/>
    <property type="chains" value="B=21-119"/>
</dbReference>
<dbReference type="PDB" id="6TRN">
    <property type="method" value="X-ray"/>
    <property type="resolution" value="1.35 A"/>
    <property type="chains" value="B=21-119"/>
</dbReference>
<dbReference type="PDB" id="6TRO">
    <property type="method" value="X-ray"/>
    <property type="resolution" value="3.00 A"/>
    <property type="chains" value="B=21-119"/>
</dbReference>
<dbReference type="PDB" id="6UJ7">
    <property type="method" value="X-ray"/>
    <property type="resolution" value="1.90 A"/>
    <property type="chains" value="B/E=1-119"/>
</dbReference>
<dbReference type="PDB" id="6UJ8">
    <property type="method" value="X-ray"/>
    <property type="resolution" value="2.25 A"/>
    <property type="chains" value="B/E=1-119"/>
</dbReference>
<dbReference type="PDB" id="6UJ9">
    <property type="method" value="X-ray"/>
    <property type="resolution" value="2.90 A"/>
    <property type="chains" value="B=1-119"/>
</dbReference>
<dbReference type="PDB" id="6UJO">
    <property type="method" value="X-ray"/>
    <property type="resolution" value="2.25 A"/>
    <property type="chains" value="B=21-119"/>
</dbReference>
<dbReference type="PDB" id="6UJQ">
    <property type="method" value="X-ray"/>
    <property type="resolution" value="2.55 A"/>
    <property type="chains" value="B=21-119"/>
</dbReference>
<dbReference type="PDB" id="6UK2">
    <property type="method" value="X-ray"/>
    <property type="resolution" value="3.14 A"/>
    <property type="chains" value="B=21-119"/>
</dbReference>
<dbReference type="PDB" id="6UK4">
    <property type="method" value="X-ray"/>
    <property type="resolution" value="2.70 A"/>
    <property type="chains" value="B=21-119"/>
</dbReference>
<dbReference type="PDB" id="6ULI">
    <property type="method" value="X-ray"/>
    <property type="resolution" value="1.88 A"/>
    <property type="chains" value="B=21-119"/>
</dbReference>
<dbReference type="PDB" id="6ULK">
    <property type="method" value="X-ray"/>
    <property type="resolution" value="1.90 A"/>
    <property type="chains" value="B=21-119"/>
</dbReference>
<dbReference type="PDB" id="6ULN">
    <property type="method" value="X-ray"/>
    <property type="resolution" value="2.01 A"/>
    <property type="chains" value="B=21-119"/>
</dbReference>
<dbReference type="PDB" id="6ULR">
    <property type="method" value="X-ray"/>
    <property type="resolution" value="3.20 A"/>
    <property type="chains" value="B=21-119"/>
</dbReference>
<dbReference type="PDB" id="6UON">
    <property type="method" value="X-ray"/>
    <property type="resolution" value="3.50 A"/>
    <property type="chains" value="B/E=21-119"/>
</dbReference>
<dbReference type="PDB" id="6UZ1">
    <property type="method" value="X-ray"/>
    <property type="resolution" value="3.14 A"/>
    <property type="chains" value="B/G=21-119"/>
</dbReference>
<dbReference type="PDB" id="6UZM">
    <property type="method" value="X-ray"/>
    <property type="resolution" value="1.80 A"/>
    <property type="chains" value="B=21-119"/>
</dbReference>
<dbReference type="PDB" id="6UZN">
    <property type="method" value="X-ray"/>
    <property type="resolution" value="2.22 A"/>
    <property type="chains" value="B=21-119"/>
</dbReference>
<dbReference type="PDB" id="6UZO">
    <property type="method" value="X-ray"/>
    <property type="resolution" value="2.35 A"/>
    <property type="chains" value="B=21-119"/>
</dbReference>
<dbReference type="PDB" id="6UZP">
    <property type="method" value="X-ray"/>
    <property type="resolution" value="2.08 A"/>
    <property type="chains" value="B=21-119"/>
</dbReference>
<dbReference type="PDB" id="6UZQ">
    <property type="method" value="X-ray"/>
    <property type="resolution" value="2.40 A"/>
    <property type="chains" value="B=21-119"/>
</dbReference>
<dbReference type="PDB" id="6UZS">
    <property type="method" value="X-ray"/>
    <property type="resolution" value="1.90 A"/>
    <property type="chains" value="B=21-119"/>
</dbReference>
<dbReference type="PDB" id="6V2O">
    <property type="method" value="X-ray"/>
    <property type="resolution" value="1.27 A"/>
    <property type="chains" value="B=21-119"/>
</dbReference>
<dbReference type="PDB" id="6V2P">
    <property type="method" value="X-ray"/>
    <property type="resolution" value="1.30 A"/>
    <property type="chains" value="B=21-119"/>
</dbReference>
<dbReference type="PDB" id="6V2Q">
    <property type="method" value="X-ray"/>
    <property type="resolution" value="1.60 A"/>
    <property type="chains" value="B=21-119"/>
</dbReference>
<dbReference type="PDB" id="6V3J">
    <property type="method" value="X-ray"/>
    <property type="resolution" value="1.98 A"/>
    <property type="chains" value="B=21-119"/>
</dbReference>
<dbReference type="PDB" id="6V7Y">
    <property type="method" value="X-ray"/>
    <property type="resolution" value="2.40 A"/>
    <property type="chains" value="B=21-119"/>
</dbReference>
<dbReference type="PDB" id="6V7Z">
    <property type="method" value="X-ray"/>
    <property type="resolution" value="2.75 A"/>
    <property type="chains" value="B/D=21-119"/>
</dbReference>
<dbReference type="PDB" id="6V80">
    <property type="method" value="X-ray"/>
    <property type="resolution" value="3.53 A"/>
    <property type="chains" value="B/G=21-119"/>
</dbReference>
<dbReference type="PDB" id="6VB0">
    <property type="method" value="X-ray"/>
    <property type="resolution" value="1.90 A"/>
    <property type="chains" value="B=21-119"/>
</dbReference>
<dbReference type="PDB" id="6VB1">
    <property type="method" value="X-ray"/>
    <property type="resolution" value="1.75 A"/>
    <property type="chains" value="B=21-119"/>
</dbReference>
<dbReference type="PDB" id="6VB2">
    <property type="method" value="X-ray"/>
    <property type="resolution" value="1.41 A"/>
    <property type="chains" value="B=22-117"/>
</dbReference>
<dbReference type="PDB" id="6VB3">
    <property type="method" value="X-ray"/>
    <property type="resolution" value="2.00 A"/>
    <property type="chains" value="B=21-119"/>
</dbReference>
<dbReference type="PDB" id="6VB4">
    <property type="method" value="X-ray"/>
    <property type="resolution" value="2.33 A"/>
    <property type="chains" value="B=21-118"/>
</dbReference>
<dbReference type="PDB" id="6VB5">
    <property type="method" value="X-ray"/>
    <property type="resolution" value="2.15 A"/>
    <property type="chains" value="B=21-118"/>
</dbReference>
<dbReference type="PDB" id="6VB6">
    <property type="method" value="X-ray"/>
    <property type="resolution" value="2.15 A"/>
    <property type="chains" value="B=21-119"/>
</dbReference>
<dbReference type="PDB" id="6VB7">
    <property type="method" value="X-ray"/>
    <property type="resolution" value="2.10 A"/>
    <property type="chains" value="B=21-119"/>
</dbReference>
<dbReference type="PDB" id="6VIU">
    <property type="method" value="X-ray"/>
    <property type="resolution" value="2.33 A"/>
    <property type="chains" value="B=21-119"/>
</dbReference>
<dbReference type="PDB" id="6VM7">
    <property type="method" value="X-ray"/>
    <property type="resolution" value="2.41 A"/>
    <property type="chains" value="B=21-119"/>
</dbReference>
<dbReference type="PDB" id="6VM8">
    <property type="method" value="X-ray"/>
    <property type="resolution" value="2.41 A"/>
    <property type="chains" value="B=21-119"/>
</dbReference>
<dbReference type="PDB" id="6VM9">
    <property type="method" value="X-ray"/>
    <property type="resolution" value="2.90 A"/>
    <property type="chains" value="B=21-119"/>
</dbReference>
<dbReference type="PDB" id="6VMA">
    <property type="method" value="X-ray"/>
    <property type="resolution" value="2.75 A"/>
    <property type="chains" value="B=21-119"/>
</dbReference>
<dbReference type="PDB" id="6VMC">
    <property type="method" value="X-ray"/>
    <property type="resolution" value="2.85 A"/>
    <property type="chains" value="B=21-119"/>
</dbReference>
<dbReference type="PDB" id="6VMX">
    <property type="method" value="X-ray"/>
    <property type="resolution" value="3.10 A"/>
    <property type="chains" value="B/G=21-119"/>
</dbReference>
<dbReference type="PDB" id="6VPZ">
    <property type="method" value="X-ray"/>
    <property type="resolution" value="2.10 A"/>
    <property type="chains" value="B=21-119"/>
</dbReference>
<dbReference type="PDB" id="6VQ2">
    <property type="method" value="X-ray"/>
    <property type="resolution" value="2.25 A"/>
    <property type="chains" value="B=21-119"/>
</dbReference>
<dbReference type="PDB" id="6VQD">
    <property type="method" value="X-ray"/>
    <property type="resolution" value="1.88 A"/>
    <property type="chains" value="B=21-119"/>
</dbReference>
<dbReference type="PDB" id="6VQE">
    <property type="method" value="X-ray"/>
    <property type="resolution" value="1.77 A"/>
    <property type="chains" value="B=21-119"/>
</dbReference>
<dbReference type="PDB" id="6VQO">
    <property type="method" value="X-ray"/>
    <property type="resolution" value="3.00 A"/>
    <property type="chains" value="B/G=21-119"/>
</dbReference>
<dbReference type="PDB" id="6VQY">
    <property type="method" value="X-ray"/>
    <property type="resolution" value="2.57 A"/>
    <property type="chains" value="B/D=21-119"/>
</dbReference>
<dbReference type="PDB" id="6VQZ">
    <property type="method" value="X-ray"/>
    <property type="resolution" value="2.25 A"/>
    <property type="chains" value="B/D=21-119"/>
</dbReference>
<dbReference type="PDB" id="6VR1">
    <property type="method" value="X-ray"/>
    <property type="resolution" value="2.37 A"/>
    <property type="chains" value="B/E=21-119"/>
</dbReference>
<dbReference type="PDB" id="6VR5">
    <property type="method" value="X-ray"/>
    <property type="resolution" value="2.38 A"/>
    <property type="chains" value="B/E=21-119"/>
</dbReference>
<dbReference type="PDB" id="6VRM">
    <property type="method" value="X-ray"/>
    <property type="resolution" value="2.61 A"/>
    <property type="chains" value="B=21-119"/>
</dbReference>
<dbReference type="PDB" id="6VRN">
    <property type="method" value="X-ray"/>
    <property type="resolution" value="2.46 A"/>
    <property type="chains" value="B=21-119"/>
</dbReference>
<dbReference type="PDB" id="6W51">
    <property type="method" value="X-ray"/>
    <property type="resolution" value="3.53 A"/>
    <property type="chains" value="B/E/H/K=1-119"/>
</dbReference>
<dbReference type="PDB" id="6W9U">
    <property type="method" value="X-ray"/>
    <property type="resolution" value="1.89 A"/>
    <property type="chains" value="B/F=21-119"/>
</dbReference>
<dbReference type="PDB" id="6W9V">
    <property type="method" value="X-ray"/>
    <property type="resolution" value="1.95 A"/>
    <property type="chains" value="B/F=21-119"/>
</dbReference>
<dbReference type="PDB" id="6WNA">
    <property type="method" value="X-ray"/>
    <property type="resolution" value="2.40 A"/>
    <property type="chains" value="B=21-119"/>
</dbReference>
<dbReference type="PDB" id="6WOL">
    <property type="method" value="X-ray"/>
    <property type="resolution" value="2.49 A"/>
    <property type="chains" value="B=21-119"/>
</dbReference>
<dbReference type="PDB" id="6WZY">
    <property type="method" value="X-ray"/>
    <property type="resolution" value="1.50 A"/>
    <property type="chains" value="B=21-119"/>
</dbReference>
<dbReference type="PDB" id="6X00">
    <property type="method" value="X-ray"/>
    <property type="resolution" value="1.55 A"/>
    <property type="chains" value="B=21-119"/>
</dbReference>
<dbReference type="PDB" id="6XQA">
    <property type="method" value="X-ray"/>
    <property type="resolution" value="2.16 A"/>
    <property type="chains" value="B/E=21-119"/>
</dbReference>
<dbReference type="PDB" id="6XQP">
    <property type="method" value="X-ray"/>
    <property type="resolution" value="2.90 A"/>
    <property type="chains" value="B/D=21-119"/>
</dbReference>
<dbReference type="PDB" id="6Y26">
    <property type="method" value="X-ray"/>
    <property type="resolution" value="1.20 A"/>
    <property type="chains" value="B=21-119"/>
</dbReference>
<dbReference type="PDB" id="6Y27">
    <property type="method" value="X-ray"/>
    <property type="resolution" value="1.38 A"/>
    <property type="chains" value="B=21-119"/>
</dbReference>
<dbReference type="PDB" id="6Y28">
    <property type="method" value="X-ray"/>
    <property type="resolution" value="1.69 A"/>
    <property type="chains" value="B=21-119"/>
</dbReference>
<dbReference type="PDB" id="6Y29">
    <property type="method" value="X-ray"/>
    <property type="resolution" value="1.28 A"/>
    <property type="chains" value="B=21-119"/>
</dbReference>
<dbReference type="PDB" id="6Y2A">
    <property type="method" value="X-ray"/>
    <property type="resolution" value="1.25 A"/>
    <property type="chains" value="B=21-119"/>
</dbReference>
<dbReference type="PDB" id="6Y2B">
    <property type="method" value="X-ray"/>
    <property type="resolution" value="1.37 A"/>
    <property type="chains" value="B=21-119"/>
</dbReference>
<dbReference type="PDB" id="6Z9V">
    <property type="method" value="X-ray"/>
    <property type="resolution" value="2.01 A"/>
    <property type="chains" value="B/E=21-119"/>
</dbReference>
<dbReference type="PDB" id="6Z9W">
    <property type="method" value="X-ray"/>
    <property type="resolution" value="2.70 A"/>
    <property type="chains" value="B/E=21-119"/>
</dbReference>
<dbReference type="PDB" id="6Z9X">
    <property type="method" value="X-ray"/>
    <property type="resolution" value="2.68 A"/>
    <property type="chains" value="B/E=21-119"/>
</dbReference>
<dbReference type="PDB" id="6ZKW">
    <property type="method" value="X-ray"/>
    <property type="resolution" value="2.26 A"/>
    <property type="chains" value="B=21-119"/>
</dbReference>
<dbReference type="PDB" id="6ZKX">
    <property type="method" value="X-ray"/>
    <property type="resolution" value="2.17 A"/>
    <property type="chains" value="B=21-119"/>
</dbReference>
<dbReference type="PDB" id="6ZKY">
    <property type="method" value="X-ray"/>
    <property type="resolution" value="2.65 A"/>
    <property type="chains" value="B=21-119"/>
</dbReference>
<dbReference type="PDB" id="6ZKZ">
    <property type="method" value="X-ray"/>
    <property type="resolution" value="2.30 A"/>
    <property type="chains" value="B=21-119"/>
</dbReference>
<dbReference type="PDB" id="7AFV">
    <property type="method" value="X-ray"/>
    <property type="resolution" value="2.40 A"/>
    <property type="chains" value="A/B=27-116"/>
</dbReference>
<dbReference type="PDB" id="7ALO">
    <property type="method" value="X-ray"/>
    <property type="resolution" value="1.80 A"/>
    <property type="chains" value="B/E=21-119"/>
</dbReference>
<dbReference type="PDB" id="7B5F">
    <property type="method" value="EM"/>
    <property type="resolution" value="2.90 A"/>
    <property type="chains" value="H=21-119"/>
</dbReference>
<dbReference type="PDB" id="7BBG">
    <property type="method" value="X-ray"/>
    <property type="resolution" value="2.64 A"/>
    <property type="chains" value="B=21-119"/>
</dbReference>
<dbReference type="PDB" id="7BH8">
    <property type="method" value="X-ray"/>
    <property type="resolution" value="1.80 A"/>
    <property type="chains" value="B/D=21-119"/>
</dbReference>
<dbReference type="PDB" id="7C9V">
    <property type="method" value="EM"/>
    <property type="resolution" value="3.30 A"/>
    <property type="chains" value="F=21-119"/>
</dbReference>
<dbReference type="PDB" id="7CIQ">
    <property type="method" value="X-ray"/>
    <property type="resolution" value="1.59 A"/>
    <property type="chains" value="B=21-119"/>
</dbReference>
<dbReference type="PDB" id="7CIR">
    <property type="method" value="X-ray"/>
    <property type="resolution" value="1.81 A"/>
    <property type="chains" value="B=21-119"/>
</dbReference>
<dbReference type="PDB" id="7CIS">
    <property type="method" value="X-ray"/>
    <property type="resolution" value="2.10 A"/>
    <property type="chains" value="B=21-119"/>
</dbReference>
<dbReference type="PDB" id="7DUU">
    <property type="method" value="X-ray"/>
    <property type="resolution" value="2.51 A"/>
    <property type="chains" value="B=21-119"/>
</dbReference>
<dbReference type="PDB" id="7DYN">
    <property type="method" value="X-ray"/>
    <property type="resolution" value="2.00 A"/>
    <property type="chains" value="B=21-119"/>
</dbReference>
<dbReference type="PDB" id="7DZM">
    <property type="method" value="X-ray"/>
    <property type="resolution" value="2.25 A"/>
    <property type="chains" value="B=21-119"/>
</dbReference>
<dbReference type="PDB" id="7DZN">
    <property type="method" value="X-ray"/>
    <property type="resolution" value="2.63 A"/>
    <property type="chains" value="B=21-119"/>
</dbReference>
<dbReference type="PDB" id="7EDO">
    <property type="method" value="X-ray"/>
    <property type="resolution" value="2.70 A"/>
    <property type="chains" value="B/E=21-119"/>
</dbReference>
<dbReference type="PDB" id="7EJL">
    <property type="method" value="X-ray"/>
    <property type="resolution" value="1.89 A"/>
    <property type="chains" value="B=21-119"/>
</dbReference>
<dbReference type="PDB" id="7EJM">
    <property type="method" value="X-ray"/>
    <property type="resolution" value="1.71 A"/>
    <property type="chains" value="B=21-119"/>
</dbReference>
<dbReference type="PDB" id="7EJN">
    <property type="method" value="X-ray"/>
    <property type="resolution" value="2.11 A"/>
    <property type="chains" value="B=21-119"/>
</dbReference>
<dbReference type="PDB" id="7EU2">
    <property type="method" value="X-ray"/>
    <property type="resolution" value="2.80 A"/>
    <property type="chains" value="B/E=21-119"/>
</dbReference>
<dbReference type="PDB" id="7F4W">
    <property type="method" value="X-ray"/>
    <property type="resolution" value="2.90 A"/>
    <property type="chains" value="B/D=21-119"/>
</dbReference>
<dbReference type="PDB" id="7JWI">
    <property type="method" value="X-ray"/>
    <property type="resolution" value="3.02 A"/>
    <property type="chains" value="B=21-119"/>
</dbReference>
<dbReference type="PDB" id="7JYU">
    <property type="method" value="X-ray"/>
    <property type="resolution" value="2.75 A"/>
    <property type="chains" value="B/E=21-119"/>
</dbReference>
<dbReference type="PDB" id="7JYV">
    <property type="method" value="X-ray"/>
    <property type="resolution" value="1.51 A"/>
    <property type="chains" value="B=21-119"/>
</dbReference>
<dbReference type="PDB" id="7JYW">
    <property type="method" value="X-ray"/>
    <property type="resolution" value="2.90 A"/>
    <property type="chains" value="B=21-119"/>
</dbReference>
<dbReference type="PDB" id="7JYX">
    <property type="method" value="X-ray"/>
    <property type="resolution" value="2.95 A"/>
    <property type="chains" value="B/E=21-119"/>
</dbReference>
<dbReference type="PDB" id="7K80">
    <property type="method" value="X-ray"/>
    <property type="resolution" value="2.40 A"/>
    <property type="chains" value="B/E=21-119"/>
</dbReference>
<dbReference type="PDB" id="7K81">
    <property type="method" value="X-ray"/>
    <property type="resolution" value="2.00 A"/>
    <property type="chains" value="B=21-119"/>
</dbReference>
<dbReference type="PDB" id="7KGO">
    <property type="method" value="X-ray"/>
    <property type="resolution" value="2.15 A"/>
    <property type="chains" value="B=21-119"/>
</dbReference>
<dbReference type="PDB" id="7KGP">
    <property type="method" value="X-ray"/>
    <property type="resolution" value="1.40 A"/>
    <property type="chains" value="B=21-119"/>
</dbReference>
<dbReference type="PDB" id="7KGQ">
    <property type="method" value="X-ray"/>
    <property type="resolution" value="1.34 A"/>
    <property type="chains" value="B=21-119"/>
</dbReference>
<dbReference type="PDB" id="7KGR">
    <property type="method" value="X-ray"/>
    <property type="resolution" value="1.55 A"/>
    <property type="chains" value="B=21-119"/>
</dbReference>
<dbReference type="PDB" id="7KGS">
    <property type="method" value="X-ray"/>
    <property type="resolution" value="1.58 A"/>
    <property type="chains" value="B=21-119"/>
</dbReference>
<dbReference type="PDB" id="7KGT">
    <property type="method" value="X-ray"/>
    <property type="resolution" value="1.90 A"/>
    <property type="chains" value="B=21-119"/>
</dbReference>
<dbReference type="PDB" id="7KOZ">
    <property type="method" value="X-ray"/>
    <property type="resolution" value="2.25 A"/>
    <property type="chains" value="B=20-119"/>
</dbReference>
<dbReference type="PDB" id="7KP0">
    <property type="method" value="X-ray"/>
    <property type="resolution" value="2.40 A"/>
    <property type="chains" value="B=20-119"/>
</dbReference>
<dbReference type="PDB" id="7KP1">
    <property type="method" value="X-ray"/>
    <property type="resolution" value="2.02 A"/>
    <property type="chains" value="B=20-119"/>
</dbReference>
<dbReference type="PDB" id="7L1B">
    <property type="method" value="X-ray"/>
    <property type="resolution" value="2.04 A"/>
    <property type="chains" value="B=21-119"/>
</dbReference>
<dbReference type="PDB" id="7L1C">
    <property type="method" value="X-ray"/>
    <property type="resolution" value="1.96 A"/>
    <property type="chains" value="B=21-119"/>
</dbReference>
<dbReference type="PDB" id="7L1D">
    <property type="method" value="X-ray"/>
    <property type="resolution" value="3.11 A"/>
    <property type="chains" value="B=21-119"/>
</dbReference>
<dbReference type="PDB" id="7LFZ">
    <property type="method" value="X-ray"/>
    <property type="resolution" value="1.90 A"/>
    <property type="chains" value="B=21-119"/>
</dbReference>
<dbReference type="PDB" id="7LG0">
    <property type="method" value="X-ray"/>
    <property type="resolution" value="2.30 A"/>
    <property type="chains" value="B=21-119"/>
</dbReference>
<dbReference type="PDB" id="7LG2">
    <property type="method" value="X-ray"/>
    <property type="resolution" value="2.40 A"/>
    <property type="chains" value="B=21-119"/>
</dbReference>
<dbReference type="PDB" id="7LG3">
    <property type="method" value="X-ray"/>
    <property type="resolution" value="2.30 A"/>
    <property type="chains" value="B=21-119"/>
</dbReference>
<dbReference type="PDB" id="7LGD">
    <property type="method" value="X-ray"/>
    <property type="resolution" value="2.88 A"/>
    <property type="chains" value="B/D=21-119"/>
</dbReference>
<dbReference type="PDB" id="7LGT">
    <property type="method" value="X-ray"/>
    <property type="resolution" value="1.97 A"/>
    <property type="chains" value="B/D=21-119"/>
</dbReference>
<dbReference type="PDB" id="7LLI">
    <property type="method" value="X-ray"/>
    <property type="resolution" value="3.20 A"/>
    <property type="chains" value="B/D=21-119"/>
</dbReference>
<dbReference type="PDB" id="7LLJ">
    <property type="method" value="X-ray"/>
    <property type="resolution" value="3.15 A"/>
    <property type="chains" value="D/F=21-119"/>
</dbReference>
<dbReference type="PDB" id="7M8S">
    <property type="method" value="X-ray"/>
    <property type="resolution" value="2.35 A"/>
    <property type="chains" value="B/E=21-119"/>
</dbReference>
<dbReference type="PDB" id="7M8T">
    <property type="method" value="X-ray"/>
    <property type="resolution" value="1.50 A"/>
    <property type="chains" value="B=21-119"/>
</dbReference>
<dbReference type="PDB" id="7M8U">
    <property type="method" value="X-ray"/>
    <property type="resolution" value="1.45 A"/>
    <property type="chains" value="B=21-119"/>
</dbReference>
<dbReference type="PDB" id="7MJ6">
    <property type="method" value="X-ray"/>
    <property type="resolution" value="1.95 A"/>
    <property type="chains" value="B=21-119"/>
</dbReference>
<dbReference type="PDB" id="7MJ7">
    <property type="method" value="X-ray"/>
    <property type="resolution" value="1.60 A"/>
    <property type="chains" value="B=21-119"/>
</dbReference>
<dbReference type="PDB" id="7MJ8">
    <property type="method" value="X-ray"/>
    <property type="resolution" value="1.79 A"/>
    <property type="chains" value="B=21-119"/>
</dbReference>
<dbReference type="PDB" id="7MJ9">
    <property type="method" value="X-ray"/>
    <property type="resolution" value="1.75 A"/>
    <property type="chains" value="B=21-119"/>
</dbReference>
<dbReference type="PDB" id="7MJA">
    <property type="method" value="X-ray"/>
    <property type="resolution" value="1.69 A"/>
    <property type="chains" value="B=21-119"/>
</dbReference>
<dbReference type="PDB" id="7MKB">
    <property type="method" value="X-ray"/>
    <property type="resolution" value="1.90 A"/>
    <property type="chains" value="B=21-119"/>
</dbReference>
<dbReference type="PDB" id="7MLE">
    <property type="method" value="X-ray"/>
    <property type="resolution" value="2.20 A"/>
    <property type="chains" value="B=21-119"/>
</dbReference>
<dbReference type="PDB" id="7MX4">
    <property type="method" value="X-ray"/>
    <property type="resolution" value="1.73 A"/>
    <property type="chains" value="B=20-119"/>
</dbReference>
<dbReference type="PDB" id="7MXF">
    <property type="method" value="X-ray"/>
    <property type="resolution" value="2.00 A"/>
    <property type="chains" value="B=20-119"/>
</dbReference>
<dbReference type="PDB" id="7MXH">
    <property type="method" value="X-ray"/>
    <property type="resolution" value="2.11 A"/>
    <property type="chains" value="B=20-119"/>
</dbReference>
<dbReference type="PDB" id="7N1A">
    <property type="method" value="X-ray"/>
    <property type="resolution" value="2.06 A"/>
    <property type="chains" value="B/E=21-119"/>
</dbReference>
<dbReference type="PDB" id="7N1B">
    <property type="method" value="X-ray"/>
    <property type="resolution" value="2.81 A"/>
    <property type="chains" value="B/E=21-119"/>
</dbReference>
<dbReference type="PDB" id="7N1E">
    <property type="method" value="X-ray"/>
    <property type="resolution" value="2.30 A"/>
    <property type="chains" value="B=21-119"/>
</dbReference>
<dbReference type="PDB" id="7N1F">
    <property type="method" value="X-ray"/>
    <property type="resolution" value="2.39 A"/>
    <property type="chains" value="B=21-119"/>
</dbReference>
<dbReference type="PDB" id="7N2N">
    <property type="method" value="X-ray"/>
    <property type="resolution" value="2.60 A"/>
    <property type="chains" value="B=21-119"/>
</dbReference>
<dbReference type="PDB" id="7N2O">
    <property type="method" value="X-ray"/>
    <property type="resolution" value="2.30 A"/>
    <property type="chains" value="B=21-119"/>
</dbReference>
<dbReference type="PDB" id="7N2P">
    <property type="method" value="X-ray"/>
    <property type="resolution" value="2.50 A"/>
    <property type="chains" value="B=21-119"/>
</dbReference>
<dbReference type="PDB" id="7N2Q">
    <property type="method" value="X-ray"/>
    <property type="resolution" value="2.70 A"/>
    <property type="chains" value="B/I=21-119"/>
</dbReference>
<dbReference type="PDB" id="7N2R">
    <property type="method" value="X-ray"/>
    <property type="resolution" value="2.28 A"/>
    <property type="chains" value="B=21-119"/>
</dbReference>
<dbReference type="PDB" id="7N2S">
    <property type="method" value="X-ray"/>
    <property type="resolution" value="2.37 A"/>
    <property type="chains" value="B=21-119"/>
</dbReference>
<dbReference type="PDB" id="7N4K">
    <property type="method" value="X-ray"/>
    <property type="resolution" value="1.85 A"/>
    <property type="chains" value="B=21-119"/>
</dbReference>
<dbReference type="PDB" id="7N5C">
    <property type="method" value="X-ray"/>
    <property type="resolution" value="1.87 A"/>
    <property type="chains" value="B=21-119"/>
</dbReference>
<dbReference type="PDB" id="7N5P">
    <property type="method" value="X-ray"/>
    <property type="resolution" value="2.09 A"/>
    <property type="chains" value="B=21-119"/>
</dbReference>
<dbReference type="PDB" id="7N5Q">
    <property type="method" value="X-ray"/>
    <property type="resolution" value="1.76 A"/>
    <property type="chains" value="B/G=21-119"/>
</dbReference>
<dbReference type="PDB" id="7N6D">
    <property type="method" value="X-ray"/>
    <property type="resolution" value="2.30 A"/>
    <property type="chains" value="B/F/J/N=21-119"/>
</dbReference>
<dbReference type="PDB" id="7N6E">
    <property type="method" value="X-ray"/>
    <property type="resolution" value="3.20 A"/>
    <property type="chains" value="B/E=21-119"/>
</dbReference>
<dbReference type="PDB" id="7N9J">
    <property type="method" value="X-ray"/>
    <property type="resolution" value="1.74 A"/>
    <property type="chains" value="B=21-119"/>
</dbReference>
<dbReference type="PDB" id="7NA5">
    <property type="method" value="X-ray"/>
    <property type="resolution" value="2.50 A"/>
    <property type="chains" value="B=21-119"/>
</dbReference>
<dbReference type="PDB" id="7NDQ">
    <property type="method" value="X-ray"/>
    <property type="resolution" value="2.55 A"/>
    <property type="chains" value="BBB=21-119"/>
</dbReference>
<dbReference type="PDB" id="7NDT">
    <property type="method" value="X-ray"/>
    <property type="resolution" value="3.00 A"/>
    <property type="chains" value="BBB/GGG=21-119"/>
</dbReference>
<dbReference type="PDB" id="7NDU">
    <property type="method" value="X-ray"/>
    <property type="resolution" value="2.90 A"/>
    <property type="chains" value="BBB=21-119"/>
</dbReference>
<dbReference type="PDB" id="7NMC">
    <property type="method" value="X-ray"/>
    <property type="resolution" value="1.20 A"/>
    <property type="chains" value="AAA=21-119"/>
</dbReference>
<dbReference type="PDB" id="7NMD">
    <property type="method" value="X-ray"/>
    <property type="resolution" value="2.25 A"/>
    <property type="chains" value="B/E=21-119"/>
</dbReference>
<dbReference type="PDB" id="7NME">
    <property type="method" value="X-ray"/>
    <property type="resolution" value="2.20 A"/>
    <property type="chains" value="B=21-119"/>
</dbReference>
<dbReference type="PDB" id="7NMF">
    <property type="method" value="X-ray"/>
    <property type="resolution" value="2.98 A"/>
    <property type="chains" value="B=21-119"/>
</dbReference>
<dbReference type="PDB" id="7NMG">
    <property type="method" value="X-ray"/>
    <property type="resolution" value="2.48 A"/>
    <property type="chains" value="B=21-119"/>
</dbReference>
<dbReference type="PDB" id="7NMO">
    <property type="method" value="X-ray"/>
    <property type="resolution" value="1.20 A"/>
    <property type="chains" value="AAA=21-119"/>
</dbReference>
<dbReference type="PDB" id="7NMR">
    <property type="method" value="X-ray"/>
    <property type="resolution" value="1.15 A"/>
    <property type="chains" value="AAA=21-117"/>
</dbReference>
<dbReference type="PDB" id="7NMT">
    <property type="method" value="X-ray"/>
    <property type="resolution" value="1.20 A"/>
    <property type="chains" value="AAA=21-119"/>
</dbReference>
<dbReference type="PDB" id="7NMV">
    <property type="method" value="X-ray"/>
    <property type="resolution" value="1.51 A"/>
    <property type="chains" value="AAA=21-119"/>
</dbReference>
<dbReference type="PDB" id="7NMY">
    <property type="method" value="X-ray"/>
    <property type="resolution" value="1.25 A"/>
    <property type="chains" value="AAA=21-119"/>
</dbReference>
<dbReference type="PDB" id="7NN5">
    <property type="method" value="X-ray"/>
    <property type="resolution" value="1.24 A"/>
    <property type="chains" value="AAA=21-118"/>
</dbReference>
<dbReference type="PDB" id="7NUI">
    <property type="method" value="X-ray"/>
    <property type="resolution" value="2.00 A"/>
    <property type="chains" value="B=21-119"/>
</dbReference>
<dbReference type="PDB" id="7OW3">
    <property type="method" value="X-ray"/>
    <property type="resolution" value="2.46 A"/>
    <property type="chains" value="B/E/H/K=21-119"/>
</dbReference>
<dbReference type="PDB" id="7OW4">
    <property type="method" value="X-ray"/>
    <property type="resolution" value="1.81 A"/>
    <property type="chains" value="B/E/H/K=21-119"/>
</dbReference>
<dbReference type="PDB" id="7OW5">
    <property type="method" value="X-ray"/>
    <property type="resolution" value="2.58 A"/>
    <property type="chains" value="B=21-119"/>
</dbReference>
<dbReference type="PDB" id="7OW6">
    <property type="method" value="X-ray"/>
    <property type="resolution" value="2.64 A"/>
    <property type="chains" value="B=21-119"/>
</dbReference>
<dbReference type="PDB" id="7P3D">
    <property type="method" value="X-ray"/>
    <property type="resolution" value="1.67 A"/>
    <property type="chains" value="B=21-119"/>
</dbReference>
<dbReference type="PDB" id="7P3E">
    <property type="method" value="X-ray"/>
    <property type="resolution" value="2.00 A"/>
    <property type="chains" value="B/E=21-119"/>
</dbReference>
<dbReference type="PDB" id="7P49">
    <property type="method" value="X-ray"/>
    <property type="resolution" value="2.05 A"/>
    <property type="chains" value="B/D/F/H=21-119"/>
</dbReference>
<dbReference type="PDB" id="7P4B">
    <property type="method" value="X-ray"/>
    <property type="resolution" value="1.72 A"/>
    <property type="chains" value="B/D/F/H=21-119"/>
</dbReference>
<dbReference type="PDB" id="7PB2">
    <property type="method" value="X-ray"/>
    <property type="resolution" value="3.41 A"/>
    <property type="chains" value="B/G=21-119"/>
</dbReference>
<dbReference type="PDB" id="7PBC">
    <property type="method" value="X-ray"/>
    <property type="resolution" value="2.04 A"/>
    <property type="chains" value="DDD=21-119"/>
</dbReference>
<dbReference type="PDB" id="7PBE">
    <property type="method" value="X-ray"/>
    <property type="resolution" value="3.00 A"/>
    <property type="chains" value="B/G=21-119"/>
</dbReference>
<dbReference type="PDB" id="7PDW">
    <property type="method" value="X-ray"/>
    <property type="resolution" value="1.82 A"/>
    <property type="chains" value="DDD/III=21-119"/>
</dbReference>
<dbReference type="PDB" id="7PHR">
    <property type="method" value="EM"/>
    <property type="resolution" value="3.08 A"/>
    <property type="chains" value="L=20-119"/>
</dbReference>
<dbReference type="PDB" id="7Q15">
    <property type="method" value="X-ray"/>
    <property type="resolution" value="3.30 A"/>
    <property type="chains" value="B/D=1-119"/>
</dbReference>
<dbReference type="PDB" id="7Q98">
    <property type="method" value="X-ray"/>
    <property type="resolution" value="2.50 A"/>
    <property type="chains" value="B/E/H/K/N=21-119"/>
</dbReference>
<dbReference type="PDB" id="7Q99">
    <property type="method" value="X-ray"/>
    <property type="resolution" value="2.55 A"/>
    <property type="chains" value="B=21-119"/>
</dbReference>
<dbReference type="PDB" id="7Q9A">
    <property type="method" value="X-ray"/>
    <property type="resolution" value="2.10 A"/>
    <property type="chains" value="B=21-119"/>
</dbReference>
<dbReference type="PDB" id="7Q9B">
    <property type="method" value="X-ray"/>
    <property type="resolution" value="3.24 A"/>
    <property type="chains" value="BBB/GGG=21-119"/>
</dbReference>
<dbReference type="PDB" id="7QNG">
    <property type="method" value="X-ray"/>
    <property type="resolution" value="2.70 A"/>
    <property type="chains" value="D=21-119"/>
</dbReference>
<dbReference type="PDB" id="7QPD">
    <property type="method" value="EM"/>
    <property type="resolution" value="3.73 A"/>
    <property type="chains" value="B=21-119"/>
</dbReference>
<dbReference type="PDB" id="7QPJ">
    <property type="method" value="X-ray"/>
    <property type="resolution" value="1.54 A"/>
    <property type="chains" value="D=21-119"/>
</dbReference>
<dbReference type="PDB" id="7R7V">
    <property type="method" value="X-ray"/>
    <property type="resolution" value="1.60 A"/>
    <property type="chains" value="B=21-119"/>
</dbReference>
<dbReference type="PDB" id="7R7W">
    <property type="method" value="X-ray"/>
    <property type="resolution" value="1.17 A"/>
    <property type="chains" value="B=21-119"/>
</dbReference>
<dbReference type="PDB" id="7R7X">
    <property type="method" value="X-ray"/>
    <property type="resolution" value="2.10 A"/>
    <property type="chains" value="B/D=21-119"/>
</dbReference>
<dbReference type="PDB" id="7R7Y">
    <property type="method" value="X-ray"/>
    <property type="resolution" value="1.60 A"/>
    <property type="chains" value="B=21-119"/>
</dbReference>
<dbReference type="PDB" id="7R80">
    <property type="method" value="X-ray"/>
    <property type="resolution" value="2.90 A"/>
    <property type="chains" value="D=21-119"/>
</dbReference>
<dbReference type="PDB" id="7RE7">
    <property type="method" value="X-ray"/>
    <property type="resolution" value="2.55 A"/>
    <property type="chains" value="B/E=21-119"/>
</dbReference>
<dbReference type="PDB" id="7RE8">
    <property type="method" value="X-ray"/>
    <property type="resolution" value="2.82 A"/>
    <property type="chains" value="B/E=21-119"/>
</dbReference>
<dbReference type="PDB" id="7RK7">
    <property type="method" value="X-ray"/>
    <property type="resolution" value="2.54 A"/>
    <property type="chains" value="B=21-119"/>
</dbReference>
<dbReference type="PDB" id="7RM4">
    <property type="method" value="X-ray"/>
    <property type="resolution" value="3.33 A"/>
    <property type="chains" value="B/G/L/Q=21-119"/>
</dbReference>
<dbReference type="PDB" id="7RRG">
    <property type="method" value="X-ray"/>
    <property type="resolution" value="2.12 A"/>
    <property type="chains" value="B=21-119"/>
</dbReference>
<dbReference type="PDB" id="7RTD">
    <property type="method" value="X-ray"/>
    <property type="resolution" value="2.05 A"/>
    <property type="chains" value="B=21-119"/>
</dbReference>
<dbReference type="PDB" id="7RTR">
    <property type="method" value="X-ray"/>
    <property type="resolution" value="2.60 A"/>
    <property type="chains" value="B=21-119"/>
</dbReference>
<dbReference type="PDB" id="7RYM">
    <property type="method" value="X-ray"/>
    <property type="resolution" value="3.20 A"/>
    <property type="chains" value="B=21-119"/>
</dbReference>
<dbReference type="PDB" id="7RYN">
    <property type="method" value="X-ray"/>
    <property type="resolution" value="2.70 A"/>
    <property type="chains" value="B=21-119"/>
</dbReference>
<dbReference type="PDB" id="7RYO">
    <property type="method" value="X-ray"/>
    <property type="resolution" value="3.00 A"/>
    <property type="chains" value="B=21-119"/>
</dbReference>
<dbReference type="PDB" id="7RZD">
    <property type="method" value="X-ray"/>
    <property type="resolution" value="1.82 A"/>
    <property type="chains" value="B=21-119"/>
</dbReference>
<dbReference type="PDB" id="7RZJ">
    <property type="method" value="X-ray"/>
    <property type="resolution" value="1.80 A"/>
    <property type="chains" value="B=21-119"/>
</dbReference>
<dbReference type="PDB" id="7S79">
    <property type="method" value="X-ray"/>
    <property type="resolution" value="1.53 A"/>
    <property type="chains" value="B=21-119"/>
</dbReference>
<dbReference type="PDB" id="7S7D">
    <property type="method" value="X-ray"/>
    <property type="resolution" value="1.56 A"/>
    <property type="chains" value="B=21-119"/>
</dbReference>
<dbReference type="PDB" id="7S7E">
    <property type="method" value="X-ray"/>
    <property type="resolution" value="2.04 A"/>
    <property type="chains" value="B=21-119"/>
</dbReference>
<dbReference type="PDB" id="7S7F">
    <property type="method" value="X-ray"/>
    <property type="resolution" value="1.88 A"/>
    <property type="chains" value="B=21-119"/>
</dbReference>
<dbReference type="PDB" id="7S8A">
    <property type="method" value="X-ray"/>
    <property type="resolution" value="2.10 A"/>
    <property type="chains" value="B=21-119"/>
</dbReference>
<dbReference type="PDB" id="7S8E">
    <property type="method" value="X-ray"/>
    <property type="resolution" value="1.60 A"/>
    <property type="chains" value="B=21-119"/>
</dbReference>
<dbReference type="PDB" id="7S8F">
    <property type="method" value="X-ray"/>
    <property type="resolution" value="1.80 A"/>
    <property type="chains" value="B=21-119"/>
</dbReference>
<dbReference type="PDB" id="7S8Q">
    <property type="method" value="X-ray"/>
    <property type="resolution" value="2.08 A"/>
    <property type="chains" value="B/E=21-119"/>
</dbReference>
<dbReference type="PDB" id="7S8R">
    <property type="method" value="X-ray"/>
    <property type="resolution" value="2.95 A"/>
    <property type="chains" value="B/E=21-119"/>
</dbReference>
<dbReference type="PDB" id="7S8S">
    <property type="method" value="X-ray"/>
    <property type="resolution" value="1.87 A"/>
    <property type="chains" value="B=21-119"/>
</dbReference>
<dbReference type="PDB" id="7SA2">
    <property type="method" value="X-ray"/>
    <property type="resolution" value="1.85 A"/>
    <property type="chains" value="B=21-119"/>
</dbReference>
<dbReference type="PDB" id="7SH4">
    <property type="method" value="X-ray"/>
    <property type="resolution" value="2.00 A"/>
    <property type="chains" value="B=21-119"/>
</dbReference>
<dbReference type="PDB" id="7SIF">
    <property type="method" value="X-ray"/>
    <property type="resolution" value="1.73 A"/>
    <property type="chains" value="B=21-119"/>
</dbReference>
<dbReference type="PDB" id="7SIG">
    <property type="method" value="X-ray"/>
    <property type="resolution" value="1.74 A"/>
    <property type="chains" value="B=21-119"/>
</dbReference>
<dbReference type="PDB" id="7SIH">
    <property type="method" value="X-ray"/>
    <property type="resolution" value="1.90 A"/>
    <property type="chains" value="B=21-119"/>
</dbReference>
<dbReference type="PDB" id="7SIS">
    <property type="method" value="X-ray"/>
    <property type="resolution" value="1.90 A"/>
    <property type="chains" value="B=21-119"/>
</dbReference>
<dbReference type="PDB" id="7STF">
    <property type="method" value="EM"/>
    <property type="resolution" value="3.14 A"/>
    <property type="chains" value="B=19-119"/>
</dbReference>
<dbReference type="PDB" id="7SU9">
    <property type="method" value="X-ray"/>
    <property type="resolution" value="1.99 A"/>
    <property type="chains" value="B=21-119"/>
</dbReference>
<dbReference type="PDB" id="7T0L">
    <property type="method" value="X-ray"/>
    <property type="resolution" value="3.00 A"/>
    <property type="chains" value="B/E=21-119"/>
</dbReference>
<dbReference type="PDB" id="7T5M">
    <property type="method" value="X-ray"/>
    <property type="resolution" value="1.67 A"/>
    <property type="chains" value="B/D=21-119"/>
</dbReference>
<dbReference type="PDB" id="7TLT">
    <property type="method" value="X-ray"/>
    <property type="resolution" value="2.30 A"/>
    <property type="chains" value="B/D=21-119"/>
</dbReference>
<dbReference type="PDB" id="7TR4">
    <property type="method" value="X-ray"/>
    <property type="resolution" value="2.30 A"/>
    <property type="chains" value="B=22-119"/>
</dbReference>
<dbReference type="PDB" id="7TUC">
    <property type="method" value="X-ray"/>
    <property type="resolution" value="1.25 A"/>
    <property type="chains" value="B=21-119"/>
</dbReference>
<dbReference type="PDB" id="7TUD">
    <property type="method" value="X-ray"/>
    <property type="resolution" value="1.45 A"/>
    <property type="chains" value="B=21-119"/>
</dbReference>
<dbReference type="PDB" id="7TUE">
    <property type="method" value="X-ray"/>
    <property type="resolution" value="3.10 A"/>
    <property type="chains" value="B=21-119"/>
</dbReference>
<dbReference type="PDB" id="7U1R">
    <property type="method" value="X-ray"/>
    <property type="resolution" value="1.80 A"/>
    <property type="chains" value="B=21-119"/>
</dbReference>
<dbReference type="PDB" id="7U21">
    <property type="method" value="X-ray"/>
    <property type="resolution" value="1.90 A"/>
    <property type="chains" value="B/E=21-119"/>
</dbReference>
<dbReference type="PDB" id="7UC5">
    <property type="method" value="X-ray"/>
    <property type="resolution" value="1.95 A"/>
    <property type="chains" value="B/E=21-119"/>
</dbReference>
<dbReference type="PDB" id="7UFJ">
    <property type="method" value="X-ray"/>
    <property type="resolution" value="2.50 A"/>
    <property type="chains" value="B/D=21-119"/>
</dbReference>
<dbReference type="PDB" id="7UM2">
    <property type="method" value="X-ray"/>
    <property type="resolution" value="1.63 A"/>
    <property type="chains" value="B=21-119"/>
</dbReference>
<dbReference type="PDB" id="7UMG">
    <property type="method" value="X-ray"/>
    <property type="resolution" value="2.40 A"/>
    <property type="chains" value="B=21-119"/>
</dbReference>
<dbReference type="PDB" id="7UR1">
    <property type="method" value="X-ray"/>
    <property type="resolution" value="2.17 A"/>
    <property type="chains" value="B=21-119"/>
</dbReference>
<dbReference type="PDB" id="7WJ2">
    <property type="method" value="X-ray"/>
    <property type="resolution" value="1.28 A"/>
    <property type="chains" value="B=20-119"/>
</dbReference>
<dbReference type="PDB" id="7WJ3">
    <property type="method" value="X-ray"/>
    <property type="resolution" value="1.56 A"/>
    <property type="chains" value="B=20-119"/>
</dbReference>
<dbReference type="PDB" id="7WKJ">
    <property type="method" value="X-ray"/>
    <property type="resolution" value="1.50 A"/>
    <property type="chains" value="B=21-119"/>
</dbReference>
<dbReference type="PDB" id="7WT3">
    <property type="method" value="X-ray"/>
    <property type="resolution" value="1.89 A"/>
    <property type="chains" value="B/E=20-119"/>
</dbReference>
<dbReference type="PDB" id="7WT4">
    <property type="method" value="X-ray"/>
    <property type="resolution" value="1.89 A"/>
    <property type="chains" value="B/E=20-119"/>
</dbReference>
<dbReference type="PDB" id="7WT5">
    <property type="method" value="X-ray"/>
    <property type="resolution" value="2.10 A"/>
    <property type="chains" value="B/E=20-119"/>
</dbReference>
<dbReference type="PDB" id="7WZZ">
    <property type="method" value="X-ray"/>
    <property type="resolution" value="1.30 A"/>
    <property type="chains" value="B=21-119"/>
</dbReference>
<dbReference type="PDB" id="7X00">
    <property type="method" value="X-ray"/>
    <property type="resolution" value="1.45 A"/>
    <property type="chains" value="B=21-119"/>
</dbReference>
<dbReference type="PDB" id="7X1B">
    <property type="method" value="X-ray"/>
    <property type="resolution" value="1.40 A"/>
    <property type="chains" value="B=21-119"/>
</dbReference>
<dbReference type="PDB" id="7X1C">
    <property type="method" value="X-ray"/>
    <property type="resolution" value="1.41 A"/>
    <property type="chains" value="B=21-119"/>
</dbReference>
<dbReference type="PDB" id="7XF3">
    <property type="method" value="X-ray"/>
    <property type="resolution" value="1.91 A"/>
    <property type="chains" value="B=21-119"/>
</dbReference>
<dbReference type="PDB" id="7YG3">
    <property type="method" value="X-ray"/>
    <property type="resolution" value="1.50 A"/>
    <property type="chains" value="C=21-119"/>
</dbReference>
<dbReference type="PDB" id="7ZT2">
    <property type="method" value="X-ray"/>
    <property type="resolution" value="2.40 A"/>
    <property type="chains" value="B=21-119"/>
</dbReference>
<dbReference type="PDB" id="7ZT3">
    <property type="method" value="X-ray"/>
    <property type="resolution" value="2.40 A"/>
    <property type="chains" value="B=21-119"/>
</dbReference>
<dbReference type="PDB" id="7ZT4">
    <property type="method" value="X-ray"/>
    <property type="resolution" value="2.02 A"/>
    <property type="chains" value="B=21-119"/>
</dbReference>
<dbReference type="PDB" id="7ZT5">
    <property type="method" value="X-ray"/>
    <property type="resolution" value="2.09 A"/>
    <property type="chains" value="B=21-119"/>
</dbReference>
<dbReference type="PDB" id="7ZT7">
    <property type="method" value="X-ray"/>
    <property type="resolution" value="1.84 A"/>
    <property type="chains" value="B=21-119"/>
</dbReference>
<dbReference type="PDB" id="7ZT8">
    <property type="method" value="X-ray"/>
    <property type="resolution" value="2.29 A"/>
    <property type="chains" value="B=21-119"/>
</dbReference>
<dbReference type="PDB" id="7ZT9">
    <property type="method" value="X-ray"/>
    <property type="resolution" value="2.13 A"/>
    <property type="chains" value="B=21-119"/>
</dbReference>
<dbReference type="PDB" id="7ZUC">
    <property type="method" value="X-ray"/>
    <property type="resolution" value="1.89 A"/>
    <property type="chains" value="B/E=21-119"/>
</dbReference>
<dbReference type="PDB" id="8A7O">
    <property type="method" value="EM"/>
    <property type="resolution" value="3.00 A"/>
    <property type="chains" value="A/B/C/D/E/F=27-119"/>
</dbReference>
<dbReference type="PDB" id="8A7P">
    <property type="method" value="EM"/>
    <property type="resolution" value="3.40 A"/>
    <property type="chains" value="A/B/C/D/E/F=27-119"/>
</dbReference>
<dbReference type="PDB" id="8A7Q">
    <property type="method" value="EM"/>
    <property type="resolution" value="2.80 A"/>
    <property type="chains" value="A/B/C/D/E/F/G/H/I/J/K/L=21-119"/>
</dbReference>
<dbReference type="PDB" id="8A7T">
    <property type="method" value="EM"/>
    <property type="resolution" value="3.00 A"/>
    <property type="chains" value="A/B/C/D/E/F=21-119"/>
</dbReference>
<dbReference type="PDB" id="8BP6">
    <property type="method" value="X-ray"/>
    <property type="resolution" value="2.80 A"/>
    <property type="chains" value="A/B=21-119"/>
</dbReference>
<dbReference type="PDB" id="8CX4">
    <property type="method" value="X-ray"/>
    <property type="resolution" value="2.20 A"/>
    <property type="chains" value="B=21-119"/>
</dbReference>
<dbReference type="PDB" id="8DNT">
    <property type="method" value="X-ray"/>
    <property type="resolution" value="3.18 A"/>
    <property type="chains" value="F/L/T/Z=21-119"/>
</dbReference>
<dbReference type="PDB" id="8DV3">
    <property type="method" value="X-ray"/>
    <property type="resolution" value="1.90 A"/>
    <property type="chains" value="B=21-119"/>
</dbReference>
<dbReference type="PDB" id="8DV4">
    <property type="method" value="X-ray"/>
    <property type="resolution" value="2.40 A"/>
    <property type="chains" value="B=21-119"/>
</dbReference>
<dbReference type="PDB" id="8DVG">
    <property type="method" value="X-ray"/>
    <property type="resolution" value="2.59 A"/>
    <property type="chains" value="B=1-119"/>
</dbReference>
<dbReference type="PDB" id="8E13">
    <property type="method" value="X-ray"/>
    <property type="resolution" value="1.37 A"/>
    <property type="chains" value="B=21-119"/>
</dbReference>
<dbReference type="PDB" id="8E2Z">
    <property type="method" value="X-ray"/>
    <property type="resolution" value="1.13 A"/>
    <property type="chains" value="B=21-119"/>
</dbReference>
<dbReference type="PDB" id="8E8I">
    <property type="method" value="X-ray"/>
    <property type="resolution" value="1.49 A"/>
    <property type="chains" value="B=21-119"/>
</dbReference>
<dbReference type="PDB" id="8EB2">
    <property type="method" value="X-ray"/>
    <property type="resolution" value="2.90 A"/>
    <property type="chains" value="B/E/H=21-119"/>
</dbReference>
<dbReference type="PDB" id="8EC5">
    <property type="method" value="X-ray"/>
    <property type="resolution" value="1.22 A"/>
    <property type="chains" value="B=21-119"/>
</dbReference>
<dbReference type="PDB" id="8EK5">
    <property type="method" value="X-ray"/>
    <property type="resolution" value="2.11 A"/>
    <property type="chains" value="B=21-119"/>
</dbReference>
<dbReference type="PDB" id="8ELG">
    <property type="method" value="X-ray"/>
    <property type="resolution" value="1.65 A"/>
    <property type="chains" value="B=21-119"/>
</dbReference>
<dbReference type="PDB" id="8ELH">
    <property type="method" value="X-ray"/>
    <property type="resolution" value="1.85 A"/>
    <property type="chains" value="B=21-119"/>
</dbReference>
<dbReference type="PDB" id="8EMF">
    <property type="method" value="X-ray"/>
    <property type="resolution" value="1.80 A"/>
    <property type="chains" value="B=21-119"/>
</dbReference>
<dbReference type="PDB" id="8EMG">
    <property type="method" value="X-ray"/>
    <property type="resolution" value="1.83 A"/>
    <property type="chains" value="B=21-119"/>
</dbReference>
<dbReference type="PDB" id="8EMI">
    <property type="method" value="X-ray"/>
    <property type="resolution" value="1.57 A"/>
    <property type="chains" value="B=21-119"/>
</dbReference>
<dbReference type="PDB" id="8EMJ">
    <property type="method" value="X-ray"/>
    <property type="resolution" value="1.75 A"/>
    <property type="chains" value="B=21-119"/>
</dbReference>
<dbReference type="PDB" id="8EMK">
    <property type="method" value="X-ray"/>
    <property type="resolution" value="1.67 A"/>
    <property type="chains" value="B=21-119"/>
</dbReference>
<dbReference type="PDB" id="8EN8">
    <property type="method" value="X-ray"/>
    <property type="resolution" value="2.70 A"/>
    <property type="chains" value="B/G=21-119"/>
</dbReference>
<dbReference type="PDB" id="8ENH">
    <property type="method" value="X-ray"/>
    <property type="resolution" value="2.50 A"/>
    <property type="chains" value="B/G/L/Q=21-119"/>
</dbReference>
<dbReference type="PDB" id="8EO8">
    <property type="method" value="X-ray"/>
    <property type="resolution" value="2.30 A"/>
    <property type="chains" value="B/G/L/Q=21-119"/>
</dbReference>
<dbReference type="PDB" id="8ERX">
    <property type="method" value="X-ray"/>
    <property type="resolution" value="2.07 A"/>
    <property type="chains" value="B=21-119"/>
</dbReference>
<dbReference type="PDB" id="8ES8">
    <property type="method" value="EM"/>
    <property type="resolution" value="2.65 A"/>
    <property type="chains" value="M=21-119"/>
</dbReference>
<dbReference type="PDB" id="8ES9">
    <property type="method" value="EM"/>
    <property type="resolution" value="3.25 A"/>
    <property type="chains" value="M=21-119"/>
</dbReference>
<dbReference type="PDB" id="8ESA">
    <property type="method" value="EM"/>
    <property type="resolution" value="3.40 A"/>
    <property type="chains" value="A/B/C=16-119"/>
</dbReference>
<dbReference type="PDB" id="8ESH">
    <property type="method" value="X-ray"/>
    <property type="resolution" value="2.72 A"/>
    <property type="chains" value="B=21-119"/>
</dbReference>
<dbReference type="PDB" id="8F5A">
    <property type="method" value="X-ray"/>
    <property type="resolution" value="1.95 A"/>
    <property type="chains" value="B=21-119"/>
</dbReference>
<dbReference type="PDB" id="8F7M">
    <property type="method" value="X-ray"/>
    <property type="resolution" value="1.88 A"/>
    <property type="chains" value="B=21-119"/>
</dbReference>
<dbReference type="PDB" id="8FJA">
    <property type="method" value="EM"/>
    <property type="resolution" value="3.00 A"/>
    <property type="chains" value="B=21-119"/>
</dbReference>
<dbReference type="PDB" id="8FJB">
    <property type="method" value="EM"/>
    <property type="resolution" value="3.06 A"/>
    <property type="chains" value="B=21-119"/>
</dbReference>
<dbReference type="PDB" id="8FRT">
    <property type="method" value="X-ray"/>
    <property type="resolution" value="1.80 A"/>
    <property type="chains" value="A=21-119"/>
</dbReference>
<dbReference type="PDB" id="8FU4">
    <property type="method" value="X-ray"/>
    <property type="resolution" value="1.60 A"/>
    <property type="chains" value="B=21-119"/>
</dbReference>
<dbReference type="PDB" id="8GLE">
    <property type="method" value="X-ray"/>
    <property type="resolution" value="1.85 A"/>
    <property type="chains" value="B=21-119"/>
</dbReference>
<dbReference type="PDB" id="8GLF">
    <property type="method" value="X-ray"/>
    <property type="resolution" value="2.00 A"/>
    <property type="chains" value="B=21-119"/>
</dbReference>
<dbReference type="PDB" id="8GLG">
    <property type="method" value="X-ray"/>
    <property type="resolution" value="1.60 A"/>
    <property type="chains" value="B=21-119"/>
</dbReference>
<dbReference type="PDB" id="8GLH">
    <property type="method" value="X-ray"/>
    <property type="resolution" value="1.83 A"/>
    <property type="chains" value="B=21-119"/>
</dbReference>
<dbReference type="PDB" id="8GLI">
    <property type="method" value="X-ray"/>
    <property type="resolution" value="2.10 A"/>
    <property type="chains" value="B=21-119"/>
</dbReference>
<dbReference type="PDB" id="8GOM">
    <property type="method" value="X-ray"/>
    <property type="resolution" value="2.78 A"/>
    <property type="chains" value="B=21-119"/>
</dbReference>
<dbReference type="PDB" id="8GON">
    <property type="method" value="X-ray"/>
    <property type="resolution" value="2.60 A"/>
    <property type="chains" value="B=21-119"/>
</dbReference>
<dbReference type="PDB" id="8GVB">
    <property type="method" value="X-ray"/>
    <property type="resolution" value="3.20 A"/>
    <property type="chains" value="L=21-119"/>
</dbReference>
<dbReference type="PDB" id="8GVG">
    <property type="method" value="X-ray"/>
    <property type="resolution" value="3.37 A"/>
    <property type="chains" value="L=21-119"/>
</dbReference>
<dbReference type="PDB" id="8GVI">
    <property type="method" value="X-ray"/>
    <property type="resolution" value="3.30 A"/>
    <property type="chains" value="L=21-119"/>
</dbReference>
<dbReference type="PDB" id="8HN4">
    <property type="method" value="X-ray"/>
    <property type="resolution" value="2.85 A"/>
    <property type="chains" value="B=21-119"/>
</dbReference>
<dbReference type="PDB" id="8I5C">
    <property type="method" value="X-ray"/>
    <property type="resolution" value="3.34 A"/>
    <property type="chains" value="B/G/L/Q/V/a/f/k/p/u=21-119"/>
</dbReference>
<dbReference type="PDB" id="8I5D">
    <property type="method" value="X-ray"/>
    <property type="resolution" value="3.30 A"/>
    <property type="chains" value="L=21-119"/>
</dbReference>
<dbReference type="PDB" id="8I5E">
    <property type="method" value="X-ray"/>
    <property type="resolution" value="2.20 A"/>
    <property type="chains" value="L=21-119"/>
</dbReference>
<dbReference type="PDB" id="8ISN">
    <property type="method" value="X-ray"/>
    <property type="resolution" value="2.48 A"/>
    <property type="chains" value="B/E=21-119"/>
</dbReference>
<dbReference type="PDB" id="8K4T">
    <property type="method" value="X-ray"/>
    <property type="resolution" value="2.30 A"/>
    <property type="chains" value="B/E=21-119"/>
</dbReference>
<dbReference type="PDB" id="8K4V">
    <property type="method" value="X-ray"/>
    <property type="resolution" value="3.10 A"/>
    <property type="chains" value="B/E/H/K=21-119"/>
</dbReference>
<dbReference type="PDB" id="8K50">
    <property type="method" value="X-ray"/>
    <property type="resolution" value="2.80 A"/>
    <property type="chains" value="B/E/H/K=21-119"/>
</dbReference>
<dbReference type="PDB" id="8QFY">
    <property type="method" value="X-ray"/>
    <property type="resolution" value="2.33 A"/>
    <property type="chains" value="BBB/GGG=21-119"/>
</dbReference>
<dbReference type="PDB" id="8RBU">
    <property type="method" value="X-ray"/>
    <property type="resolution" value="2.70 A"/>
    <property type="chains" value="B=21-119"/>
</dbReference>
<dbReference type="PDB" id="8RBV">
    <property type="method" value="X-ray"/>
    <property type="resolution" value="1.80 A"/>
    <property type="chains" value="B=21-119"/>
</dbReference>
<dbReference type="PDB" id="8RCV">
    <property type="method" value="X-ray"/>
    <property type="resolution" value="1.65 A"/>
    <property type="chains" value="B=21-119"/>
</dbReference>
<dbReference type="PDB" id="8REF">
    <property type="method" value="X-ray"/>
    <property type="resolution" value="1.90 A"/>
    <property type="chains" value="B=21-119"/>
</dbReference>
<dbReference type="PDB" id="8RH6">
    <property type="method" value="X-ray"/>
    <property type="resolution" value="3.32 A"/>
    <property type="chains" value="B/D/F=21-119"/>
</dbReference>
<dbReference type="PDB" id="8RHQ">
    <property type="method" value="X-ray"/>
    <property type="resolution" value="2.00 A"/>
    <property type="chains" value="B/D/F=21-119"/>
</dbReference>
<dbReference type="PDB" id="8RJ5">
    <property type="method" value="X-ray"/>
    <property type="resolution" value="3.02 A"/>
    <property type="chains" value="B/G=21-119"/>
</dbReference>
<dbReference type="PDB" id="8RJH">
    <property type="method" value="X-ray"/>
    <property type="resolution" value="2.60 A"/>
    <property type="chains" value="B/E/H/K/N/Q=21-119"/>
</dbReference>
<dbReference type="PDB" id="8RJI">
    <property type="method" value="X-ray"/>
    <property type="resolution" value="2.30 A"/>
    <property type="chains" value="B/E/H/K=21-119"/>
</dbReference>
<dbReference type="PDB" id="8RLT">
    <property type="method" value="X-ray"/>
    <property type="resolution" value="2.25 A"/>
    <property type="chains" value="B/G=21-119"/>
</dbReference>
<dbReference type="PDB" id="8RLU">
    <property type="method" value="X-ray"/>
    <property type="resolution" value="2.35 A"/>
    <property type="chains" value="B/G=21-119"/>
</dbReference>
<dbReference type="PDB" id="8RLV">
    <property type="method" value="X-ray"/>
    <property type="resolution" value="2.61 A"/>
    <property type="chains" value="B/G=21-119"/>
</dbReference>
<dbReference type="PDB" id="8RNE">
    <property type="method" value="X-ray"/>
    <property type="resolution" value="1.71 A"/>
    <property type="chains" value="B/D/G=21-119"/>
</dbReference>
<dbReference type="PDB" id="8RNF">
    <property type="method" value="X-ray"/>
    <property type="resolution" value="1.87 A"/>
    <property type="chains" value="B/D/G=21-119"/>
</dbReference>
<dbReference type="PDB" id="8RNG">
    <property type="method" value="X-ray"/>
    <property type="resolution" value="1.45 A"/>
    <property type="chains" value="B=21-119"/>
</dbReference>
<dbReference type="PDB" id="8RNH">
    <property type="method" value="X-ray"/>
    <property type="resolution" value="1.60 A"/>
    <property type="chains" value="B=21-119"/>
</dbReference>
<dbReference type="PDB" id="8RNI">
    <property type="method" value="X-ray"/>
    <property type="resolution" value="2.49 A"/>
    <property type="chains" value="B=21-119"/>
</dbReference>
<dbReference type="PDB" id="8ROO">
    <property type="method" value="X-ray"/>
    <property type="resolution" value="1.40 A"/>
    <property type="chains" value="C=21-119"/>
</dbReference>
<dbReference type="PDB" id="8ROP">
    <property type="method" value="X-ray"/>
    <property type="resolution" value="1.15 A"/>
    <property type="chains" value="B=21-119"/>
</dbReference>
<dbReference type="PDB" id="8RRO">
    <property type="method" value="X-ray"/>
    <property type="resolution" value="3.50 A"/>
    <property type="chains" value="D/I/N/S/X/c/h/m=21-119"/>
</dbReference>
<dbReference type="PDB" id="8RYM">
    <property type="method" value="X-ray"/>
    <property type="resolution" value="2.34 A"/>
    <property type="chains" value="B=21-119"/>
</dbReference>
<dbReference type="PDB" id="8RYN">
    <property type="method" value="X-ray"/>
    <property type="resolution" value="1.97 A"/>
    <property type="chains" value="B=21-119"/>
</dbReference>
<dbReference type="PDB" id="8RYO">
    <property type="method" value="X-ray"/>
    <property type="resolution" value="2.05 A"/>
    <property type="chains" value="B=21-119"/>
</dbReference>
<dbReference type="PDB" id="8RYP">
    <property type="method" value="X-ray"/>
    <property type="resolution" value="1.81 A"/>
    <property type="chains" value="B=21-119"/>
</dbReference>
<dbReference type="PDB" id="8RYQ">
    <property type="method" value="X-ray"/>
    <property type="resolution" value="2.49 A"/>
    <property type="chains" value="B/G=21-119"/>
</dbReference>
<dbReference type="PDB" id="8SBK">
    <property type="method" value="X-ray"/>
    <property type="resolution" value="1.80 A"/>
    <property type="chains" value="B=21-119"/>
</dbReference>
<dbReference type="PDB" id="8SBL">
    <property type="method" value="X-ray"/>
    <property type="resolution" value="3.00 A"/>
    <property type="chains" value="B/E/H/K=21-119"/>
</dbReference>
<dbReference type="PDB" id="8SGB">
    <property type="method" value="X-ray"/>
    <property type="resolution" value="2.80 A"/>
    <property type="chains" value="B=21-119"/>
</dbReference>
<dbReference type="PDB" id="8SGM">
    <property type="method" value="X-ray"/>
    <property type="resolution" value="2.50 A"/>
    <property type="chains" value="B=21-119"/>
</dbReference>
<dbReference type="PDB" id="8SHI">
    <property type="method" value="X-ray"/>
    <property type="resolution" value="2.90 A"/>
    <property type="chains" value="B/E=21-119"/>
</dbReference>
<dbReference type="PDB" id="8SOS">
    <property type="method" value="X-ray"/>
    <property type="resolution" value="2.33 A"/>
    <property type="chains" value="B/F=21-119"/>
</dbReference>
<dbReference type="PDB" id="8T6M">
    <property type="method" value="EM"/>
    <property type="resolution" value="3.14 A"/>
    <property type="chains" value="F=21-119"/>
</dbReference>
<dbReference type="PDB" id="8T7R">
    <property type="method" value="X-ray"/>
    <property type="resolution" value="3.84 A"/>
    <property type="chains" value="D/H/L/P/T/X/b/f=21-119"/>
</dbReference>
<dbReference type="PDB" id="8TBV">
    <property type="method" value="X-ray"/>
    <property type="resolution" value="2.64 A"/>
    <property type="chains" value="B/E=21-119"/>
</dbReference>
<dbReference type="PDB" id="8TBW">
    <property type="method" value="X-ray"/>
    <property type="resolution" value="2.08 A"/>
    <property type="chains" value="B/E=21-119"/>
</dbReference>
<dbReference type="PDB" id="8TMU">
    <property type="method" value="X-ray"/>
    <property type="resolution" value="2.90 A"/>
    <property type="chains" value="B=21-119"/>
</dbReference>
<dbReference type="PDB" id="8TNJ">
    <property type="method" value="EM"/>
    <property type="resolution" value="3.10 A"/>
    <property type="chains" value="A=21-119"/>
</dbReference>
<dbReference type="PDB" id="8TQ5">
    <property type="method" value="X-ray"/>
    <property type="resolution" value="2.30 A"/>
    <property type="chains" value="B=21-119"/>
</dbReference>
<dbReference type="PDB" id="8TQ6">
    <property type="method" value="X-ray"/>
    <property type="resolution" value="3.20 A"/>
    <property type="chains" value="B/D=21-119"/>
</dbReference>
<dbReference type="PDB" id="8TUB">
    <property type="method" value="X-ray"/>
    <property type="resolution" value="2.40 A"/>
    <property type="chains" value="A/B/E/I=21-119"/>
</dbReference>
<dbReference type="PDB" id="8TUH">
    <property type="method" value="X-ray"/>
    <property type="resolution" value="2.20 A"/>
    <property type="chains" value="B=21-119"/>
</dbReference>
<dbReference type="PDB" id="8U9G">
    <property type="method" value="X-ray"/>
    <property type="resolution" value="2.87 A"/>
    <property type="chains" value="B/E=21-119"/>
</dbReference>
<dbReference type="PDB" id="8UDR">
    <property type="method" value="EM"/>
    <property type="resolution" value="3.10 A"/>
    <property type="chains" value="B=21-119"/>
</dbReference>
<dbReference type="PDB" id="8V4Z">
    <property type="method" value="X-ray"/>
    <property type="resolution" value="2.40 A"/>
    <property type="chains" value="B/G/L/Q=21-119"/>
</dbReference>
<dbReference type="PDB" id="8V50">
    <property type="method" value="X-ray"/>
    <property type="resolution" value="2.65 A"/>
    <property type="chains" value="B/G/L/Q=21-119"/>
</dbReference>
<dbReference type="PDB" id="8V51">
    <property type="method" value="X-ray"/>
    <property type="resolution" value="2.10 A"/>
    <property type="chains" value="B=21-119"/>
</dbReference>
<dbReference type="PDB" id="8VCL">
    <property type="method" value="X-ray"/>
    <property type="resolution" value="2.40 A"/>
    <property type="chains" value="B=21-119"/>
</dbReference>
<dbReference type="PDB" id="8VJZ">
    <property type="method" value="X-ray"/>
    <property type="resolution" value="1.90 A"/>
    <property type="chains" value="B=21-119"/>
</dbReference>
<dbReference type="PDB" id="8VR9">
    <property type="method" value="EM"/>
    <property type="resolution" value="3.06 A"/>
    <property type="chains" value="B=21-119"/>
</dbReference>
<dbReference type="PDB" id="8VRA">
    <property type="method" value="EM"/>
    <property type="resolution" value="3.12 A"/>
    <property type="chains" value="B=21-119"/>
</dbReference>
<dbReference type="PDB" id="8VRB">
    <property type="method" value="EM"/>
    <property type="resolution" value="3.25 A"/>
    <property type="chains" value="B=20-119"/>
</dbReference>
<dbReference type="PDB" id="8WTE">
    <property type="method" value="X-ray"/>
    <property type="resolution" value="2.17 A"/>
    <property type="chains" value="F/I=21-119"/>
</dbReference>
<dbReference type="PDB" id="8WUL">
    <property type="method" value="X-ray"/>
    <property type="resolution" value="2.36 A"/>
    <property type="chains" value="J/M/P/S=21-119"/>
</dbReference>
<dbReference type="PDB" id="8XES">
    <property type="method" value="X-ray"/>
    <property type="resolution" value="1.78 A"/>
    <property type="chains" value="B=21-119"/>
</dbReference>
<dbReference type="PDB" id="8XFZ">
    <property type="method" value="X-ray"/>
    <property type="resolution" value="2.32 A"/>
    <property type="chains" value="B=21-119"/>
</dbReference>
<dbReference type="PDB" id="8XG2">
    <property type="method" value="X-ray"/>
    <property type="resolution" value="1.84 A"/>
    <property type="chains" value="B=21-119"/>
</dbReference>
<dbReference type="PDB" id="8XKC">
    <property type="method" value="X-ray"/>
    <property type="resolution" value="2.18 A"/>
    <property type="chains" value="B=21-119"/>
</dbReference>
<dbReference type="PDB" id="8XKE">
    <property type="method" value="X-ray"/>
    <property type="resolution" value="1.92 A"/>
    <property type="chains" value="B=21-119"/>
</dbReference>
<dbReference type="PDB" id="8Y6X">
    <property type="method" value="X-ray"/>
    <property type="resolution" value="3.40 A"/>
    <property type="chains" value="B=21-119"/>
</dbReference>
<dbReference type="PDB" id="8YE4">
    <property type="method" value="X-ray"/>
    <property type="resolution" value="3.20 A"/>
    <property type="chains" value="B/D=21-119"/>
</dbReference>
<dbReference type="PDB" id="8YIV">
    <property type="method" value="X-ray"/>
    <property type="resolution" value="2.10 A"/>
    <property type="chains" value="B=21-119"/>
</dbReference>
<dbReference type="PDB" id="8YJ2">
    <property type="method" value="X-ray"/>
    <property type="resolution" value="2.26 A"/>
    <property type="chains" value="B=21-119"/>
</dbReference>
<dbReference type="PDB" id="8YZR">
    <property type="method" value="X-ray"/>
    <property type="resolution" value="1.80 A"/>
    <property type="chains" value="B=21-119"/>
</dbReference>
<dbReference type="PDB" id="8YZW">
    <property type="method" value="X-ray"/>
    <property type="resolution" value="2.36 A"/>
    <property type="chains" value="B/E=21-119"/>
</dbReference>
<dbReference type="PDB" id="8YZZ">
    <property type="method" value="X-ray"/>
    <property type="resolution" value="1.88 A"/>
    <property type="chains" value="B=21-119"/>
</dbReference>
<dbReference type="PDB" id="8Z05">
    <property type="method" value="X-ray"/>
    <property type="resolution" value="1.96 A"/>
    <property type="chains" value="B=21-119"/>
</dbReference>
<dbReference type="PDB" id="8Z06">
    <property type="method" value="X-ray"/>
    <property type="resolution" value="2.39 A"/>
    <property type="chains" value="B=21-119"/>
</dbReference>
<dbReference type="PDB" id="8Z07">
    <property type="method" value="X-ray"/>
    <property type="resolution" value="2.70 A"/>
    <property type="chains" value="B=21-119"/>
</dbReference>
<dbReference type="PDB" id="8Z08">
    <property type="method" value="X-ray"/>
    <property type="resolution" value="2.01 A"/>
    <property type="chains" value="D=21-119"/>
</dbReference>
<dbReference type="PDB" id="8ZOX">
    <property type="method" value="EM"/>
    <property type="resolution" value="3.18 A"/>
    <property type="chains" value="B=21-119"/>
</dbReference>
<dbReference type="PDB" id="8ZV9">
    <property type="method" value="X-ray"/>
    <property type="resolution" value="2.60 A"/>
    <property type="chains" value="B/E/H=21-119"/>
</dbReference>
<dbReference type="PDB" id="9ASF">
    <property type="method" value="X-ray"/>
    <property type="resolution" value="1.77 A"/>
    <property type="chains" value="B=21-119"/>
</dbReference>
<dbReference type="PDB" id="9ASG">
    <property type="method" value="X-ray"/>
    <property type="resolution" value="2.03 A"/>
    <property type="chains" value="B=21-119"/>
</dbReference>
<dbReference type="PDB" id="9BL2">
    <property type="method" value="X-ray"/>
    <property type="resolution" value="2.10 A"/>
    <property type="chains" value="B=21-119"/>
</dbReference>
<dbReference type="PDB" id="9BL3">
    <property type="method" value="X-ray"/>
    <property type="resolution" value="2.00 A"/>
    <property type="chains" value="B=21-119"/>
</dbReference>
<dbReference type="PDB" id="9BL4">
    <property type="method" value="X-ray"/>
    <property type="resolution" value="1.75 A"/>
    <property type="chains" value="B=21-119"/>
</dbReference>
<dbReference type="PDB" id="9BL5">
    <property type="method" value="X-ray"/>
    <property type="resolution" value="2.00 A"/>
    <property type="chains" value="B=21-119"/>
</dbReference>
<dbReference type="PDB" id="9BL6">
    <property type="method" value="X-ray"/>
    <property type="resolution" value="2.40 A"/>
    <property type="chains" value="B=21-119"/>
</dbReference>
<dbReference type="PDB" id="9BL9">
    <property type="method" value="X-ray"/>
    <property type="resolution" value="2.60 A"/>
    <property type="chains" value="B=21-119"/>
</dbReference>
<dbReference type="PDB" id="9BLA">
    <property type="method" value="X-ray"/>
    <property type="resolution" value="3.00 A"/>
    <property type="chains" value="B=21-119"/>
</dbReference>
<dbReference type="PDB" id="9BTX">
    <property type="method" value="X-ray"/>
    <property type="resolution" value="2.05 A"/>
    <property type="chains" value="B/F=21-119"/>
</dbReference>
<dbReference type="PDB" id="9BTY">
    <property type="method" value="X-ray"/>
    <property type="resolution" value="2.85 A"/>
    <property type="chains" value="B/F=21-119"/>
</dbReference>
<dbReference type="PDB" id="9BTZ">
    <property type="method" value="X-ray"/>
    <property type="resolution" value="3.00 A"/>
    <property type="chains" value="B/F=21-119"/>
</dbReference>
<dbReference type="PDB" id="9BU0">
    <property type="method" value="X-ray"/>
    <property type="resolution" value="2.89 A"/>
    <property type="chains" value="B/F=21-119"/>
</dbReference>
<dbReference type="PDB" id="9C3E">
    <property type="method" value="EM"/>
    <property type="resolution" value="3.50 A"/>
    <property type="chains" value="H=21-118"/>
</dbReference>
<dbReference type="PDB" id="9C6V">
    <property type="method" value="X-ray"/>
    <property type="resolution" value="1.70 A"/>
    <property type="chains" value="A=21-119"/>
</dbReference>
<dbReference type="PDB" id="9C6W">
    <property type="method" value="X-ray"/>
    <property type="resolution" value="1.70 A"/>
    <property type="chains" value="A/B=21-119"/>
</dbReference>
<dbReference type="PDB" id="9C6X">
    <property type="method" value="X-ray"/>
    <property type="resolution" value="1.70 A"/>
    <property type="chains" value="A=21-119"/>
</dbReference>
<dbReference type="PDB" id="9C96">
    <property type="method" value="EM"/>
    <property type="resolution" value="3.00 A"/>
    <property type="chains" value="B=21-118"/>
</dbReference>
<dbReference type="PDB" id="9CGR">
    <property type="method" value="X-ray"/>
    <property type="resolution" value="2.40 A"/>
    <property type="chains" value="B/F=21-119"/>
</dbReference>
<dbReference type="PDB" id="9CGS">
    <property type="method" value="X-ray"/>
    <property type="resolution" value="2.00 A"/>
    <property type="chains" value="B/F=21-119"/>
</dbReference>
<dbReference type="PDB" id="9DL1">
    <property type="method" value="X-ray"/>
    <property type="resolution" value="2.30 A"/>
    <property type="chains" value="C/G=21-119"/>
</dbReference>
<dbReference type="PDB" id="9MI6">
    <property type="method" value="X-ray"/>
    <property type="resolution" value="2.41 A"/>
    <property type="chains" value="B=21-119"/>
</dbReference>
<dbReference type="PDBsum" id="1A1M"/>
<dbReference type="PDBsum" id="1A1N"/>
<dbReference type="PDBsum" id="1A1O"/>
<dbReference type="PDBsum" id="1A6Z"/>
<dbReference type="PDBsum" id="1A9B"/>
<dbReference type="PDBsum" id="1A9E"/>
<dbReference type="PDBsum" id="1AGB"/>
<dbReference type="PDBsum" id="1AGC"/>
<dbReference type="PDBsum" id="1AGD"/>
<dbReference type="PDBsum" id="1AGE"/>
<dbReference type="PDBsum" id="1AGF"/>
<dbReference type="PDBsum" id="1AKJ"/>
<dbReference type="PDBsum" id="1AO7"/>
<dbReference type="PDBsum" id="1B0G"/>
<dbReference type="PDBsum" id="1B0R"/>
<dbReference type="PDBsum" id="1BD2"/>
<dbReference type="PDBsum" id="1C16"/>
<dbReference type="PDBsum" id="1CE6"/>
<dbReference type="PDBsum" id="1CG9"/>
<dbReference type="PDBsum" id="1DE4"/>
<dbReference type="PDBsum" id="1DUY"/>
<dbReference type="PDBsum" id="1DUZ"/>
<dbReference type="PDBsum" id="1E27"/>
<dbReference type="PDBsum" id="1E28"/>
<dbReference type="PDBsum" id="1EEY"/>
<dbReference type="PDBsum" id="1EEZ"/>
<dbReference type="PDBsum" id="1EFX"/>
<dbReference type="PDBsum" id="1EXU"/>
<dbReference type="PDBsum" id="1GZP"/>
<dbReference type="PDBsum" id="1GZQ"/>
<dbReference type="PDBsum" id="1HHG"/>
<dbReference type="PDBsum" id="1HHH"/>
<dbReference type="PDBsum" id="1HHI"/>
<dbReference type="PDBsum" id="1HHJ"/>
<dbReference type="PDBsum" id="1HHK"/>
<dbReference type="PDBsum" id="1HLA"/>
<dbReference type="PDBsum" id="1HSA"/>
<dbReference type="PDBsum" id="1HSB"/>
<dbReference type="PDBsum" id="1I1F"/>
<dbReference type="PDBsum" id="1I1Y"/>
<dbReference type="PDBsum" id="1I4F"/>
<dbReference type="PDBsum" id="1I7R"/>
<dbReference type="PDBsum" id="1I7T"/>
<dbReference type="PDBsum" id="1I7U"/>
<dbReference type="PDBsum" id="1IM3"/>
<dbReference type="PDBsum" id="1IM9"/>
<dbReference type="PDBsum" id="1JF1"/>
<dbReference type="PDBsum" id="1JGD"/>
<dbReference type="PDBsum" id="1JGE"/>
<dbReference type="PDBsum" id="1JHT"/>
<dbReference type="PDBsum" id="1JNJ"/>
<dbReference type="PDBsum" id="1K5N"/>
<dbReference type="PDBsum" id="1KPR"/>
<dbReference type="PDBsum" id="1KTL"/>
<dbReference type="PDBsum" id="1LDS"/>
<dbReference type="PDBsum" id="1LP9"/>
<dbReference type="PDBsum" id="1M05"/>
<dbReference type="PDBsum" id="1M6O"/>
<dbReference type="PDBsum" id="1MHE"/>
<dbReference type="PDBsum" id="1MI5"/>
<dbReference type="PDBsum" id="1N2R"/>
<dbReference type="PDBsum" id="1OF2"/>
<dbReference type="PDBsum" id="1OGA"/>
<dbReference type="PDBsum" id="1OGT"/>
<dbReference type="PDBsum" id="1ONQ"/>
<dbReference type="PDBsum" id="1P7Q"/>
<dbReference type="PDBsum" id="1PY4"/>
<dbReference type="PDBsum" id="1Q94"/>
<dbReference type="PDBsum" id="1QEW"/>
<dbReference type="PDBsum" id="1QLF"/>
<dbReference type="PDBsum" id="1QQD"/>
<dbReference type="PDBsum" id="1QR1"/>
<dbReference type="PDBsum" id="1QRN"/>
<dbReference type="PDBsum" id="1QSE"/>
<dbReference type="PDBsum" id="1QSF"/>
<dbReference type="PDBsum" id="1QVO"/>
<dbReference type="PDBsum" id="1R3H"/>
<dbReference type="PDBsum" id="1S8D"/>
<dbReference type="PDBsum" id="1S9W"/>
<dbReference type="PDBsum" id="1S9X"/>
<dbReference type="PDBsum" id="1S9Y"/>
<dbReference type="PDBsum" id="1SYS"/>
<dbReference type="PDBsum" id="1SYV"/>
<dbReference type="PDBsum" id="1T1W"/>
<dbReference type="PDBsum" id="1T1X"/>
<dbReference type="PDBsum" id="1T1Y"/>
<dbReference type="PDBsum" id="1T1Z"/>
<dbReference type="PDBsum" id="1T20"/>
<dbReference type="PDBsum" id="1T21"/>
<dbReference type="PDBsum" id="1T22"/>
<dbReference type="PDBsum" id="1TMC"/>
<dbReference type="PDBsum" id="1TVB"/>
<dbReference type="PDBsum" id="1TVH"/>
<dbReference type="PDBsum" id="1UQS"/>
<dbReference type="PDBsum" id="1UXS"/>
<dbReference type="PDBsum" id="1UXW"/>
<dbReference type="PDBsum" id="1VGK"/>
<dbReference type="PDBsum" id="1W0V"/>
<dbReference type="PDBsum" id="1W0W"/>
<dbReference type="PDBsum" id="1W72"/>
<dbReference type="PDBsum" id="1X7Q"/>
<dbReference type="PDBsum" id="1XH3"/>
<dbReference type="PDBsum" id="1XR8"/>
<dbReference type="PDBsum" id="1XR9"/>
<dbReference type="PDBsum" id="1XZ0"/>
<dbReference type="PDBsum" id="1YDP"/>
<dbReference type="PDBsum" id="1YPZ"/>
<dbReference type="PDBsum" id="1ZHK"/>
<dbReference type="PDBsum" id="1ZHL"/>
<dbReference type="PDBsum" id="1ZS8"/>
<dbReference type="PDBsum" id="1ZSD"/>
<dbReference type="PDBsum" id="1ZT4"/>
<dbReference type="PDBsum" id="1ZVS"/>
<dbReference type="PDBsum" id="2A83"/>
<dbReference type="PDBsum" id="2AK4"/>
<dbReference type="PDBsum" id="2AV1"/>
<dbReference type="PDBsum" id="2AV7"/>
<dbReference type="PDBsum" id="2AXF"/>
<dbReference type="PDBsum" id="2AXG"/>
<dbReference type="PDBsum" id="2BCK"/>
<dbReference type="PDBsum" id="2BNQ"/>
<dbReference type="PDBsum" id="2BNR"/>
<dbReference type="PDBsum" id="2BSR"/>
<dbReference type="PDBsum" id="2BSS"/>
<dbReference type="PDBsum" id="2BST"/>
<dbReference type="PDBsum" id="2BVO"/>
<dbReference type="PDBsum" id="2BVP"/>
<dbReference type="PDBsum" id="2BVQ"/>
<dbReference type="PDBsum" id="2C7U"/>
<dbReference type="PDBsum" id="2CII"/>
<dbReference type="PDBsum" id="2CIK"/>
<dbReference type="PDBsum" id="2CLR"/>
<dbReference type="PDBsum" id="2D31"/>
<dbReference type="PDBsum" id="2D4D"/>
<dbReference type="PDBsum" id="2D4F"/>
<dbReference type="PDBsum" id="2DYP"/>
<dbReference type="PDBsum" id="2E8D"/>
<dbReference type="PDBsum" id="2ESV"/>
<dbReference type="PDBsum" id="2F53"/>
<dbReference type="PDBsum" id="2F54"/>
<dbReference type="PDBsum" id="2F74"/>
<dbReference type="PDBsum" id="2F8O"/>
<dbReference type="PDBsum" id="2FYY"/>
<dbReference type="PDBsum" id="2FZ3"/>
<dbReference type="PDBsum" id="2GIT"/>
<dbReference type="PDBsum" id="2GJ6"/>
<dbReference type="PDBsum" id="2GT9"/>
<dbReference type="PDBsum" id="2GTW"/>
<dbReference type="PDBsum" id="2GTZ"/>
<dbReference type="PDBsum" id="2GUO"/>
<dbReference type="PDBsum" id="2H26"/>
<dbReference type="PDBsum" id="2H6P"/>
<dbReference type="PDBsum" id="2HJK"/>
<dbReference type="PDBsum" id="2HJL"/>
<dbReference type="PDBsum" id="2HLA"/>
<dbReference type="PDBsum" id="2HN7"/>
<dbReference type="PDBsum" id="2J8U"/>
<dbReference type="PDBsum" id="2JCC"/>
<dbReference type="PDBsum" id="2NW3"/>
<dbReference type="PDBsum" id="2NX5"/>
<dbReference type="PDBsum" id="2P5E"/>
<dbReference type="PDBsum" id="2P5W"/>
<dbReference type="PDBsum" id="2PO6"/>
<dbReference type="PDBsum" id="2PYE"/>
<dbReference type="PDBsum" id="2RFX"/>
<dbReference type="PDBsum" id="2UWE"/>
<dbReference type="PDBsum" id="2V2W"/>
<dbReference type="PDBsum" id="2V2X"/>
<dbReference type="PDBsum" id="2VB5"/>
<dbReference type="PDBsum" id="2VLJ"/>
<dbReference type="PDBsum" id="2VLK"/>
<dbReference type="PDBsum" id="2VLL"/>
<dbReference type="PDBsum" id="2VLR"/>
<dbReference type="PDBsum" id="2X4N"/>
<dbReference type="PDBsum" id="2X4O"/>
<dbReference type="PDBsum" id="2X4P"/>
<dbReference type="PDBsum" id="2X4Q"/>
<dbReference type="PDBsum" id="2X4R"/>
<dbReference type="PDBsum" id="2X4S"/>
<dbReference type="PDBsum" id="2X4T"/>
<dbReference type="PDBsum" id="2X4U"/>
<dbReference type="PDBsum" id="2X70"/>
<dbReference type="PDBsum" id="2X89"/>
<dbReference type="PDBsum" id="2XKS"/>
<dbReference type="PDBsum" id="2XKU"/>
<dbReference type="PDBsum" id="2XPG"/>
<dbReference type="PDBsum" id="2YPK"/>
<dbReference type="PDBsum" id="2YPL"/>
<dbReference type="PDBsum" id="2YXF"/>
<dbReference type="PDBsum" id="2Z9T"/>
<dbReference type="PDBsum" id="3AM8"/>
<dbReference type="PDBsum" id="3B3I"/>
<dbReference type="PDBsum" id="3B6S"/>
<dbReference type="PDBsum" id="3BGM"/>
<dbReference type="PDBsum" id="3BH8"/>
<dbReference type="PDBsum" id="3BH9"/>
<dbReference type="PDBsum" id="3BHB"/>
<dbReference type="PDBsum" id="3BO8"/>
<dbReference type="PDBsum" id="3BP4"/>
<dbReference type="PDBsum" id="3BP7"/>
<dbReference type="PDBsum" id="3BVN"/>
<dbReference type="PDBsum" id="3BW9"/>
<dbReference type="PDBsum" id="3BWA"/>
<dbReference type="PDBsum" id="3BXN"/>
<dbReference type="PDBsum" id="3BZE"/>
<dbReference type="PDBsum" id="3BZF"/>
<dbReference type="PDBsum" id="3C9N"/>
<dbReference type="PDBsum" id="3CDG"/>
<dbReference type="PDBsum" id="3CII"/>
<dbReference type="PDBsum" id="3CIQ"/>
<dbReference type="PDBsum" id="3CZF"/>
<dbReference type="PDBsum" id="3D18"/>
<dbReference type="PDBsum" id="3D25"/>
<dbReference type="PDBsum" id="3D2U"/>
<dbReference type="PDBsum" id="3D39"/>
<dbReference type="PDBsum" id="3D3V"/>
<dbReference type="PDBsum" id="3DBX"/>
<dbReference type="PDBsum" id="3DHJ"/>
<dbReference type="PDBsum" id="3DHM"/>
<dbReference type="PDBsum" id="3DTX"/>
<dbReference type="PDBsum" id="3DX6"/>
<dbReference type="PDBsum" id="3DX7"/>
<dbReference type="PDBsum" id="3DX8"/>
<dbReference type="PDBsum" id="3DXA"/>
<dbReference type="PDBsum" id="3EKC"/>
<dbReference type="PDBsum" id="3FFC"/>
<dbReference type="PDBsum" id="3FQN"/>
<dbReference type="PDBsum" id="3FQR"/>
<dbReference type="PDBsum" id="3FQT"/>
<dbReference type="PDBsum" id="3FQU"/>
<dbReference type="PDBsum" id="3FQW"/>
<dbReference type="PDBsum" id="3FQX"/>
<dbReference type="PDBsum" id="3FT2"/>
<dbReference type="PDBsum" id="3FT3"/>
<dbReference type="PDBsum" id="3FT4"/>
<dbReference type="PDBsum" id="3GIV"/>
<dbReference type="PDBsum" id="3GJF"/>
<dbReference type="PDBsum" id="3GSN"/>
<dbReference type="PDBsum" id="3GSO"/>
<dbReference type="PDBsum" id="3GSQ"/>
<dbReference type="PDBsum" id="3GSR"/>
<dbReference type="PDBsum" id="3GSU"/>
<dbReference type="PDBsum" id="3GSV"/>
<dbReference type="PDBsum" id="3GSW"/>
<dbReference type="PDBsum" id="3GSX"/>
<dbReference type="PDBsum" id="3H7B"/>
<dbReference type="PDBsum" id="3H9H"/>
<dbReference type="PDBsum" id="3H9S"/>
<dbReference type="PDBsum" id="3HAE"/>
<dbReference type="PDBsum" id="3HCV"/>
<dbReference type="PDBsum" id="3HG1"/>
<dbReference type="PDBsum" id="3HLA"/>
<dbReference type="PDBsum" id="3HPJ"/>
<dbReference type="PDBsum" id="3HUJ"/>
<dbReference type="PDBsum" id="3I6G"/>
<dbReference type="PDBsum" id="3I6K"/>
<dbReference type="PDBsum" id="3I6L"/>
<dbReference type="PDBsum" id="3IB4"/>
<dbReference type="PDBsum" id="3IXA"/>
<dbReference type="PDBsum" id="3JTS"/>
<dbReference type="PDBsum" id="3KLA"/>
<dbReference type="PDBsum" id="3KPL"/>
<dbReference type="PDBsum" id="3KPM"/>
<dbReference type="PDBsum" id="3KPN"/>
<dbReference type="PDBsum" id="3KPO"/>
<dbReference type="PDBsum" id="3KPP"/>
<dbReference type="PDBsum" id="3KPQ"/>
<dbReference type="PDBsum" id="3KPR"/>
<dbReference type="PDBsum" id="3KPS"/>
<dbReference type="PDBsum" id="3KWW"/>
<dbReference type="PDBsum" id="3KXF"/>
<dbReference type="PDBsum" id="3KYN"/>
<dbReference type="PDBsum" id="3KYO"/>
<dbReference type="PDBsum" id="3L3D"/>
<dbReference type="PDBsum" id="3L3G"/>
<dbReference type="PDBsum" id="3L3I"/>
<dbReference type="PDBsum" id="3L3J"/>
<dbReference type="PDBsum" id="3L3K"/>
<dbReference type="PDBsum" id="3LKN"/>
<dbReference type="PDBsum" id="3LKO"/>
<dbReference type="PDBsum" id="3LKP"/>
<dbReference type="PDBsum" id="3LKQ"/>
<dbReference type="PDBsum" id="3LKR"/>
<dbReference type="PDBsum" id="3LKS"/>
<dbReference type="PDBsum" id="3LN4"/>
<dbReference type="PDBsum" id="3LN5"/>
<dbReference type="PDBsum" id="3LOW"/>
<dbReference type="PDBsum" id="3LOZ"/>
<dbReference type="PDBsum" id="3LV3"/>
<dbReference type="PDBsum" id="3M17"/>
<dbReference type="PDBsum" id="3M1B"/>
<dbReference type="PDBsum" id="3MGO"/>
<dbReference type="PDBsum" id="3MGT"/>
<dbReference type="PDBsum" id="3MR9"/>
<dbReference type="PDBsum" id="3MRB"/>
<dbReference type="PDBsum" id="3MRC"/>
<dbReference type="PDBsum" id="3MRD"/>
<dbReference type="PDBsum" id="3MRE"/>
<dbReference type="PDBsum" id="3MRF"/>
<dbReference type="PDBsum" id="3MRG"/>
<dbReference type="PDBsum" id="3MRH"/>
<dbReference type="PDBsum" id="3MRI"/>
<dbReference type="PDBsum" id="3MRJ"/>
<dbReference type="PDBsum" id="3MRK"/>
<dbReference type="PDBsum" id="3MRL"/>
<dbReference type="PDBsum" id="3MRM"/>
<dbReference type="PDBsum" id="3MRN"/>
<dbReference type="PDBsum" id="3MRO"/>
<dbReference type="PDBsum" id="3MRP"/>
<dbReference type="PDBsum" id="3MRQ"/>
<dbReference type="PDBsum" id="3MRR"/>
<dbReference type="PDBsum" id="3MV7"/>
<dbReference type="PDBsum" id="3MV8"/>
<dbReference type="PDBsum" id="3MV9"/>
<dbReference type="PDBsum" id="3MYJ"/>
<dbReference type="PDBsum" id="3MYZ"/>
<dbReference type="PDBsum" id="3MZT"/>
<dbReference type="PDBsum" id="3NA4"/>
<dbReference type="PDBsum" id="3NFN"/>
<dbReference type="PDBsum" id="3O3A"/>
<dbReference type="PDBsum" id="3O3B"/>
<dbReference type="PDBsum" id="3O3D"/>
<dbReference type="PDBsum" id="3O3E"/>
<dbReference type="PDBsum" id="3O4L"/>
<dbReference type="PDBsum" id="3OV6"/>
<dbReference type="PDBsum" id="3OX8"/>
<dbReference type="PDBsum" id="3OXR"/>
<dbReference type="PDBsum" id="3OXS"/>
<dbReference type="PDBsum" id="3PWJ"/>
<dbReference type="PDBsum" id="3PWL"/>
<dbReference type="PDBsum" id="3PWN"/>
<dbReference type="PDBsum" id="3PWP"/>
<dbReference type="PDBsum" id="3QDA"/>
<dbReference type="PDBsum" id="3QDG"/>
<dbReference type="PDBsum" id="3QDJ"/>
<dbReference type="PDBsum" id="3QDM"/>
<dbReference type="PDBsum" id="3QEQ"/>
<dbReference type="PDBsum" id="3QFD"/>
<dbReference type="PDBsum" id="3QFJ"/>
<dbReference type="PDBsum" id="3QZW"/>
<dbReference type="PDBsum" id="3REW"/>
<dbReference type="PDBsum" id="3RL1"/>
<dbReference type="PDBsum" id="3RL2"/>
<dbReference type="PDBsum" id="3RWJ"/>
<dbReference type="PDBsum" id="3S6C"/>
<dbReference type="PDBsum" id="3SDX"/>
<dbReference type="PDBsum" id="3SJV"/>
<dbReference type="PDBsum" id="3SKM"/>
<dbReference type="PDBsum" id="3SKO"/>
<dbReference type="PDBsum" id="3SPV"/>
<dbReference type="PDBsum" id="3T8X"/>
<dbReference type="PDBsum" id="3TID"/>
<dbReference type="PDBsum" id="3TIE"/>
<dbReference type="PDBsum" id="3TLR"/>
<dbReference type="PDBsum" id="3TM6"/>
<dbReference type="PDBsum" id="3TO2"/>
<dbReference type="PDBsum" id="3TZV"/>
<dbReference type="PDBsum" id="3U0P"/>
<dbReference type="PDBsum" id="3UPR"/>
<dbReference type="PDBsum" id="3UTQ"/>
<dbReference type="PDBsum" id="3UTS"/>
<dbReference type="PDBsum" id="3UTT"/>
<dbReference type="PDBsum" id="3V5D"/>
<dbReference type="PDBsum" id="3V5H"/>
<dbReference type="PDBsum" id="3V5K"/>
<dbReference type="PDBsum" id="3VCL"/>
<dbReference type="PDBsum" id="3VFM"/>
<dbReference type="PDBsum" id="3VFN"/>
<dbReference type="PDBsum" id="3VFO"/>
<dbReference type="PDBsum" id="3VFP"/>
<dbReference type="PDBsum" id="3VFR"/>
<dbReference type="PDBsum" id="3VFS"/>
<dbReference type="PDBsum" id="3VFT"/>
<dbReference type="PDBsum" id="3VFU"/>
<dbReference type="PDBsum" id="3VFV"/>
<dbReference type="PDBsum" id="3VFW"/>
<dbReference type="PDBsum" id="3VH8"/>
<dbReference type="PDBsum" id="3VRI"/>
<dbReference type="PDBsum" id="3VRJ"/>
<dbReference type="PDBsum" id="3VWJ"/>
<dbReference type="PDBsum" id="3VWK"/>
<dbReference type="PDBsum" id="3VXM"/>
<dbReference type="PDBsum" id="3VXN"/>
<dbReference type="PDBsum" id="3VXO"/>
<dbReference type="PDBsum" id="3VXP"/>
<dbReference type="PDBsum" id="3VXR"/>
<dbReference type="PDBsum" id="3VXS"/>
<dbReference type="PDBsum" id="3VXU"/>
<dbReference type="PDBsum" id="3W0W"/>
<dbReference type="PDBsum" id="3W39"/>
<dbReference type="PDBsum" id="3WL9"/>
<dbReference type="PDBsum" id="3WLB"/>
<dbReference type="PDBsum" id="3WUW"/>
<dbReference type="PDBsum" id="3X11"/>
<dbReference type="PDBsum" id="3X12"/>
<dbReference type="PDBsum" id="3X13"/>
<dbReference type="PDBsum" id="3X14"/>
<dbReference type="PDBsum" id="4E0K"/>
<dbReference type="PDBsum" id="4E0L"/>
<dbReference type="PDBsum" id="4E5X"/>
<dbReference type="PDBsum" id="4EN3"/>
<dbReference type="PDBsum" id="4EUP"/>
<dbReference type="PDBsum" id="4F7M"/>
<dbReference type="PDBsum" id="4F7P"/>
<dbReference type="PDBsum" id="4F7T"/>
<dbReference type="PDBsum" id="4FTV"/>
<dbReference type="PDBsum" id="4FXL"/>
<dbReference type="PDBsum" id="4G8G"/>
<dbReference type="PDBsum" id="4G8I"/>
<dbReference type="PDBsum" id="4G9D"/>
<dbReference type="PDBsum" id="4G9F"/>
<dbReference type="PDBsum" id="4GKN"/>
<dbReference type="PDBsum" id="4GKS"/>
<dbReference type="PDBsum" id="4GUP"/>
<dbReference type="PDBsum" id="4HKJ"/>
<dbReference type="PDBsum" id="4HWZ"/>
<dbReference type="PDBsum" id="4HX1"/>
<dbReference type="PDBsum" id="4I48"/>
<dbReference type="PDBsum" id="4I4W"/>
<dbReference type="PDBsum" id="4JFD"/>
<dbReference type="PDBsum" id="4JFE"/>
<dbReference type="PDBsum" id="4JFF"/>
<dbReference type="PDBsum" id="4JFO"/>
<dbReference type="PDBsum" id="4JFP"/>
<dbReference type="PDBsum" id="4JFQ"/>
<dbReference type="PDBsum" id="4JQV"/>
<dbReference type="PDBsum" id="4JQX"/>
<dbReference type="PDBsum" id="4JRX"/>
<dbReference type="PDBsum" id="4JRY"/>
<dbReference type="PDBsum" id="4K71"/>
<dbReference type="PDBsum" id="4K7F"/>
<dbReference type="PDBsum" id="4KDT"/>
<dbReference type="PDBsum" id="4L29"/>
<dbReference type="PDBsum" id="4L3C"/>
<dbReference type="PDBsum" id="4L3E"/>
<dbReference type="PDBsum" id="4L4T"/>
<dbReference type="PDBsum" id="4L4V"/>
<dbReference type="PDBsum" id="4LCW"/>
<dbReference type="PDBsum" id="4LCY"/>
<dbReference type="PDBsum" id="4LHU"/>
<dbReference type="PDBsum" id="4LNR"/>
<dbReference type="PDBsum" id="4M8V"/>
<dbReference type="PDBsum" id="4MJ5"/>
<dbReference type="PDBsum" id="4MJ6"/>
<dbReference type="PDBsum" id="4MJI"/>
<dbReference type="PDBsum" id="4MNQ"/>
<dbReference type="PDBsum" id="4N0F"/>
<dbReference type="PDBsum" id="4N0U"/>
<dbReference type="PDBsum" id="4N8V"/>
<dbReference type="PDBsum" id="4NNX"/>
<dbReference type="PDBsum" id="4NNY"/>
<dbReference type="PDBsum" id="4NO0"/>
<dbReference type="PDBsum" id="4NO2"/>
<dbReference type="PDBsum" id="4NO3"/>
<dbReference type="PDBsum" id="4NO5"/>
<dbReference type="PDBsum" id="4NQC"/>
<dbReference type="PDBsum" id="4NQD"/>
<dbReference type="PDBsum" id="4NQE"/>
<dbReference type="PDBsum" id="4NQV"/>
<dbReference type="PDBsum" id="4NQX"/>
<dbReference type="PDBsum" id="4NT6"/>
<dbReference type="PDBsum" id="4O2C"/>
<dbReference type="PDBsum" id="4O2E"/>
<dbReference type="PDBsum" id="4O2F"/>
<dbReference type="PDBsum" id="4ONO"/>
<dbReference type="PDBsum" id="4PJ5"/>
<dbReference type="PDBsum" id="4PJ7"/>
<dbReference type="PDBsum" id="4PJ8"/>
<dbReference type="PDBsum" id="4PJ9"/>
<dbReference type="PDBsum" id="4PJA"/>
<dbReference type="PDBsum" id="4PJB"/>
<dbReference type="PDBsum" id="4PJC"/>
<dbReference type="PDBsum" id="4PJD"/>
<dbReference type="PDBsum" id="4PJE"/>
<dbReference type="PDBsum" id="4PJF"/>
<dbReference type="PDBsum" id="4PJG"/>
<dbReference type="PDBsum" id="4PJH"/>
<dbReference type="PDBsum" id="4PJI"/>
<dbReference type="PDBsum" id="4PJX"/>
<dbReference type="PDBsum" id="4PR5"/>
<dbReference type="PDBsum" id="4PRA"/>
<dbReference type="PDBsum" id="4PRB"/>
<dbReference type="PDBsum" id="4PRD"/>
<dbReference type="PDBsum" id="4PRE"/>
<dbReference type="PDBsum" id="4PRH"/>
<dbReference type="PDBsum" id="4PRI"/>
<dbReference type="PDBsum" id="4PRN"/>
<dbReference type="PDBsum" id="4PRP"/>
<dbReference type="PDBsum" id="4QOK"/>
<dbReference type="PDBsum" id="4QRP"/>
<dbReference type="PDBsum" id="4QRQ"/>
<dbReference type="PDBsum" id="4QRR"/>
<dbReference type="PDBsum" id="4QRS"/>
<dbReference type="PDBsum" id="4QRT"/>
<dbReference type="PDBsum" id="4QRU"/>
<dbReference type="PDBsum" id="4R9H"/>
<dbReference type="PDBsum" id="4RA3"/>
<dbReference type="PDBsum" id="4RAH"/>
<dbReference type="PDBsum" id="4RMQ"/>
<dbReference type="PDBsum" id="4RMR"/>
<dbReference type="PDBsum" id="4RMS"/>
<dbReference type="PDBsum" id="4RMT"/>
<dbReference type="PDBsum" id="4RMU"/>
<dbReference type="PDBsum" id="4RMV"/>
<dbReference type="PDBsum" id="4RMW"/>
<dbReference type="PDBsum" id="4U1H"/>
<dbReference type="PDBsum" id="4U1I"/>
<dbReference type="PDBsum" id="4U1J"/>
<dbReference type="PDBsum" id="4U1K"/>
<dbReference type="PDBsum" id="4U1L"/>
<dbReference type="PDBsum" id="4U1M"/>
<dbReference type="PDBsum" id="4U1N"/>
<dbReference type="PDBsum" id="4U1S"/>
<dbReference type="PDBsum" id="4U6X"/>
<dbReference type="PDBsum" id="4U6Y"/>
<dbReference type="PDBsum" id="4UQ2"/>
<dbReference type="PDBsum" id="4UQ3"/>
<dbReference type="PDBsum" id="4WC8"/>
<dbReference type="PDBsum" id="4WDI"/>
<dbReference type="PDBsum" id="4WJ5"/>
<dbReference type="PDBsum" id="4WO4"/>
<dbReference type="PDBsum" id="4WU5"/>
<dbReference type="PDBsum" id="4WU7"/>
<dbReference type="PDBsum" id="4WUU"/>
<dbReference type="PDBsum" id="4WW2"/>
<dbReference type="PDBsum" id="4WWK"/>
<dbReference type="PDBsum" id="4X0S"/>
<dbReference type="PDBsum" id="4X6C"/>
<dbReference type="PDBsum" id="4X6D"/>
<dbReference type="PDBsum" id="4X6E"/>
<dbReference type="PDBsum" id="4X6F"/>
<dbReference type="PDBsum" id="4XXC"/>
<dbReference type="PDBsum" id="4Z76"/>
<dbReference type="PDBsum" id="4Z77"/>
<dbReference type="PDBsum" id="4Z78"/>
<dbReference type="PDBsum" id="5B38"/>
<dbReference type="PDBsum" id="5B39"/>
<dbReference type="PDBsum" id="5BJT"/>
<dbReference type="PDBsum" id="5BRZ"/>
<dbReference type="PDBsum" id="5BS0"/>
<dbReference type="PDBsum" id="5BXF"/>
<dbReference type="PDBsum" id="5C07"/>
<dbReference type="PDBsum" id="5C08"/>
<dbReference type="PDBsum" id="5C09"/>
<dbReference type="PDBsum" id="5C0A"/>
<dbReference type="PDBsum" id="5C0B"/>
<dbReference type="PDBsum" id="5C0C"/>
<dbReference type="PDBsum" id="5C0D"/>
<dbReference type="PDBsum" id="5C0E"/>
<dbReference type="PDBsum" id="5C0F"/>
<dbReference type="PDBsum" id="5C0G"/>
<dbReference type="PDBsum" id="5C0I"/>
<dbReference type="PDBsum" id="5C0J"/>
<dbReference type="PDBsum" id="5C9J"/>
<dbReference type="PDBsum" id="5CFH"/>
<dbReference type="PDBsum" id="5CKA"/>
<dbReference type="PDBsum" id="5CKG"/>
<dbReference type="PDBsum" id="5CS7"/>
<dbReference type="PDBsum" id="5CSB"/>
<dbReference type="PDBsum" id="5CSG"/>
<dbReference type="PDBsum" id="5D2L"/>
<dbReference type="PDBsum" id="5D2N"/>
<dbReference type="PDBsum" id="5D5M"/>
<dbReference type="PDBsum" id="5D7I"/>
<dbReference type="PDBsum" id="5D7J"/>
<dbReference type="PDBsum" id="5D7L"/>
<dbReference type="PDBsum" id="5D9S"/>
<dbReference type="PDBsum" id="5DDH"/>
<dbReference type="PDBsum" id="5DEF"/>
<dbReference type="PDBsum" id="5DEG"/>
<dbReference type="PDBsum" id="5E00"/>
<dbReference type="PDBsum" id="5E6I"/>
<dbReference type="PDBsum" id="5E9D"/>
<dbReference type="PDBsum" id="5ENW"/>
<dbReference type="PDBsum" id="5EO0"/>
<dbReference type="PDBsum" id="5EO1"/>
<dbReference type="PDBsum" id="5EOT"/>
<dbReference type="PDBsum" id="5EU3"/>
<dbReference type="PDBsum" id="5EU4"/>
<dbReference type="PDBsum" id="5EU5"/>
<dbReference type="PDBsum" id="5EU6"/>
<dbReference type="PDBsum" id="5EUO"/>
<dbReference type="PDBsum" id="5F1I"/>
<dbReference type="PDBsum" id="5F7D"/>
<dbReference type="PDBsum" id="5F9J"/>
<dbReference type="PDBsum" id="5FA3"/>
<dbReference type="PDBsum" id="5FA4"/>
<dbReference type="PDBsum" id="5FDW"/>
<dbReference type="PDBsum" id="5GR7"/>
<dbReference type="PDBsum" id="5GRD"/>
<dbReference type="PDBsum" id="5GRG"/>
<dbReference type="PDBsum" id="5GSB"/>
<dbReference type="PDBsum" id="5GSD"/>
<dbReference type="PDBsum" id="5GSR"/>
<dbReference type="PDBsum" id="5GSV"/>
<dbReference type="PDBsum" id="5GSX"/>
<dbReference type="PDBsum" id="5HGA"/>
<dbReference type="PDBsum" id="5HGB"/>
<dbReference type="PDBsum" id="5HGD"/>
<dbReference type="PDBsum" id="5HGH"/>
<dbReference type="PDBsum" id="5HHM"/>
<dbReference type="PDBsum" id="5HHN"/>
<dbReference type="PDBsum" id="5HHO"/>
<dbReference type="PDBsum" id="5HHP"/>
<dbReference type="PDBsum" id="5HHQ"/>
<dbReference type="PDBsum" id="5HYJ"/>
<dbReference type="PDBsum" id="5IB1"/>
<dbReference type="PDBsum" id="5IB2"/>
<dbReference type="PDBsum" id="5IB3"/>
<dbReference type="PDBsum" id="5IB4"/>
<dbReference type="PDBsum" id="5IB5"/>
<dbReference type="PDBsum" id="5IEH"/>
<dbReference type="PDBsum" id="5IEK"/>
<dbReference type="PDBsum" id="5IM7"/>
<dbReference type="PDBsum" id="5INC"/>
<dbReference type="PDBsum" id="5IND"/>
<dbReference type="PDBsum" id="5IRO"/>
<dbReference type="PDBsum" id="5ISZ"/>
<dbReference type="PDBsum" id="5IUE"/>
<dbReference type="PDBsum" id="5J1A"/>
<dbReference type="PDBsum" id="5JHD"/>
<dbReference type="PDBsum" id="5JZI"/>
<dbReference type="PDBsum" id="5KNM"/>
<dbReference type="PDBsum" id="5L2J"/>
<dbReference type="PDBsum" id="5L2K"/>
<dbReference type="PDBsum" id="5MEN"/>
<dbReference type="PDBsum" id="5MEO"/>
<dbReference type="PDBsum" id="5MEP"/>
<dbReference type="PDBsum" id="5MEQ"/>
<dbReference type="PDBsum" id="5MER"/>
<dbReference type="PDBsum" id="5N1Y"/>
<dbReference type="PDBsum" id="5N6B"/>
<dbReference type="PDBsum" id="5NHT"/>
<dbReference type="PDBsum" id="5NME"/>
<dbReference type="PDBsum" id="5NMF"/>
<dbReference type="PDBsum" id="5NMG"/>
<dbReference type="PDBsum" id="5NMH"/>
<dbReference type="PDBsum" id="5NMK"/>
<dbReference type="PDBsum" id="5NQ1"/>
<dbReference type="PDBsum" id="5NQ3"/>
<dbReference type="PDBsum" id="5NQK"/>
<dbReference type="PDBsum" id="5OPI"/>
<dbReference type="PDBsum" id="5SWQ"/>
<dbReference type="PDBsum" id="5T6W"/>
<dbReference type="PDBsum" id="5T6X"/>
<dbReference type="PDBsum" id="5T6Y"/>
<dbReference type="PDBsum" id="5T6Z"/>
<dbReference type="PDBsum" id="5T70"/>
<dbReference type="PDBsum" id="5TEZ"/>
<dbReference type="PDBsum" id="5TRZ"/>
<dbReference type="PDBsum" id="5TS1"/>
<dbReference type="PDBsum" id="5TXS"/>
<dbReference type="PDBsum" id="5U16"/>
<dbReference type="PDBsum" id="5U17"/>
<dbReference type="PDBsum" id="5U1R"/>
<dbReference type="PDBsum" id="5U2V"/>
<dbReference type="PDBsum" id="5U6Q"/>
<dbReference type="PDBsum" id="5U72"/>
<dbReference type="PDBsum" id="5U98"/>
<dbReference type="PDBsum" id="5V5L"/>
<dbReference type="PDBsum" id="5V5M"/>
<dbReference type="PDBsum" id="5VGD"/>
<dbReference type="PDBsum" id="5VGE"/>
<dbReference type="PDBsum" id="5VUD"/>
<dbReference type="PDBsum" id="5VUE"/>
<dbReference type="PDBsum" id="5VUF"/>
<dbReference type="PDBsum" id="5VVP"/>
<dbReference type="PDBsum" id="5VWD"/>
<dbReference type="PDBsum" id="5VWF"/>
<dbReference type="PDBsum" id="5VWH"/>
<dbReference type="PDBsum" id="5VWJ"/>
<dbReference type="PDBsum" id="5VZ5"/>
<dbReference type="PDBsum" id="5W1V"/>
<dbReference type="PDBsum" id="5W1W"/>
<dbReference type="PDBsum" id="5W67"/>
<dbReference type="PDBsum" id="5W69"/>
<dbReference type="PDBsum" id="5W6A"/>
<dbReference type="PDBsum" id="5WER"/>
<dbReference type="PDBsum" id="5WHK"/>
<dbReference type="PDBsum" id="5WJL"/>
<dbReference type="PDBsum" id="5WJN"/>
<dbReference type="PDBsum" id="5WKE"/>
<dbReference type="PDBsum" id="5WKF"/>
<dbReference type="PDBsum" id="5WKG"/>
<dbReference type="PDBsum" id="5WKH"/>
<dbReference type="PDBsum" id="5WKI"/>
<dbReference type="PDBsum" id="5WL1"/>
<dbReference type="PDBsum" id="5WMN"/>
<dbReference type="PDBsum" id="5WMO"/>
<dbReference type="PDBsum" id="5WMP"/>
<dbReference type="PDBsum" id="5WMQ"/>
<dbReference type="PDBsum" id="5WMR"/>
<dbReference type="PDBsum" id="5WSH"/>
<dbReference type="PDBsum" id="5WWI"/>
<dbReference type="PDBsum" id="5WWJ"/>
<dbReference type="PDBsum" id="5WWU"/>
<dbReference type="PDBsum" id="5WXC"/>
<dbReference type="PDBsum" id="5WXD"/>
<dbReference type="PDBsum" id="5XOS"/>
<dbReference type="PDBsum" id="5XOT"/>
<dbReference type="PDBsum" id="5XOV"/>
<dbReference type="PDBsum" id="5YXN"/>
<dbReference type="PDBsum" id="5YXU"/>
<dbReference type="PDBsum" id="6AEE"/>
<dbReference type="PDBsum" id="6AM5"/>
<dbReference type="PDBsum" id="6AMT"/>
<dbReference type="PDBsum" id="6AMU"/>
<dbReference type="PDBsum" id="6APN"/>
<dbReference type="PDBsum" id="6AT5"/>
<dbReference type="PDBsum" id="6AT9"/>
<dbReference type="PDBsum" id="6AVF"/>
<dbReference type="PDBsum" id="6AVG"/>
<dbReference type="PDBsum" id="6BJ2"/>
<dbReference type="PDBsum" id="6BJ3"/>
<dbReference type="PDBsum" id="6BJ8"/>
<dbReference type="PDBsum" id="6BXP"/>
<dbReference type="PDBsum" id="6BXQ"/>
<dbReference type="PDBsum" id="6C09"/>
<dbReference type="PDBsum" id="6C15"/>
<dbReference type="PDBsum" id="6C97"/>
<dbReference type="PDBsum" id="6C98"/>
<dbReference type="PDBsum" id="6C99"/>
<dbReference type="PDBsum" id="6CUG"/>
<dbReference type="PDBsum" id="6D29"/>
<dbReference type="PDBsum" id="6D2B"/>
<dbReference type="PDBsum" id="6D2R"/>
<dbReference type="PDBsum" id="6D2T"/>
<dbReference type="PDBsum" id="6D64"/>
<dbReference type="PDBsum" id="6D78"/>
<dbReference type="PDBsum" id="6DKP"/>
<dbReference type="PDBsum" id="6EI2"/>
<dbReference type="PDBsum" id="6ENY"/>
<dbReference type="PDBsum" id="6EQA"/>
<dbReference type="PDBsum" id="6EQB"/>
<dbReference type="PDBsum" id="6EWA"/>
<dbReference type="PDBsum" id="6EWC"/>
<dbReference type="PDBsum" id="6EWO"/>
<dbReference type="PDBsum" id="6FGB"/>
<dbReference type="PDBsum" id="6G3J"/>
<dbReference type="PDBsum" id="6G3K"/>
<dbReference type="PDBsum" id="6GGM"/>
<dbReference type="PDBsum" id="6GH1"/>
<dbReference type="PDBsum" id="6GH4"/>
<dbReference type="PDBsum" id="6GHN"/>
<dbReference type="PDBsum" id="6GK3"/>
<dbReference type="PDBsum" id="6GL1"/>
<dbReference type="PDBsum" id="6ID4"/>
<dbReference type="PDBsum" id="6IEX"/>
<dbReference type="PDBsum" id="6ILM"/>
<dbReference type="PDBsum" id="6J1V"/>
<dbReference type="PDBsum" id="6J1W"/>
<dbReference type="PDBsum" id="6J29"/>
<dbReference type="PDBsum" id="6J2A"/>
<dbReference type="PDBsum" id="6J2E"/>
<dbReference type="PDBsum" id="6J2G"/>
<dbReference type="PDBsum" id="6J2H"/>
<dbReference type="PDBsum" id="6J2I"/>
<dbReference type="PDBsum" id="6J2J"/>
<dbReference type="PDBsum" id="6JOZ"/>
<dbReference type="PDBsum" id="6JP3"/>
<dbReference type="PDBsum" id="6JTN"/>
<dbReference type="PDBsum" id="6JTO"/>
<dbReference type="PDBsum" id="6JTP"/>
<dbReference type="PDBsum" id="6K60"/>
<dbReference type="PDBsum" id="6K7T"/>
<dbReference type="PDBsum" id="6LA6"/>
<dbReference type="PDBsum" id="6LA7"/>
<dbReference type="PDBsum" id="6M1B"/>
<dbReference type="PDBsum" id="6M24"/>
<dbReference type="PDBsum" id="6M2J"/>
<dbReference type="PDBsum" id="6M2K"/>
<dbReference type="PDBsum" id="6MPP"/>
<dbReference type="PDBsum" id="6MT3"/>
<dbReference type="PDBsum" id="6MT4"/>
<dbReference type="PDBsum" id="6MT5"/>
<dbReference type="PDBsum" id="6MT6"/>
<dbReference type="PDBsum" id="6MTL"/>
<dbReference type="PDBsum" id="6MTM"/>
<dbReference type="PDBsum" id="6MWR"/>
<dbReference type="PDBsum" id="6NCA"/>
<dbReference type="PDBsum" id="6NHA"/>
<dbReference type="PDBsum" id="6NPR"/>
<dbReference type="PDBsum" id="6NUX"/>
<dbReference type="PDBsum" id="6O4Y"/>
<dbReference type="PDBsum" id="6O4Z"/>
<dbReference type="PDBsum" id="6O51"/>
<dbReference type="PDBsum" id="6O53"/>
<dbReference type="PDBsum" id="6O9B"/>
<dbReference type="PDBsum" id="6O9C"/>
<dbReference type="PDBsum" id="6OPD"/>
<dbReference type="PDBsum" id="6P23"/>
<dbReference type="PDBsum" id="6P27"/>
<dbReference type="PDBsum" id="6P2C"/>
<dbReference type="PDBsum" id="6P2F"/>
<dbReference type="PDBsum" id="6P2S"/>
<dbReference type="PDBsum" id="6P64"/>
<dbReference type="PDBsum" id="6PA1"/>
<dbReference type="PDBsum" id="6PAG"/>
<dbReference type="PDBsum" id="6PBH"/>
<dbReference type="PDBsum" id="6PTB"/>
<dbReference type="PDBsum" id="6PTE"/>
<dbReference type="PDBsum" id="6PUC"/>
<dbReference type="PDBsum" id="6PUD"/>
<dbReference type="PDBsum" id="6PUE"/>
<dbReference type="PDBsum" id="6PUF"/>
<dbReference type="PDBsum" id="6PUG"/>
<dbReference type="PDBsum" id="6PUH"/>
<dbReference type="PDBsum" id="6PUI"/>
<dbReference type="PDBsum" id="6PUJ"/>
<dbReference type="PDBsum" id="6PUK"/>
<dbReference type="PDBsum" id="6PUL"/>
<dbReference type="PDBsum" id="6PUM"/>
<dbReference type="PDBsum" id="6PVC"/>
<dbReference type="PDBsum" id="6PVD"/>
<dbReference type="PDBsum" id="6PYJ"/>
<dbReference type="PDBsum" id="6PYL"/>
<dbReference type="PDBsum" id="6PYV"/>
<dbReference type="PDBsum" id="6PYW"/>
<dbReference type="PDBsum" id="6PZ5"/>
<dbReference type="PDBsum" id="6Q3K"/>
<dbReference type="PDBsum" id="6Q3S"/>
<dbReference type="PDBsum" id="6QIO"/>
<dbReference type="PDBsum" id="6QIP"/>
<dbReference type="PDBsum" id="6R2L"/>
<dbReference type="PDBsum" id="6RP9"/>
<dbReference type="PDBsum" id="6RPA"/>
<dbReference type="PDBsum" id="6RPB"/>
<dbReference type="PDBsum" id="6RSY"/>
<dbReference type="PDBsum" id="6SS7"/>
<dbReference type="PDBsum" id="6SS8"/>
<dbReference type="PDBsum" id="6SS9"/>
<dbReference type="PDBsum" id="6SSA"/>
<dbReference type="PDBsum" id="6TDO"/>
<dbReference type="PDBsum" id="6TDP"/>
<dbReference type="PDBsum" id="6TDQ"/>
<dbReference type="PDBsum" id="6TDR"/>
<dbReference type="PDBsum" id="6TDS"/>
<dbReference type="PDBsum" id="6TMO"/>
<dbReference type="PDBsum" id="6TRN"/>
<dbReference type="PDBsum" id="6TRO"/>
<dbReference type="PDBsum" id="6UJ7"/>
<dbReference type="PDBsum" id="6UJ8"/>
<dbReference type="PDBsum" id="6UJ9"/>
<dbReference type="PDBsum" id="6UJO"/>
<dbReference type="PDBsum" id="6UJQ"/>
<dbReference type="PDBsum" id="6UK2"/>
<dbReference type="PDBsum" id="6UK4"/>
<dbReference type="PDBsum" id="6ULI"/>
<dbReference type="PDBsum" id="6ULK"/>
<dbReference type="PDBsum" id="6ULN"/>
<dbReference type="PDBsum" id="6ULR"/>
<dbReference type="PDBsum" id="6UON"/>
<dbReference type="PDBsum" id="6UZ1"/>
<dbReference type="PDBsum" id="6UZM"/>
<dbReference type="PDBsum" id="6UZN"/>
<dbReference type="PDBsum" id="6UZO"/>
<dbReference type="PDBsum" id="6UZP"/>
<dbReference type="PDBsum" id="6UZQ"/>
<dbReference type="PDBsum" id="6UZS"/>
<dbReference type="PDBsum" id="6V2O"/>
<dbReference type="PDBsum" id="6V2P"/>
<dbReference type="PDBsum" id="6V2Q"/>
<dbReference type="PDBsum" id="6V3J"/>
<dbReference type="PDBsum" id="6V7Y"/>
<dbReference type="PDBsum" id="6V7Z"/>
<dbReference type="PDBsum" id="6V80"/>
<dbReference type="PDBsum" id="6VB0"/>
<dbReference type="PDBsum" id="6VB1"/>
<dbReference type="PDBsum" id="6VB2"/>
<dbReference type="PDBsum" id="6VB3"/>
<dbReference type="PDBsum" id="6VB4"/>
<dbReference type="PDBsum" id="6VB5"/>
<dbReference type="PDBsum" id="6VB6"/>
<dbReference type="PDBsum" id="6VB7"/>
<dbReference type="PDBsum" id="6VIU"/>
<dbReference type="PDBsum" id="6VM7"/>
<dbReference type="PDBsum" id="6VM8"/>
<dbReference type="PDBsum" id="6VM9"/>
<dbReference type="PDBsum" id="6VMA"/>
<dbReference type="PDBsum" id="6VMC"/>
<dbReference type="PDBsum" id="6VMX"/>
<dbReference type="PDBsum" id="6VPZ"/>
<dbReference type="PDBsum" id="6VQ2"/>
<dbReference type="PDBsum" id="6VQD"/>
<dbReference type="PDBsum" id="6VQE"/>
<dbReference type="PDBsum" id="6VQO"/>
<dbReference type="PDBsum" id="6VQY"/>
<dbReference type="PDBsum" id="6VQZ"/>
<dbReference type="PDBsum" id="6VR1"/>
<dbReference type="PDBsum" id="6VR5"/>
<dbReference type="PDBsum" id="6VRM"/>
<dbReference type="PDBsum" id="6VRN"/>
<dbReference type="PDBsum" id="6W51"/>
<dbReference type="PDBsum" id="6W9U"/>
<dbReference type="PDBsum" id="6W9V"/>
<dbReference type="PDBsum" id="6WNA"/>
<dbReference type="PDBsum" id="6WOL"/>
<dbReference type="PDBsum" id="6WZY"/>
<dbReference type="PDBsum" id="6X00"/>
<dbReference type="PDBsum" id="6XQA"/>
<dbReference type="PDBsum" id="6XQP"/>
<dbReference type="PDBsum" id="6Y26"/>
<dbReference type="PDBsum" id="6Y27"/>
<dbReference type="PDBsum" id="6Y28"/>
<dbReference type="PDBsum" id="6Y29"/>
<dbReference type="PDBsum" id="6Y2A"/>
<dbReference type="PDBsum" id="6Y2B"/>
<dbReference type="PDBsum" id="6Z9V"/>
<dbReference type="PDBsum" id="6Z9W"/>
<dbReference type="PDBsum" id="6Z9X"/>
<dbReference type="PDBsum" id="6ZKW"/>
<dbReference type="PDBsum" id="6ZKX"/>
<dbReference type="PDBsum" id="6ZKY"/>
<dbReference type="PDBsum" id="6ZKZ"/>
<dbReference type="PDBsum" id="7AFV"/>
<dbReference type="PDBsum" id="7ALO"/>
<dbReference type="PDBsum" id="7B5F"/>
<dbReference type="PDBsum" id="7BBG"/>
<dbReference type="PDBsum" id="7BH8"/>
<dbReference type="PDBsum" id="7C9V"/>
<dbReference type="PDBsum" id="7CIQ"/>
<dbReference type="PDBsum" id="7CIR"/>
<dbReference type="PDBsum" id="7CIS"/>
<dbReference type="PDBsum" id="7DUU"/>
<dbReference type="PDBsum" id="7DYN"/>
<dbReference type="PDBsum" id="7DZM"/>
<dbReference type="PDBsum" id="7DZN"/>
<dbReference type="PDBsum" id="7EDO"/>
<dbReference type="PDBsum" id="7EJL"/>
<dbReference type="PDBsum" id="7EJM"/>
<dbReference type="PDBsum" id="7EJN"/>
<dbReference type="PDBsum" id="7EU2"/>
<dbReference type="PDBsum" id="7F4W"/>
<dbReference type="PDBsum" id="7JWI"/>
<dbReference type="PDBsum" id="7JYU"/>
<dbReference type="PDBsum" id="7JYV"/>
<dbReference type="PDBsum" id="7JYW"/>
<dbReference type="PDBsum" id="7JYX"/>
<dbReference type="PDBsum" id="7K80"/>
<dbReference type="PDBsum" id="7K81"/>
<dbReference type="PDBsum" id="7KGO"/>
<dbReference type="PDBsum" id="7KGP"/>
<dbReference type="PDBsum" id="7KGQ"/>
<dbReference type="PDBsum" id="7KGR"/>
<dbReference type="PDBsum" id="7KGS"/>
<dbReference type="PDBsum" id="7KGT"/>
<dbReference type="PDBsum" id="7KOZ"/>
<dbReference type="PDBsum" id="7KP0"/>
<dbReference type="PDBsum" id="7KP1"/>
<dbReference type="PDBsum" id="7L1B"/>
<dbReference type="PDBsum" id="7L1C"/>
<dbReference type="PDBsum" id="7L1D"/>
<dbReference type="PDBsum" id="7LFZ"/>
<dbReference type="PDBsum" id="7LG0"/>
<dbReference type="PDBsum" id="7LG2"/>
<dbReference type="PDBsum" id="7LG3"/>
<dbReference type="PDBsum" id="7LGD"/>
<dbReference type="PDBsum" id="7LGT"/>
<dbReference type="PDBsum" id="7LLI"/>
<dbReference type="PDBsum" id="7LLJ"/>
<dbReference type="PDBsum" id="7M8S"/>
<dbReference type="PDBsum" id="7M8T"/>
<dbReference type="PDBsum" id="7M8U"/>
<dbReference type="PDBsum" id="7MJ6"/>
<dbReference type="PDBsum" id="7MJ7"/>
<dbReference type="PDBsum" id="7MJ8"/>
<dbReference type="PDBsum" id="7MJ9"/>
<dbReference type="PDBsum" id="7MJA"/>
<dbReference type="PDBsum" id="7MKB"/>
<dbReference type="PDBsum" id="7MLE"/>
<dbReference type="PDBsum" id="7MX4"/>
<dbReference type="PDBsum" id="7MXF"/>
<dbReference type="PDBsum" id="7MXH"/>
<dbReference type="PDBsum" id="7N1A"/>
<dbReference type="PDBsum" id="7N1B"/>
<dbReference type="PDBsum" id="7N1E"/>
<dbReference type="PDBsum" id="7N1F"/>
<dbReference type="PDBsum" id="7N2N"/>
<dbReference type="PDBsum" id="7N2O"/>
<dbReference type="PDBsum" id="7N2P"/>
<dbReference type="PDBsum" id="7N2Q"/>
<dbReference type="PDBsum" id="7N2R"/>
<dbReference type="PDBsum" id="7N2S"/>
<dbReference type="PDBsum" id="7N4K"/>
<dbReference type="PDBsum" id="7N5C"/>
<dbReference type="PDBsum" id="7N5P"/>
<dbReference type="PDBsum" id="7N5Q"/>
<dbReference type="PDBsum" id="7N6D"/>
<dbReference type="PDBsum" id="7N6E"/>
<dbReference type="PDBsum" id="7N9J"/>
<dbReference type="PDBsum" id="7NA5"/>
<dbReference type="PDBsum" id="7NDQ"/>
<dbReference type="PDBsum" id="7NDT"/>
<dbReference type="PDBsum" id="7NDU"/>
<dbReference type="PDBsum" id="7NMC"/>
<dbReference type="PDBsum" id="7NMD"/>
<dbReference type="PDBsum" id="7NME"/>
<dbReference type="PDBsum" id="7NMF"/>
<dbReference type="PDBsum" id="7NMG"/>
<dbReference type="PDBsum" id="7NMO"/>
<dbReference type="PDBsum" id="7NMR"/>
<dbReference type="PDBsum" id="7NMT"/>
<dbReference type="PDBsum" id="7NMV"/>
<dbReference type="PDBsum" id="7NMY"/>
<dbReference type="PDBsum" id="7NN5"/>
<dbReference type="PDBsum" id="7NUI"/>
<dbReference type="PDBsum" id="7OW3"/>
<dbReference type="PDBsum" id="7OW4"/>
<dbReference type="PDBsum" id="7OW5"/>
<dbReference type="PDBsum" id="7OW6"/>
<dbReference type="PDBsum" id="7P3D"/>
<dbReference type="PDBsum" id="7P3E"/>
<dbReference type="PDBsum" id="7P49"/>
<dbReference type="PDBsum" id="7P4B"/>
<dbReference type="PDBsum" id="7PB2"/>
<dbReference type="PDBsum" id="7PBC"/>
<dbReference type="PDBsum" id="7PBE"/>
<dbReference type="PDBsum" id="7PDW"/>
<dbReference type="PDBsum" id="7PHR"/>
<dbReference type="PDBsum" id="7Q15"/>
<dbReference type="PDBsum" id="7Q98"/>
<dbReference type="PDBsum" id="7Q99"/>
<dbReference type="PDBsum" id="7Q9A"/>
<dbReference type="PDBsum" id="7Q9B"/>
<dbReference type="PDBsum" id="7QNG"/>
<dbReference type="PDBsum" id="7QPD"/>
<dbReference type="PDBsum" id="7QPJ"/>
<dbReference type="PDBsum" id="7R7V"/>
<dbReference type="PDBsum" id="7R7W"/>
<dbReference type="PDBsum" id="7R7X"/>
<dbReference type="PDBsum" id="7R7Y"/>
<dbReference type="PDBsum" id="7R80"/>
<dbReference type="PDBsum" id="7RE7"/>
<dbReference type="PDBsum" id="7RE8"/>
<dbReference type="PDBsum" id="7RK7"/>
<dbReference type="PDBsum" id="7RM4"/>
<dbReference type="PDBsum" id="7RRG"/>
<dbReference type="PDBsum" id="7RTD"/>
<dbReference type="PDBsum" id="7RTR"/>
<dbReference type="PDBsum" id="7RYM"/>
<dbReference type="PDBsum" id="7RYN"/>
<dbReference type="PDBsum" id="7RYO"/>
<dbReference type="PDBsum" id="7RZD"/>
<dbReference type="PDBsum" id="7RZJ"/>
<dbReference type="PDBsum" id="7S79"/>
<dbReference type="PDBsum" id="7S7D"/>
<dbReference type="PDBsum" id="7S7E"/>
<dbReference type="PDBsum" id="7S7F"/>
<dbReference type="PDBsum" id="7S8A"/>
<dbReference type="PDBsum" id="7S8E"/>
<dbReference type="PDBsum" id="7S8F"/>
<dbReference type="PDBsum" id="7S8Q"/>
<dbReference type="PDBsum" id="7S8R"/>
<dbReference type="PDBsum" id="7S8S"/>
<dbReference type="PDBsum" id="7SA2"/>
<dbReference type="PDBsum" id="7SH4"/>
<dbReference type="PDBsum" id="7SIF"/>
<dbReference type="PDBsum" id="7SIG"/>
<dbReference type="PDBsum" id="7SIH"/>
<dbReference type="PDBsum" id="7SIS"/>
<dbReference type="PDBsum" id="7STF"/>
<dbReference type="PDBsum" id="7SU9"/>
<dbReference type="PDBsum" id="7T0L"/>
<dbReference type="PDBsum" id="7T5M"/>
<dbReference type="PDBsum" id="7TLT"/>
<dbReference type="PDBsum" id="7TR4"/>
<dbReference type="PDBsum" id="7TUC"/>
<dbReference type="PDBsum" id="7TUD"/>
<dbReference type="PDBsum" id="7TUE"/>
<dbReference type="PDBsum" id="7U1R"/>
<dbReference type="PDBsum" id="7U21"/>
<dbReference type="PDBsum" id="7UC5"/>
<dbReference type="PDBsum" id="7UFJ"/>
<dbReference type="PDBsum" id="7UM2"/>
<dbReference type="PDBsum" id="7UMG"/>
<dbReference type="PDBsum" id="7UR1"/>
<dbReference type="PDBsum" id="7WJ2"/>
<dbReference type="PDBsum" id="7WJ3"/>
<dbReference type="PDBsum" id="7WKJ"/>
<dbReference type="PDBsum" id="7WT3"/>
<dbReference type="PDBsum" id="7WT4"/>
<dbReference type="PDBsum" id="7WT5"/>
<dbReference type="PDBsum" id="7WZZ"/>
<dbReference type="PDBsum" id="7X00"/>
<dbReference type="PDBsum" id="7X1B"/>
<dbReference type="PDBsum" id="7X1C"/>
<dbReference type="PDBsum" id="7XF3"/>
<dbReference type="PDBsum" id="7YG3"/>
<dbReference type="PDBsum" id="7ZT2"/>
<dbReference type="PDBsum" id="7ZT3"/>
<dbReference type="PDBsum" id="7ZT4"/>
<dbReference type="PDBsum" id="7ZT5"/>
<dbReference type="PDBsum" id="7ZT7"/>
<dbReference type="PDBsum" id="7ZT8"/>
<dbReference type="PDBsum" id="7ZT9"/>
<dbReference type="PDBsum" id="7ZUC"/>
<dbReference type="PDBsum" id="8A7O"/>
<dbReference type="PDBsum" id="8A7P"/>
<dbReference type="PDBsum" id="8A7Q"/>
<dbReference type="PDBsum" id="8A7T"/>
<dbReference type="PDBsum" id="8BP6"/>
<dbReference type="PDBsum" id="8CX4"/>
<dbReference type="PDBsum" id="8DNT"/>
<dbReference type="PDBsum" id="8DV3"/>
<dbReference type="PDBsum" id="8DV4"/>
<dbReference type="PDBsum" id="8DVG"/>
<dbReference type="PDBsum" id="8E13"/>
<dbReference type="PDBsum" id="8E2Z"/>
<dbReference type="PDBsum" id="8E8I"/>
<dbReference type="PDBsum" id="8EB2"/>
<dbReference type="PDBsum" id="8EC5"/>
<dbReference type="PDBsum" id="8EK5"/>
<dbReference type="PDBsum" id="8ELG"/>
<dbReference type="PDBsum" id="8ELH"/>
<dbReference type="PDBsum" id="8EMF"/>
<dbReference type="PDBsum" id="8EMG"/>
<dbReference type="PDBsum" id="8EMI"/>
<dbReference type="PDBsum" id="8EMJ"/>
<dbReference type="PDBsum" id="8EMK"/>
<dbReference type="PDBsum" id="8EN8"/>
<dbReference type="PDBsum" id="8ENH"/>
<dbReference type="PDBsum" id="8EO8"/>
<dbReference type="PDBsum" id="8ERX"/>
<dbReference type="PDBsum" id="8ES8"/>
<dbReference type="PDBsum" id="8ES9"/>
<dbReference type="PDBsum" id="8ESA"/>
<dbReference type="PDBsum" id="8ESH"/>
<dbReference type="PDBsum" id="8F5A"/>
<dbReference type="PDBsum" id="8F7M"/>
<dbReference type="PDBsum" id="8FJA"/>
<dbReference type="PDBsum" id="8FJB"/>
<dbReference type="PDBsum" id="8FRT"/>
<dbReference type="PDBsum" id="8FU4"/>
<dbReference type="PDBsum" id="8GLE"/>
<dbReference type="PDBsum" id="8GLF"/>
<dbReference type="PDBsum" id="8GLG"/>
<dbReference type="PDBsum" id="8GLH"/>
<dbReference type="PDBsum" id="8GLI"/>
<dbReference type="PDBsum" id="8GOM"/>
<dbReference type="PDBsum" id="8GON"/>
<dbReference type="PDBsum" id="8GVB"/>
<dbReference type="PDBsum" id="8GVG"/>
<dbReference type="PDBsum" id="8GVI"/>
<dbReference type="PDBsum" id="8HN4"/>
<dbReference type="PDBsum" id="8I5C"/>
<dbReference type="PDBsum" id="8I5D"/>
<dbReference type="PDBsum" id="8I5E"/>
<dbReference type="PDBsum" id="8ISN"/>
<dbReference type="PDBsum" id="8K4T"/>
<dbReference type="PDBsum" id="8K4V"/>
<dbReference type="PDBsum" id="8K50"/>
<dbReference type="PDBsum" id="8QFY"/>
<dbReference type="PDBsum" id="8RBU"/>
<dbReference type="PDBsum" id="8RBV"/>
<dbReference type="PDBsum" id="8RCV"/>
<dbReference type="PDBsum" id="8REF"/>
<dbReference type="PDBsum" id="8RH6"/>
<dbReference type="PDBsum" id="8RHQ"/>
<dbReference type="PDBsum" id="8RJ5"/>
<dbReference type="PDBsum" id="8RJH"/>
<dbReference type="PDBsum" id="8RJI"/>
<dbReference type="PDBsum" id="8RLT"/>
<dbReference type="PDBsum" id="8RLU"/>
<dbReference type="PDBsum" id="8RLV"/>
<dbReference type="PDBsum" id="8RNE"/>
<dbReference type="PDBsum" id="8RNF"/>
<dbReference type="PDBsum" id="8RNG"/>
<dbReference type="PDBsum" id="8RNH"/>
<dbReference type="PDBsum" id="8RNI"/>
<dbReference type="PDBsum" id="8ROO"/>
<dbReference type="PDBsum" id="8ROP"/>
<dbReference type="PDBsum" id="8RRO"/>
<dbReference type="PDBsum" id="8RYM"/>
<dbReference type="PDBsum" id="8RYN"/>
<dbReference type="PDBsum" id="8RYO"/>
<dbReference type="PDBsum" id="8RYP"/>
<dbReference type="PDBsum" id="8RYQ"/>
<dbReference type="PDBsum" id="8SBK"/>
<dbReference type="PDBsum" id="8SBL"/>
<dbReference type="PDBsum" id="8SGB"/>
<dbReference type="PDBsum" id="8SGM"/>
<dbReference type="PDBsum" id="8SHI"/>
<dbReference type="PDBsum" id="8SOS"/>
<dbReference type="PDBsum" id="8T6M"/>
<dbReference type="PDBsum" id="8T7R"/>
<dbReference type="PDBsum" id="8TBV"/>
<dbReference type="PDBsum" id="8TBW"/>
<dbReference type="PDBsum" id="8TMU"/>
<dbReference type="PDBsum" id="8TNJ"/>
<dbReference type="PDBsum" id="8TQ5"/>
<dbReference type="PDBsum" id="8TQ6"/>
<dbReference type="PDBsum" id="8TUB"/>
<dbReference type="PDBsum" id="8TUH"/>
<dbReference type="PDBsum" id="8U9G"/>
<dbReference type="PDBsum" id="8UDR"/>
<dbReference type="PDBsum" id="8V4Z"/>
<dbReference type="PDBsum" id="8V50"/>
<dbReference type="PDBsum" id="8V51"/>
<dbReference type="PDBsum" id="8VCL"/>
<dbReference type="PDBsum" id="8VJZ"/>
<dbReference type="PDBsum" id="8VR9"/>
<dbReference type="PDBsum" id="8VRA"/>
<dbReference type="PDBsum" id="8VRB"/>
<dbReference type="PDBsum" id="8WTE"/>
<dbReference type="PDBsum" id="8WUL"/>
<dbReference type="PDBsum" id="8XES"/>
<dbReference type="PDBsum" id="8XFZ"/>
<dbReference type="PDBsum" id="8XG2"/>
<dbReference type="PDBsum" id="8XKC"/>
<dbReference type="PDBsum" id="8XKE"/>
<dbReference type="PDBsum" id="8Y6X"/>
<dbReference type="PDBsum" id="8YE4"/>
<dbReference type="PDBsum" id="8YIV"/>
<dbReference type="PDBsum" id="8YJ2"/>
<dbReference type="PDBsum" id="8YZR"/>
<dbReference type="PDBsum" id="8YZW"/>
<dbReference type="PDBsum" id="8YZZ"/>
<dbReference type="PDBsum" id="8Z05"/>
<dbReference type="PDBsum" id="8Z06"/>
<dbReference type="PDBsum" id="8Z07"/>
<dbReference type="PDBsum" id="8Z08"/>
<dbReference type="PDBsum" id="8ZOX"/>
<dbReference type="PDBsum" id="8ZV9"/>
<dbReference type="PDBsum" id="9ASF"/>
<dbReference type="PDBsum" id="9ASG"/>
<dbReference type="PDBsum" id="9BL2"/>
<dbReference type="PDBsum" id="9BL3"/>
<dbReference type="PDBsum" id="9BL4"/>
<dbReference type="PDBsum" id="9BL5"/>
<dbReference type="PDBsum" id="9BL6"/>
<dbReference type="PDBsum" id="9BL9"/>
<dbReference type="PDBsum" id="9BLA"/>
<dbReference type="PDBsum" id="9BTX"/>
<dbReference type="PDBsum" id="9BTY"/>
<dbReference type="PDBsum" id="9BTZ"/>
<dbReference type="PDBsum" id="9BU0"/>
<dbReference type="PDBsum" id="9C3E"/>
<dbReference type="PDBsum" id="9C6V"/>
<dbReference type="PDBsum" id="9C6W"/>
<dbReference type="PDBsum" id="9C6X"/>
<dbReference type="PDBsum" id="9C96"/>
<dbReference type="PDBsum" id="9CGR"/>
<dbReference type="PDBsum" id="9CGS"/>
<dbReference type="PDBsum" id="9DL1"/>
<dbReference type="PDBsum" id="9MI6"/>
<dbReference type="BMRB" id="P61769"/>
<dbReference type="EMDB" id="EMD-0014"/>
<dbReference type="EMDB" id="EMD-0019"/>
<dbReference type="EMDB" id="EMD-0021"/>
<dbReference type="EMDB" id="EMD-0857"/>
<dbReference type="EMDB" id="EMD-0858"/>
<dbReference type="EMDB" id="EMD-12028"/>
<dbReference type="EMDB" id="EMD-13427"/>
<dbReference type="EMDB" id="EMD-14119"/>
<dbReference type="EMDB" id="EMD-15222"/>
<dbReference type="EMDB" id="EMD-15223"/>
<dbReference type="EMDB" id="EMD-15224"/>
<dbReference type="EMDB" id="EMD-15225"/>
<dbReference type="EMDB" id="EMD-15226"/>
<dbReference type="EMDB" id="EMD-15227"/>
<dbReference type="EMDB" id="EMD-25427"/>
<dbReference type="EMDB" id="EMD-28571"/>
<dbReference type="EMDB" id="EMD-28572"/>
<dbReference type="EMDB" id="EMD-29220"/>
<dbReference type="EMDB" id="EMD-29221"/>
<dbReference type="EMDB" id="EMD-30318"/>
<dbReference type="EMDB" id="EMD-3906"/>
<dbReference type="EMDB" id="EMD-41072"/>
<dbReference type="EMDB" id="EMD-42151"/>
<dbReference type="EMDB" id="EMD-43478"/>
<dbReference type="EMDB" id="EMD-43479"/>
<dbReference type="EMDB" id="EMD-43480"/>
<dbReference type="EMDB" id="EMD-45360"/>
<dbReference type="EMDB" id="EMD-60321"/>
<dbReference type="EMDB" id="EMD-9687"/>
<dbReference type="PCDDB" id="P61769"/>
<dbReference type="SMR" id="P61769"/>
<dbReference type="BioGRID" id="107044">
    <property type="interactions" value="93"/>
</dbReference>
<dbReference type="DIP" id="DIP-6055N"/>
<dbReference type="FunCoup" id="P61769">
    <property type="interactions" value="604"/>
</dbReference>
<dbReference type="IntAct" id="P61769">
    <property type="interactions" value="139"/>
</dbReference>
<dbReference type="MINT" id="P61769"/>
<dbReference type="STRING" id="9606.ENSP00000497910"/>
<dbReference type="BindingDB" id="P61769"/>
<dbReference type="ChEMBL" id="CHEMBL5465401"/>
<dbReference type="DrugBank" id="DB02740">
    <property type="generic name" value="3-Indolebutyric Acid"/>
</dbReference>
<dbReference type="DrugBank" id="DB09130">
    <property type="generic name" value="Copper"/>
</dbReference>
<dbReference type="DrugBank" id="DB04464">
    <property type="generic name" value="N-Formylmethionine"/>
</dbReference>
<dbReference type="DrugBank" id="DB11130">
    <property type="generic name" value="Opium"/>
</dbReference>
<dbReference type="TCDB" id="9.A.75.1.2">
    <property type="family name" value="the mhc ii receptor (mhc2r) family"/>
</dbReference>
<dbReference type="UniLectin" id="P61769"/>
<dbReference type="GlyCosmos" id="P61769">
    <property type="glycosylation" value="7 sites, No reported glycans"/>
</dbReference>
<dbReference type="GlyGen" id="P61769">
    <property type="glycosylation" value="5 sites, 2 O-linked glycans (5 sites)"/>
</dbReference>
<dbReference type="iPTMnet" id="P61769"/>
<dbReference type="PhosphoSitePlus" id="P61769"/>
<dbReference type="SwissPalm" id="P61769"/>
<dbReference type="BioMuta" id="B2M"/>
<dbReference type="DMDM" id="48428791"/>
<dbReference type="OGP" id="P61769"/>
<dbReference type="CPTAC" id="CPTAC-1232"/>
<dbReference type="jPOST" id="P61769"/>
<dbReference type="MassIVE" id="P61769"/>
<dbReference type="PaxDb" id="9606-ENSP00000452780"/>
<dbReference type="PeptideAtlas" id="P61769"/>
<dbReference type="PRIDE" id="P61769"/>
<dbReference type="ProteomicsDB" id="57333"/>
<dbReference type="Pumba" id="P61769"/>
<dbReference type="TopDownProteomics" id="P61769"/>
<dbReference type="ABCD" id="P61769">
    <property type="antibodies" value="2 sequenced antibodies"/>
</dbReference>
<dbReference type="Antibodypedia" id="1913">
    <property type="antibodies" value="2487 antibodies from 49 providers"/>
</dbReference>
<dbReference type="CPTC" id="P61769">
    <property type="antibodies" value="1 antibody"/>
</dbReference>
<dbReference type="DNASU" id="567"/>
<dbReference type="Ensembl" id="ENST00000559916.1">
    <property type="protein sequence ID" value="ENSP00000453350.1"/>
    <property type="gene ID" value="ENSG00000166710.23"/>
</dbReference>
<dbReference type="Ensembl" id="ENST00000561424.5">
    <property type="protein sequence ID" value="ENSP00000453191.1"/>
    <property type="gene ID" value="ENSG00000166710.23"/>
</dbReference>
<dbReference type="Ensembl" id="ENST00000617605.4">
    <property type="protein sequence ID" value="ENSP00000481426.1"/>
    <property type="gene ID" value="ENSG00000273686.4"/>
</dbReference>
<dbReference type="Ensembl" id="ENST00000631573.1">
    <property type="protein sequence ID" value="ENSP00000488548.1"/>
    <property type="gene ID" value="ENSG00000273686.4"/>
</dbReference>
<dbReference type="Ensembl" id="ENST00000631728.1">
    <property type="protein sequence ID" value="ENSP00000488321.1"/>
    <property type="gene ID" value="ENSG00000273686.4"/>
</dbReference>
<dbReference type="Ensembl" id="ENST00000648006.3">
    <property type="protein sequence ID" value="ENSP00000497910.1"/>
    <property type="gene ID" value="ENSG00000166710.23"/>
</dbReference>
<dbReference type="GeneID" id="567"/>
<dbReference type="KEGG" id="hsa:567"/>
<dbReference type="MANE-Select" id="ENST00000648006.3">
    <property type="protein sequence ID" value="ENSP00000497910.1"/>
    <property type="RefSeq nucleotide sequence ID" value="NM_004048.4"/>
    <property type="RefSeq protein sequence ID" value="NP_004039.1"/>
</dbReference>
<dbReference type="UCSC" id="uc001zuc.4">
    <property type="organism name" value="human"/>
</dbReference>
<dbReference type="AGR" id="HGNC:914"/>
<dbReference type="CTD" id="567"/>
<dbReference type="DisGeNET" id="567"/>
<dbReference type="GeneCards" id="B2M"/>
<dbReference type="HGNC" id="HGNC:914">
    <property type="gene designation" value="B2M"/>
</dbReference>
<dbReference type="HPA" id="ENSG00000166710">
    <property type="expression patterns" value="Low tissue specificity"/>
</dbReference>
<dbReference type="MalaCards" id="B2M"/>
<dbReference type="MIM" id="109700">
    <property type="type" value="gene"/>
</dbReference>
<dbReference type="MIM" id="241600">
    <property type="type" value="phenotype"/>
</dbReference>
<dbReference type="MIM" id="620659">
    <property type="type" value="phenotype"/>
</dbReference>
<dbReference type="neXtProt" id="NX_P61769"/>
<dbReference type="OpenTargets" id="ENSG00000166710"/>
<dbReference type="Orphanet" id="34592">
    <property type="disease" value="Immunodeficiency by defective expression of MHC class I"/>
</dbReference>
<dbReference type="Orphanet" id="314652">
    <property type="disease" value="Variant ABeta2M amyloidosis"/>
</dbReference>
<dbReference type="PharmGKB" id="PA25207"/>
<dbReference type="VEuPathDB" id="HostDB:ENSG00000166710"/>
<dbReference type="eggNOG" id="ENOG502S8GM">
    <property type="taxonomic scope" value="Eukaryota"/>
</dbReference>
<dbReference type="GeneTree" id="ENSGT00690000102227"/>
<dbReference type="HOGENOM" id="CLU_163066_0_0_1"/>
<dbReference type="InParanoid" id="P61769"/>
<dbReference type="OMA" id="WCVVLVW"/>
<dbReference type="OrthoDB" id="9949628at2759"/>
<dbReference type="PAN-GO" id="P61769">
    <property type="GO annotations" value="6 GO annotations based on evolutionary models"/>
</dbReference>
<dbReference type="PhylomeDB" id="P61769"/>
<dbReference type="TreeFam" id="TF334167"/>
<dbReference type="PathwayCommons" id="P61769"/>
<dbReference type="Reactome" id="R-HSA-1236974">
    <property type="pathway name" value="ER-Phagosome pathway"/>
</dbReference>
<dbReference type="Reactome" id="R-HSA-1236977">
    <property type="pathway name" value="Endosomal/Vacuolar pathway"/>
</dbReference>
<dbReference type="Reactome" id="R-HSA-164940">
    <property type="pathway name" value="Nef mediated downregulation of MHC class I complex cell surface expression"/>
</dbReference>
<dbReference type="Reactome" id="R-HSA-198933">
    <property type="pathway name" value="Immunoregulatory interactions between a Lymphoid and a non-Lymphoid cell"/>
</dbReference>
<dbReference type="Reactome" id="R-HSA-2172127">
    <property type="pathway name" value="DAP12 interactions"/>
</dbReference>
<dbReference type="Reactome" id="R-HSA-2424491">
    <property type="pathway name" value="DAP12 signaling"/>
</dbReference>
<dbReference type="Reactome" id="R-HSA-6798695">
    <property type="pathway name" value="Neutrophil degranulation"/>
</dbReference>
<dbReference type="Reactome" id="R-HSA-877300">
    <property type="pathway name" value="Interferon gamma signaling"/>
</dbReference>
<dbReference type="Reactome" id="R-HSA-9637628">
    <property type="pathway name" value="Modulation by Mtb of host immune system"/>
</dbReference>
<dbReference type="Reactome" id="R-HSA-9705671">
    <property type="pathway name" value="SARS-CoV-2 activates/modulates innate and adaptive immune responses"/>
</dbReference>
<dbReference type="Reactome" id="R-HSA-977225">
    <property type="pathway name" value="Amyloid fiber formation"/>
</dbReference>
<dbReference type="Reactome" id="R-HSA-983170">
    <property type="pathway name" value="Antigen Presentation: Folding, assembly and peptide loading of class I MHC"/>
</dbReference>
<dbReference type="SignaLink" id="P61769"/>
<dbReference type="SIGNOR" id="P61769"/>
<dbReference type="BioGRID-ORCS" id="567">
    <property type="hits" value="17 hits in 1172 CRISPR screens"/>
</dbReference>
<dbReference type="ChiTaRS" id="B2M">
    <property type="organism name" value="human"/>
</dbReference>
<dbReference type="EvolutionaryTrace" id="P61769"/>
<dbReference type="GeneWiki" id="Beta-2_microglobulin"/>
<dbReference type="GenomeRNAi" id="567"/>
<dbReference type="Pharos" id="P61769">
    <property type="development level" value="Tbio"/>
</dbReference>
<dbReference type="PRO" id="PR:P61769"/>
<dbReference type="Proteomes" id="UP000005640">
    <property type="component" value="Chromosome 15"/>
</dbReference>
<dbReference type="RNAct" id="P61769">
    <property type="molecule type" value="protein"/>
</dbReference>
<dbReference type="Bgee" id="ENSG00000166710">
    <property type="expression patterns" value="Expressed in leukocyte and 100 other cell types or tissues"/>
</dbReference>
<dbReference type="ExpressionAtlas" id="P61769">
    <property type="expression patterns" value="baseline and differential"/>
</dbReference>
<dbReference type="GO" id="GO:0005829">
    <property type="term" value="C:cytosol"/>
    <property type="evidence" value="ECO:0000314"/>
    <property type="project" value="HPA"/>
</dbReference>
<dbReference type="GO" id="GO:0031905">
    <property type="term" value="C:early endosome lumen"/>
    <property type="evidence" value="ECO:0000304"/>
    <property type="project" value="Reactome"/>
</dbReference>
<dbReference type="GO" id="GO:0031901">
    <property type="term" value="C:early endosome membrane"/>
    <property type="evidence" value="ECO:0000304"/>
    <property type="project" value="Reactome"/>
</dbReference>
<dbReference type="GO" id="GO:0005783">
    <property type="term" value="C:endoplasmic reticulum"/>
    <property type="evidence" value="ECO:0000305"/>
    <property type="project" value="UniProt"/>
</dbReference>
<dbReference type="GO" id="GO:0005788">
    <property type="term" value="C:endoplasmic reticulum lumen"/>
    <property type="evidence" value="ECO:0000304"/>
    <property type="project" value="Reactome"/>
</dbReference>
<dbReference type="GO" id="GO:0012507">
    <property type="term" value="C:ER to Golgi transport vesicle membrane"/>
    <property type="evidence" value="ECO:0000304"/>
    <property type="project" value="Reactome"/>
</dbReference>
<dbReference type="GO" id="GO:0009897">
    <property type="term" value="C:external side of plasma membrane"/>
    <property type="evidence" value="ECO:0007669"/>
    <property type="project" value="Ensembl"/>
</dbReference>
<dbReference type="GO" id="GO:0070062">
    <property type="term" value="C:extracellular exosome"/>
    <property type="evidence" value="ECO:0007005"/>
    <property type="project" value="UniProtKB"/>
</dbReference>
<dbReference type="GO" id="GO:0005576">
    <property type="term" value="C:extracellular region"/>
    <property type="evidence" value="ECO:0000304"/>
    <property type="project" value="Reactome"/>
</dbReference>
<dbReference type="GO" id="GO:0005615">
    <property type="term" value="C:extracellular space"/>
    <property type="evidence" value="ECO:0007005"/>
    <property type="project" value="UniProtKB"/>
</dbReference>
<dbReference type="GO" id="GO:0005925">
    <property type="term" value="C:focal adhesion"/>
    <property type="evidence" value="ECO:0007005"/>
    <property type="project" value="UniProtKB"/>
</dbReference>
<dbReference type="GO" id="GO:0005794">
    <property type="term" value="C:Golgi apparatus"/>
    <property type="evidence" value="ECO:0000314"/>
    <property type="project" value="HPA"/>
</dbReference>
<dbReference type="GO" id="GO:0000139">
    <property type="term" value="C:Golgi membrane"/>
    <property type="evidence" value="ECO:0000304"/>
    <property type="project" value="Reactome"/>
</dbReference>
<dbReference type="GO" id="GO:1990712">
    <property type="term" value="C:HFE-transferrin receptor complex"/>
    <property type="evidence" value="ECO:0000314"/>
    <property type="project" value="BHF-UCL"/>
</dbReference>
<dbReference type="GO" id="GO:0031902">
    <property type="term" value="C:late endosome membrane"/>
    <property type="evidence" value="ECO:0000318"/>
    <property type="project" value="GO_Central"/>
</dbReference>
<dbReference type="GO" id="GO:0005765">
    <property type="term" value="C:lysosomal membrane"/>
    <property type="evidence" value="ECO:0000318"/>
    <property type="project" value="GO_Central"/>
</dbReference>
<dbReference type="GO" id="GO:0016020">
    <property type="term" value="C:membrane"/>
    <property type="evidence" value="ECO:0007005"/>
    <property type="project" value="UniProtKB"/>
</dbReference>
<dbReference type="GO" id="GO:0042824">
    <property type="term" value="C:MHC class I peptide loading complex"/>
    <property type="evidence" value="ECO:0000314"/>
    <property type="project" value="UniProtKB"/>
</dbReference>
<dbReference type="GO" id="GO:0042612">
    <property type="term" value="C:MHC class I protein complex"/>
    <property type="evidence" value="ECO:0000304"/>
    <property type="project" value="ARUK-UCL"/>
</dbReference>
<dbReference type="GO" id="GO:0042613">
    <property type="term" value="C:MHC class II protein complex"/>
    <property type="evidence" value="ECO:0000318"/>
    <property type="project" value="GO_Central"/>
</dbReference>
<dbReference type="GO" id="GO:0030670">
    <property type="term" value="C:phagocytic vesicle membrane"/>
    <property type="evidence" value="ECO:0000304"/>
    <property type="project" value="Reactome"/>
</dbReference>
<dbReference type="GO" id="GO:0005886">
    <property type="term" value="C:plasma membrane"/>
    <property type="evidence" value="ECO:0000314"/>
    <property type="project" value="HPA"/>
</dbReference>
<dbReference type="GO" id="GO:0055038">
    <property type="term" value="C:recycling endosome membrane"/>
    <property type="evidence" value="ECO:0000304"/>
    <property type="project" value="Reactome"/>
</dbReference>
<dbReference type="GO" id="GO:0035580">
    <property type="term" value="C:specific granule lumen"/>
    <property type="evidence" value="ECO:0000304"/>
    <property type="project" value="Reactome"/>
</dbReference>
<dbReference type="GO" id="GO:1904724">
    <property type="term" value="C:tertiary granule lumen"/>
    <property type="evidence" value="ECO:0000304"/>
    <property type="project" value="Reactome"/>
</dbReference>
<dbReference type="GO" id="GO:0042802">
    <property type="term" value="F:identical protein binding"/>
    <property type="evidence" value="ECO:0000353"/>
    <property type="project" value="IntAct"/>
</dbReference>
<dbReference type="GO" id="GO:0023026">
    <property type="term" value="F:MHC class II protein complex binding"/>
    <property type="evidence" value="ECO:0000318"/>
    <property type="project" value="GO_Central"/>
</dbReference>
<dbReference type="GO" id="GO:0042605">
    <property type="term" value="F:peptide antigen binding"/>
    <property type="evidence" value="ECO:0000318"/>
    <property type="project" value="GO_Central"/>
</dbReference>
<dbReference type="GO" id="GO:0042803">
    <property type="term" value="F:protein homodimerization activity"/>
    <property type="evidence" value="ECO:0000353"/>
    <property type="project" value="ARUK-UCL"/>
</dbReference>
<dbReference type="GO" id="GO:0005198">
    <property type="term" value="F:structural molecule activity"/>
    <property type="evidence" value="ECO:0000314"/>
    <property type="project" value="UniProt"/>
</dbReference>
<dbReference type="GO" id="GO:1990000">
    <property type="term" value="P:amyloid fibril formation"/>
    <property type="evidence" value="ECO:0000314"/>
    <property type="project" value="ARUK-UCL"/>
</dbReference>
<dbReference type="GO" id="GO:0019885">
    <property type="term" value="P:antigen processing and presentation of endogenous peptide antigen via MHC class I"/>
    <property type="evidence" value="ECO:0000316"/>
    <property type="project" value="BHF-UCL"/>
</dbReference>
<dbReference type="GO" id="GO:0019886">
    <property type="term" value="P:antigen processing and presentation of exogenous peptide antigen via MHC class II"/>
    <property type="evidence" value="ECO:0000318"/>
    <property type="project" value="GO_Central"/>
</dbReference>
<dbReference type="GO" id="GO:0002481">
    <property type="term" value="P:antigen processing and presentation of exogenous protein antigen via MHC class Ib, TAP-dependent"/>
    <property type="evidence" value="ECO:0007669"/>
    <property type="project" value="Ensembl"/>
</dbReference>
<dbReference type="GO" id="GO:0071281">
    <property type="term" value="P:cellular response to iron ion"/>
    <property type="evidence" value="ECO:0000316"/>
    <property type="project" value="BHF-UCL"/>
</dbReference>
<dbReference type="GO" id="GO:0071283">
    <property type="term" value="P:cellular response to iron(III) ion"/>
    <property type="evidence" value="ECO:0007669"/>
    <property type="project" value="Ensembl"/>
</dbReference>
<dbReference type="GO" id="GO:0071316">
    <property type="term" value="P:cellular response to nicotine"/>
    <property type="evidence" value="ECO:0000315"/>
    <property type="project" value="ARUK-UCL"/>
</dbReference>
<dbReference type="GO" id="GO:0006879">
    <property type="term" value="P:intracellular iron ion homeostasis"/>
    <property type="evidence" value="ECO:0000314"/>
    <property type="project" value="BHF-UCL"/>
</dbReference>
<dbReference type="GO" id="GO:0007611">
    <property type="term" value="P:learning or memory"/>
    <property type="evidence" value="ECO:0000314"/>
    <property type="project" value="ARUK-UCL"/>
</dbReference>
<dbReference type="GO" id="GO:0060586">
    <property type="term" value="P:multicellular organismal-level iron ion homeostasis"/>
    <property type="evidence" value="ECO:0007669"/>
    <property type="project" value="Ensembl"/>
</dbReference>
<dbReference type="GO" id="GO:0050680">
    <property type="term" value="P:negative regulation of epithelial cell proliferation"/>
    <property type="evidence" value="ECO:0000314"/>
    <property type="project" value="ARUK-UCL"/>
</dbReference>
<dbReference type="GO" id="GO:2000978">
    <property type="term" value="P:negative regulation of forebrain neuron differentiation"/>
    <property type="evidence" value="ECO:0000314"/>
    <property type="project" value="ARUK-UCL"/>
</dbReference>
<dbReference type="GO" id="GO:0050768">
    <property type="term" value="P:negative regulation of neurogenesis"/>
    <property type="evidence" value="ECO:0000314"/>
    <property type="project" value="ARUK-UCL"/>
</dbReference>
<dbReference type="GO" id="GO:0010977">
    <property type="term" value="P:negative regulation of neuron projection development"/>
    <property type="evidence" value="ECO:0007669"/>
    <property type="project" value="Ensembl"/>
</dbReference>
<dbReference type="GO" id="GO:1900121">
    <property type="term" value="P:negative regulation of receptor binding"/>
    <property type="evidence" value="ECO:0000314"/>
    <property type="project" value="BHF-UCL"/>
</dbReference>
<dbReference type="GO" id="GO:0002502">
    <property type="term" value="P:peptide antigen assembly with MHC class I protein complex"/>
    <property type="evidence" value="ECO:0000314"/>
    <property type="project" value="UniProt"/>
</dbReference>
<dbReference type="GO" id="GO:0002503">
    <property type="term" value="P:peptide antigen assembly with MHC class II protein complex"/>
    <property type="evidence" value="ECO:0000318"/>
    <property type="project" value="GO_Central"/>
</dbReference>
<dbReference type="GO" id="GO:2000774">
    <property type="term" value="P:positive regulation of cellular senescence"/>
    <property type="evidence" value="ECO:0000314"/>
    <property type="project" value="ARUK-UCL"/>
</dbReference>
<dbReference type="GO" id="GO:0050778">
    <property type="term" value="P:positive regulation of immune response"/>
    <property type="evidence" value="ECO:0000318"/>
    <property type="project" value="GO_Central"/>
</dbReference>
<dbReference type="GO" id="GO:0048260">
    <property type="term" value="P:positive regulation of receptor-mediated endocytosis"/>
    <property type="evidence" value="ECO:0000316"/>
    <property type="project" value="BHF-UCL"/>
</dbReference>
<dbReference type="GO" id="GO:0050870">
    <property type="term" value="P:positive regulation of T cell activation"/>
    <property type="evidence" value="ECO:0000318"/>
    <property type="project" value="GO_Central"/>
</dbReference>
<dbReference type="GO" id="GO:0002726">
    <property type="term" value="P:positive regulation of T cell cytokine production"/>
    <property type="evidence" value="ECO:0000314"/>
    <property type="project" value="BHF-UCL"/>
</dbReference>
<dbReference type="GO" id="GO:0001916">
    <property type="term" value="P:positive regulation of T cell mediated cytotoxicity"/>
    <property type="evidence" value="ECO:0007669"/>
    <property type="project" value="Ensembl"/>
</dbReference>
<dbReference type="GO" id="GO:0051289">
    <property type="term" value="P:protein homotetramerization"/>
    <property type="evidence" value="ECO:0000353"/>
    <property type="project" value="ARUK-UCL"/>
</dbReference>
<dbReference type="GO" id="GO:0042026">
    <property type="term" value="P:protein refolding"/>
    <property type="evidence" value="ECO:0007669"/>
    <property type="project" value="Ensembl"/>
</dbReference>
<dbReference type="GO" id="GO:0045646">
    <property type="term" value="P:regulation of erythrocyte differentiation"/>
    <property type="evidence" value="ECO:0007669"/>
    <property type="project" value="Ensembl"/>
</dbReference>
<dbReference type="GO" id="GO:0034756">
    <property type="term" value="P:regulation of iron ion transport"/>
    <property type="evidence" value="ECO:0000316"/>
    <property type="project" value="BHF-UCL"/>
</dbReference>
<dbReference type="GO" id="GO:0002237">
    <property type="term" value="P:response to molecule of bacterial origin"/>
    <property type="evidence" value="ECO:0007669"/>
    <property type="project" value="Ensembl"/>
</dbReference>
<dbReference type="GO" id="GO:0007608">
    <property type="term" value="P:sensory perception of smell"/>
    <property type="evidence" value="ECO:0007669"/>
    <property type="project" value="Ensembl"/>
</dbReference>
<dbReference type="GO" id="GO:0033077">
    <property type="term" value="P:T cell differentiation in thymus"/>
    <property type="evidence" value="ECO:0007669"/>
    <property type="project" value="Ensembl"/>
</dbReference>
<dbReference type="GO" id="GO:0001913">
    <property type="term" value="P:T cell mediated cytotoxicity"/>
    <property type="evidence" value="ECO:0007669"/>
    <property type="project" value="Ensembl"/>
</dbReference>
<dbReference type="GO" id="GO:0033572">
    <property type="term" value="P:transferrin transport"/>
    <property type="evidence" value="ECO:0000314"/>
    <property type="project" value="BHF-UCL"/>
</dbReference>
<dbReference type="CDD" id="cd05770">
    <property type="entry name" value="IgC1_beta2m"/>
    <property type="match status" value="1"/>
</dbReference>
<dbReference type="FunFam" id="2.60.40.10:FF:001005">
    <property type="entry name" value="Beta-2-microglobulin"/>
    <property type="match status" value="1"/>
</dbReference>
<dbReference type="Gene3D" id="2.60.40.10">
    <property type="entry name" value="Immunoglobulins"/>
    <property type="match status" value="1"/>
</dbReference>
<dbReference type="InterPro" id="IPR015707">
    <property type="entry name" value="B2Microglobulin"/>
</dbReference>
<dbReference type="InterPro" id="IPR007110">
    <property type="entry name" value="Ig-like_dom"/>
</dbReference>
<dbReference type="InterPro" id="IPR036179">
    <property type="entry name" value="Ig-like_dom_sf"/>
</dbReference>
<dbReference type="InterPro" id="IPR013783">
    <property type="entry name" value="Ig-like_fold"/>
</dbReference>
<dbReference type="InterPro" id="IPR003006">
    <property type="entry name" value="Ig/MHC_CS"/>
</dbReference>
<dbReference type="InterPro" id="IPR003597">
    <property type="entry name" value="Ig_C1-set"/>
</dbReference>
<dbReference type="InterPro" id="IPR050160">
    <property type="entry name" value="MHC/Immunoglobulin"/>
</dbReference>
<dbReference type="PANTHER" id="PTHR19944:SF62">
    <property type="entry name" value="BETA-2-MICROGLOBULIN"/>
    <property type="match status" value="1"/>
</dbReference>
<dbReference type="PANTHER" id="PTHR19944">
    <property type="entry name" value="MHC CLASS II-RELATED"/>
    <property type="match status" value="1"/>
</dbReference>
<dbReference type="Pfam" id="PF07654">
    <property type="entry name" value="C1-set"/>
    <property type="match status" value="1"/>
</dbReference>
<dbReference type="SMART" id="SM00407">
    <property type="entry name" value="IGc1"/>
    <property type="match status" value="1"/>
</dbReference>
<dbReference type="SUPFAM" id="SSF48726">
    <property type="entry name" value="Immunoglobulin"/>
    <property type="match status" value="1"/>
</dbReference>
<dbReference type="PROSITE" id="PS50835">
    <property type="entry name" value="IG_LIKE"/>
    <property type="match status" value="1"/>
</dbReference>
<dbReference type="PROSITE" id="PS00290">
    <property type="entry name" value="IG_MHC"/>
    <property type="match status" value="1"/>
</dbReference>
<evidence type="ECO:0000255" key="1">
    <source>
        <dbReference type="PROSITE-ProRule" id="PRU00114"/>
    </source>
</evidence>
<evidence type="ECO:0000269" key="2">
    <source>
    </source>
</evidence>
<evidence type="ECO:0000269" key="3">
    <source>
    </source>
</evidence>
<evidence type="ECO:0000269" key="4">
    <source>
    </source>
</evidence>
<evidence type="ECO:0000269" key="5">
    <source>
    </source>
</evidence>
<evidence type="ECO:0000269" key="6">
    <source>
    </source>
</evidence>
<evidence type="ECO:0000269" key="7">
    <source>
    </source>
</evidence>
<evidence type="ECO:0000269" key="8">
    <source>
    </source>
</evidence>
<evidence type="ECO:0000269" key="9">
    <source>
    </source>
</evidence>
<evidence type="ECO:0000269" key="10">
    <source>
    </source>
</evidence>
<evidence type="ECO:0000269" key="11">
    <source>
    </source>
</evidence>
<evidence type="ECO:0000269" key="12">
    <source>
    </source>
</evidence>
<evidence type="ECO:0000269" key="13">
    <source>
    </source>
</evidence>
<evidence type="ECO:0000269" key="14">
    <source>
    </source>
</evidence>
<evidence type="ECO:0000269" key="15">
    <source>
    </source>
</evidence>
<evidence type="ECO:0000269" key="16">
    <source>
    </source>
</evidence>
<evidence type="ECO:0000269" key="17">
    <source>
    </source>
</evidence>
<evidence type="ECO:0000269" key="18">
    <source>
    </source>
</evidence>
<evidence type="ECO:0000269" key="19">
    <source>
    </source>
</evidence>
<evidence type="ECO:0000269" key="20">
    <source>
    </source>
</evidence>
<evidence type="ECO:0000269" key="21">
    <source>
    </source>
</evidence>
<evidence type="ECO:0000269" key="22">
    <source>
    </source>
</evidence>
<evidence type="ECO:0000269" key="23">
    <source>
    </source>
</evidence>
<evidence type="ECO:0000269" key="24">
    <source ref="6"/>
</evidence>
<evidence type="ECO:0000305" key="25"/>
<evidence type="ECO:0000312" key="26">
    <source>
        <dbReference type="HGNC" id="HGNC:914"/>
    </source>
</evidence>
<evidence type="ECO:0007829" key="27">
    <source>
        <dbReference type="PDB" id="1K5N"/>
    </source>
</evidence>
<evidence type="ECO:0007829" key="28">
    <source>
        <dbReference type="PDB" id="2YXF"/>
    </source>
</evidence>
<evidence type="ECO:0007829" key="29">
    <source>
        <dbReference type="PDB" id="3LOW"/>
    </source>
</evidence>
<evidence type="ECO:0007829" key="30">
    <source>
        <dbReference type="PDB" id="3MYZ"/>
    </source>
</evidence>
<evidence type="ECO:0007829" key="31">
    <source>
        <dbReference type="PDB" id="4E0K"/>
    </source>
</evidence>
<evidence type="ECO:0007829" key="32">
    <source>
        <dbReference type="PDB" id="4RMW"/>
    </source>
</evidence>
<evidence type="ECO:0007829" key="33">
    <source>
        <dbReference type="PDB" id="4WC8"/>
    </source>
</evidence>
<evidence type="ECO:0007829" key="34">
    <source>
        <dbReference type="PDB" id="7MX4"/>
    </source>
</evidence>
<evidence type="ECO:0007829" key="35">
    <source>
        <dbReference type="PDB" id="9C6W"/>
    </source>
</evidence>
<comment type="function">
    <text evidence="16">Component of the class I major histocompatibility complex (MHC). Involved in the presentation of peptide antigens to the immune system. Exogenously applied M.tuberculosis EsxA or EsxA-EsxB (or EsxA expressed in host) binds B2M and decreases its export to the cell surface (total protein levels do not change), probably leading to defects in class I antigen presentation (PubMed:25356553).</text>
</comment>
<comment type="subunit">
    <text evidence="2 4 9 15 16 18 23">Heterodimer of an alpha chain and a beta chain. Beta-2-microglobulin is the beta-chain of major histocompatibility complex class I molecules. Polymers of beta 2-microglobulin can be found in tissues from patients on long-term hemodialysis. B2M alone (not in complex with HLA-I) interacts with M.tuberculosis EsxA (ESAT-6) and an EsxA-EsxB (CFP-10) complex; the tripartite complex can be detected in the host endoplasmic reticulum (PubMed:25356553). The B2M-EsxA complex can be detected in patients with pleural tuberculosis and is stable from pH 4.0 to 8.0 and in the presence of 2M NaCl (PubMed:25356553). Forms a heterotrimer with HLA-E and a self- or a foreign peptide (PubMed:9427624). Forms a heterotrimer with HLA-G and a self-peptide (PubMed:17056715). Forms a heterotrimer with HLA-F and a self-peptide (PubMed:10605026). Forms a heterotrimer with MR1 and a metabolite antigen.</text>
</comment>
<comment type="interaction">
    <interactant intactId="EBI-714718">
        <id>P61769</id>
    </interactant>
    <interactant intactId="EBI-714718">
        <id>P61769</id>
        <label>B2M</label>
    </interactant>
    <organismsDiffer>false</organismsDiffer>
    <experiments>36</experiments>
</comment>
<comment type="interaction">
    <interactant intactId="EBI-714718">
        <id>P61769</id>
    </interactant>
    <interactant intactId="EBI-1036766">
        <id>P06126</id>
        <label>CD1A</label>
    </interactant>
    <organismsDiffer>false</organismsDiffer>
    <experiments>2</experiments>
</comment>
<comment type="interaction">
    <interactant intactId="EBI-714718">
        <id>P61769</id>
    </interactant>
    <interactant intactId="EBI-1033762">
        <id>P29016</id>
        <label>CD1B</label>
    </interactant>
    <organismsDiffer>false</organismsDiffer>
    <experiments>6</experiments>
</comment>
<comment type="interaction">
    <interactant intactId="EBI-714718">
        <id>P61769</id>
    </interactant>
    <interactant intactId="EBI-1580565">
        <id>Q9BZW8</id>
        <label>CD244</label>
    </interactant>
    <organismsDiffer>false</organismsDiffer>
    <experiments>2</experiments>
</comment>
<comment type="interaction">
    <interactant intactId="EBI-714718">
        <id>P61769</id>
    </interactant>
    <interactant intactId="EBI-1028850">
        <id>Q30201</id>
        <label>HFE</label>
    </interactant>
    <organismsDiffer>false</organismsDiffer>
    <experiments>5</experiments>
</comment>
<comment type="interaction">
    <interactant intactId="EBI-714718">
        <id>P61769</id>
    </interactant>
    <interactant intactId="EBI-2839473">
        <id>P01892</id>
        <label>HLA-A</label>
    </interactant>
    <organismsDiffer>false</organismsDiffer>
    <experiments>21</experiments>
</comment>
<comment type="interaction">
    <interactant intactId="EBI-714718">
        <id>P61769</id>
    </interactant>
    <interactant intactId="EBI-16016814">
        <id>Q95460-1</id>
        <label>MR1</label>
    </interactant>
    <organismsDiffer>false</organismsDiffer>
    <experiments>3</experiments>
</comment>
<comment type="interaction">
    <interactant intactId="EBI-714718">
        <id>P61769</id>
    </interactant>
    <interactant intactId="EBI-358311">
        <id>P12004</id>
        <label>PCNA</label>
    </interactant>
    <organismsDiffer>false</organismsDiffer>
    <experiments>3</experiments>
</comment>
<comment type="interaction">
    <interactant intactId="EBI-714718">
        <id>P61769</id>
    </interactant>
    <interactant intactId="EBI-3397474">
        <id>Q9Y3Y4</id>
        <label>PYGO1</label>
    </interactant>
    <organismsDiffer>false</organismsDiffer>
    <experiments>3</experiments>
</comment>
<comment type="subcellular location">
    <subcellularLocation>
        <location evidence="5 20">Secreted</location>
    </subcellularLocation>
    <subcellularLocation>
        <location evidence="16">Cell surface</location>
    </subcellularLocation>
    <text evidence="20 24">Detected in serum and urine (PubMed:1336137, PubMed:7554280).</text>
</comment>
<comment type="subcellular location">
    <text evidence="16">(Microbial infection) In the presence of M.tuberculosis EsxA-EsxB complex decreased amounts of B2M are found on the cell surface (PubMed:25356553).</text>
</comment>
<comment type="PTM">
    <text>Glycation of Ile-21 is observed in long-term hemodialysis patients.</text>
</comment>
<comment type="disease" evidence="7">
    <disease id="DI-01765">
        <name>Immunodeficiency 43</name>
        <acronym>IMD43</acronym>
        <description>A disorder characterized by marked reduction in serum concentrations of immunoglobulins and albumin, and hypoproteinemia due to hypercatabolism. Patients may suffer from recurrent respiratory tract infections and severe skin disease.</description>
        <dbReference type="MIM" id="241600"/>
    </disease>
    <text>The disease is caused by variants affecting the gene represented in this entry.</text>
</comment>
<comment type="disease" evidence="14">
    <disease id="DI-06896">
        <name>Amyloidosis, hereditary systemic 6</name>
        <acronym>AMYLD6</acronym>
        <description>A form of hereditary systemic amyloidosis, a disorder characterized by amyloid deposition in multiple tissues resulting in a wide clinical spectrum. AMYLD6 is mainly characterized by gastrointestinal and cardiac symptoms. Neurologic involvement, sicca syndrome, and carpal tunnel syndrome may also be present. Inheritance is autosomal dominant.</description>
        <dbReference type="MIM" id="620659"/>
    </disease>
    <text evidence="14 21">The disease is caused by variants affecting the gene represented in this entry. Apart from the presence of causative mutations, beta-2-microglobulin may adopt the fibrillar configuration of amyloid, resulting in amyloidosis, when its serum levels are persistently high, as seen in patients on long-term hemodialysis (PubMed:7918443). In contrast to patients with dialysis-related amyloidosis, patients with hereditary amyloidosis have normal circulating concentrations of beta2-microglobulin (PubMed:22693999).</text>
</comment>
<comment type="similarity">
    <text evidence="25">Belongs to the beta-2-microglobulin family.</text>
</comment>
<comment type="online information" name="Wikipedia">
    <link uri="https://en.wikipedia.org/wiki/Beta-2-microglobulin"/>
    <text>Beta-2-microglobulin entry</text>
</comment>
<organism>
    <name type="scientific">Homo sapiens</name>
    <name type="common">Human</name>
    <dbReference type="NCBI Taxonomy" id="9606"/>
    <lineage>
        <taxon>Eukaryota</taxon>
        <taxon>Metazoa</taxon>
        <taxon>Chordata</taxon>
        <taxon>Craniata</taxon>
        <taxon>Vertebrata</taxon>
        <taxon>Euteleostomi</taxon>
        <taxon>Mammalia</taxon>
        <taxon>Eutheria</taxon>
        <taxon>Euarchontoglires</taxon>
        <taxon>Primates</taxon>
        <taxon>Haplorrhini</taxon>
        <taxon>Catarrhini</taxon>
        <taxon>Hominidae</taxon>
        <taxon>Homo</taxon>
    </lineage>
</organism>
<feature type="signal peptide" evidence="5 17 18 19 22">
    <location>
        <begin position="1"/>
        <end position="20"/>
    </location>
</feature>
<feature type="chain" id="PRO_0000018779" description="Beta-2-microglobulin">
    <location>
        <begin position="21"/>
        <end position="119"/>
    </location>
</feature>
<feature type="chain" id="PRO_0000018780" description="Beta-2-microglobulin form pI 5.3">
    <location>
        <begin position="22"/>
        <end position="119"/>
    </location>
</feature>
<feature type="domain" description="Ig-like C1-type">
    <location>
        <begin position="25"/>
        <end position="113"/>
    </location>
</feature>
<feature type="modified residue" description="Pyrrolidone carboxylic acid; in form pI 5.3" evidence="20">
    <location>
        <position position="22"/>
    </location>
</feature>
<feature type="glycosylation site" description="N-linked (Glc) (glycation) isoleucine; in hemodialysis-associated amyloidosis" evidence="21">
    <location>
        <position position="21"/>
    </location>
</feature>
<feature type="glycosylation site" description="N-linked (Glc) (glycation) lysine; in vitro" evidence="21">
    <location>
        <position position="39"/>
    </location>
</feature>
<feature type="glycosylation site" description="N-linked (Glc) (glycation) lysine; in vitro" evidence="21">
    <location>
        <position position="61"/>
    </location>
</feature>
<feature type="glycosylation site" description="N-linked (Glc) (glycation) lysine; in vitro" evidence="21">
    <location>
        <position position="68"/>
    </location>
</feature>
<feature type="glycosylation site" description="N-linked (Glc) (glycation) lysine; in vitro" evidence="21">
    <location>
        <position position="78"/>
    </location>
</feature>
<feature type="glycosylation site" description="N-linked (Glc) (glycation) lysine; in vitro" evidence="21">
    <location>
        <position position="111"/>
    </location>
</feature>
<feature type="glycosylation site" description="N-linked (Glc) (glycation) lysine; in vitro" evidence="21">
    <location>
        <position position="114"/>
    </location>
</feature>
<feature type="disulfide bond" evidence="1 3 4 6 8 10 11 12 13">
    <location>
        <begin position="45"/>
        <end position="100"/>
    </location>
</feature>
<feature type="sequence variant" id="VAR_030660" description="In IMD43; lower levels of B2M, MHC class I and FCGRT proteins; dbSNP:rs104894481." evidence="7">
    <original>A</original>
    <variation>P</variation>
    <location>
        <position position="11"/>
    </location>
</feature>
<feature type="sequence variant" id="VAR_076691" description="In AMYLD6; reduced stability; in contrast to the wild-type, the mutant aggregates into fibrils with classic amyloid-like properties under physiologic solvent conditions; dbSNP:rs398122820." evidence="14">
    <original>D</original>
    <variation>N</variation>
    <location>
        <position position="96"/>
    </location>
</feature>
<feature type="mutagenesis site" description="Increases tendency towards amyloid formation." evidence="12">
    <original>D</original>
    <variation>P</variation>
    <location>
        <position position="79"/>
    </location>
</feature>
<feature type="mutagenesis site" description="Decreases tendency towards amyloid formation." evidence="11 13">
    <original>W</original>
    <variation>G</variation>
    <location>
        <position position="80"/>
    </location>
</feature>
<feature type="mutagenesis site" description="Increases tendency towards amyloid formation." evidence="11 13">
    <original>W</original>
    <variation>V</variation>
    <location>
        <position position="80"/>
    </location>
</feature>
<feature type="sequence conflict" description="In Ref. 1; AAA51811." evidence="25" ref="1">
    <original>A</original>
    <variation>G</variation>
    <location>
        <position position="20"/>
    </location>
</feature>
<feature type="sequence conflict" description="In Ref. 1; AAA51811." evidence="25" ref="1">
    <original>P</original>
    <variation>Q</variation>
    <location>
        <position position="52"/>
    </location>
</feature>
<feature type="sequence conflict" description="In Ref. 7; CAG33347." evidence="25" ref="7">
    <original>M</original>
    <variation>I</variation>
    <location>
        <position position="119"/>
    </location>
</feature>
<feature type="strand" evidence="35">
    <location>
        <begin position="21"/>
        <end position="23"/>
    </location>
</feature>
<feature type="strand" evidence="27">
    <location>
        <begin position="26"/>
        <end position="33"/>
    </location>
</feature>
<feature type="helix" evidence="28">
    <location>
        <begin position="35"/>
        <end position="37"/>
    </location>
</feature>
<feature type="strand" evidence="27">
    <location>
        <begin position="41"/>
        <end position="53"/>
    </location>
</feature>
<feature type="strand" evidence="27">
    <location>
        <begin position="56"/>
        <end position="61"/>
    </location>
</feature>
<feature type="strand" evidence="29">
    <location>
        <begin position="64"/>
        <end position="66"/>
    </location>
</feature>
<feature type="strand" evidence="28">
    <location>
        <begin position="71"/>
        <end position="78"/>
    </location>
</feature>
<feature type="strand" evidence="31">
    <location>
        <begin position="79"/>
        <end position="82"/>
    </location>
</feature>
<feature type="strand" evidence="33">
    <location>
        <begin position="83"/>
        <end position="88"/>
    </location>
</feature>
<feature type="turn" evidence="32">
    <location>
        <begin position="93"/>
        <end position="95"/>
    </location>
</feature>
<feature type="strand" evidence="27">
    <location>
        <begin position="98"/>
        <end position="103"/>
    </location>
</feature>
<feature type="strand" evidence="30">
    <location>
        <begin position="107"/>
        <end position="109"/>
    </location>
</feature>
<feature type="strand" evidence="27">
    <location>
        <begin position="111"/>
        <end position="114"/>
    </location>
</feature>
<feature type="turn" evidence="34">
    <location>
        <begin position="117"/>
        <end position="119"/>
    </location>
</feature>
<protein>
    <recommendedName>
        <fullName>Beta-2-microglobulin</fullName>
    </recommendedName>
    <component>
        <recommendedName>
            <fullName>Beta-2-microglobulin form pI 5.3</fullName>
        </recommendedName>
    </component>
</protein>
<accession>P61769</accession>
<accession>P01884</accession>
<accession>Q540F8</accession>
<accession>Q6IAT8</accession>
<accession>Q9UCK0</accession>
<accession>Q9UD48</accession>
<accession>Q9UDF4</accession>
<reference key="1">
    <citation type="journal article" date="1987" name="J. Immunol.">
        <title>The human beta 2-microglobulin gene. Primary structure and definition of the transcriptional unit.</title>
        <authorList>
            <person name="Guessow D."/>
            <person name="Rein R."/>
            <person name="Ginjaar I."/>
            <person name="Hochstenbach F."/>
            <person name="Seemann G."/>
            <person name="Kottman A."/>
            <person name="Ploegh H.L."/>
        </authorList>
    </citation>
    <scope>NUCLEOTIDE SEQUENCE [GENOMIC DNA]</scope>
</reference>
<reference key="2">
    <citation type="journal article" date="2004" name="Sheng Wu Gong Cheng Xue Bao">
        <title>Cloning of human beta-microglobulin gene and its high expression in Escherichia coli.</title>
        <authorList>
            <person name="He X.H."/>
            <person name="Xu L.H."/>
            <person name="Liu Y."/>
            <person name="Zeng Y.Y."/>
        </authorList>
    </citation>
    <scope>NUCLEOTIDE SEQUENCE [MRNA]</scope>
    <source>
        <tissue>Peripheral blood</tissue>
    </source>
</reference>
<reference key="3">
    <citation type="submission" date="1998-12" db="EMBL/GenBank/DDBJ databases">
        <title>Human mRNA for beta 2-microglobulin.</title>
        <authorList>
            <person name="Matsumoto K."/>
            <person name="Minamitani T."/>
        </authorList>
    </citation>
    <scope>NUCLEOTIDE SEQUENCE [MRNA]</scope>
    <source>
        <tissue>Cervix carcinoma</tissue>
    </source>
</reference>
<reference key="4">
    <citation type="submission" date="2005-09" db="EMBL/GenBank/DDBJ databases">
        <title>Genetic variation in immune response genes.</title>
        <authorList>
            <person name="Tan J."/>
            <person name="Ong R."/>
            <person name="Hibberd M.L."/>
            <person name="Seielstad M."/>
        </authorList>
    </citation>
    <scope>NUCLEOTIDE SEQUENCE [GENOMIC DNA]</scope>
</reference>
<reference key="5">
    <citation type="submission" date="1998-06" db="EMBL/GenBank/DDBJ databases">
        <title>A novel gene from human dendritic cell.</title>
        <authorList>
            <person name="Zhao Z."/>
            <person name="Huang X."/>
            <person name="Li N."/>
            <person name="Zhu X."/>
            <person name="Cao X."/>
        </authorList>
    </citation>
    <scope>NUCLEOTIDE SEQUENCE [LARGE SCALE MRNA]</scope>
    <source>
        <tissue>Dendritic cell</tissue>
    </source>
</reference>
<reference key="6">
    <citation type="submission" date="2000-07" db="EMBL/GenBank/DDBJ databases">
        <title>Pediatric leukemia cDNA sequencing project.</title>
        <authorList>
            <person name="Zhou J."/>
            <person name="Yu W."/>
            <person name="Tang H."/>
            <person name="Mei G."/>
            <person name="Tsang Y.T.M."/>
            <person name="Bouck J."/>
            <person name="Gibbs R.A."/>
            <person name="Margolin J.F."/>
        </authorList>
    </citation>
    <scope>NUCLEOTIDE SEQUENCE [LARGE SCALE MRNA]</scope>
    <source>
        <tissue>Leukemia</tissue>
    </source>
</reference>
<reference key="7">
    <citation type="submission" date="2004-06" db="EMBL/GenBank/DDBJ databases">
        <title>Cloning of human full open reading frames in Gateway(TM) system entry vector (pDONR201).</title>
        <authorList>
            <person name="Ebert L."/>
            <person name="Schick M."/>
            <person name="Neubert P."/>
            <person name="Schatten R."/>
            <person name="Henze S."/>
            <person name="Korn B."/>
        </authorList>
    </citation>
    <scope>NUCLEOTIDE SEQUENCE [LARGE SCALE MRNA]</scope>
</reference>
<reference key="8">
    <citation type="journal article" date="2004" name="Nat. Genet.">
        <title>Complete sequencing and characterization of 21,243 full-length human cDNAs.</title>
        <authorList>
            <person name="Ota T."/>
            <person name="Suzuki Y."/>
            <person name="Nishikawa T."/>
            <person name="Otsuki T."/>
            <person name="Sugiyama T."/>
            <person name="Irie R."/>
            <person name="Wakamatsu A."/>
            <person name="Hayashi K."/>
            <person name="Sato H."/>
            <person name="Nagai K."/>
            <person name="Kimura K."/>
            <person name="Makita H."/>
            <person name="Sekine M."/>
            <person name="Obayashi M."/>
            <person name="Nishi T."/>
            <person name="Shibahara T."/>
            <person name="Tanaka T."/>
            <person name="Ishii S."/>
            <person name="Yamamoto J."/>
            <person name="Saito K."/>
            <person name="Kawai Y."/>
            <person name="Isono Y."/>
            <person name="Nakamura Y."/>
            <person name="Nagahari K."/>
            <person name="Murakami K."/>
            <person name="Yasuda T."/>
            <person name="Iwayanagi T."/>
            <person name="Wagatsuma M."/>
            <person name="Shiratori A."/>
            <person name="Sudo H."/>
            <person name="Hosoiri T."/>
            <person name="Kaku Y."/>
            <person name="Kodaira H."/>
            <person name="Kondo H."/>
            <person name="Sugawara M."/>
            <person name="Takahashi M."/>
            <person name="Kanda K."/>
            <person name="Yokoi T."/>
            <person name="Furuya T."/>
            <person name="Kikkawa E."/>
            <person name="Omura Y."/>
            <person name="Abe K."/>
            <person name="Kamihara K."/>
            <person name="Katsuta N."/>
            <person name="Sato K."/>
            <person name="Tanikawa M."/>
            <person name="Yamazaki M."/>
            <person name="Ninomiya K."/>
            <person name="Ishibashi T."/>
            <person name="Yamashita H."/>
            <person name="Murakawa K."/>
            <person name="Fujimori K."/>
            <person name="Tanai H."/>
            <person name="Kimata M."/>
            <person name="Watanabe M."/>
            <person name="Hiraoka S."/>
            <person name="Chiba Y."/>
            <person name="Ishida S."/>
            <person name="Ono Y."/>
            <person name="Takiguchi S."/>
            <person name="Watanabe S."/>
            <person name="Yosida M."/>
            <person name="Hotuta T."/>
            <person name="Kusano J."/>
            <person name="Kanehori K."/>
            <person name="Takahashi-Fujii A."/>
            <person name="Hara H."/>
            <person name="Tanase T.-O."/>
            <person name="Nomura Y."/>
            <person name="Togiya S."/>
            <person name="Komai F."/>
            <person name="Hara R."/>
            <person name="Takeuchi K."/>
            <person name="Arita M."/>
            <person name="Imose N."/>
            <person name="Musashino K."/>
            <person name="Yuuki H."/>
            <person name="Oshima A."/>
            <person name="Sasaki N."/>
            <person name="Aotsuka S."/>
            <person name="Yoshikawa Y."/>
            <person name="Matsunawa H."/>
            <person name="Ichihara T."/>
            <person name="Shiohata N."/>
            <person name="Sano S."/>
            <person name="Moriya S."/>
            <person name="Momiyama H."/>
            <person name="Satoh N."/>
            <person name="Takami S."/>
            <person name="Terashima Y."/>
            <person name="Suzuki O."/>
            <person name="Nakagawa S."/>
            <person name="Senoh A."/>
            <person name="Mizoguchi H."/>
            <person name="Goto Y."/>
            <person name="Shimizu F."/>
            <person name="Wakebe H."/>
            <person name="Hishigaki H."/>
            <person name="Watanabe T."/>
            <person name="Sugiyama A."/>
            <person name="Takemoto M."/>
            <person name="Kawakami B."/>
            <person name="Yamazaki M."/>
            <person name="Watanabe K."/>
            <person name="Kumagai A."/>
            <person name="Itakura S."/>
            <person name="Fukuzumi Y."/>
            <person name="Fujimori Y."/>
            <person name="Komiyama M."/>
            <person name="Tashiro H."/>
            <person name="Tanigami A."/>
            <person name="Fujiwara T."/>
            <person name="Ono T."/>
            <person name="Yamada K."/>
            <person name="Fujii Y."/>
            <person name="Ozaki K."/>
            <person name="Hirao M."/>
            <person name="Ohmori Y."/>
            <person name="Kawabata A."/>
            <person name="Hikiji T."/>
            <person name="Kobatake N."/>
            <person name="Inagaki H."/>
            <person name="Ikema Y."/>
            <person name="Okamoto S."/>
            <person name="Okitani R."/>
            <person name="Kawakami T."/>
            <person name="Noguchi S."/>
            <person name="Itoh T."/>
            <person name="Shigeta K."/>
            <person name="Senba T."/>
            <person name="Matsumura K."/>
            <person name="Nakajima Y."/>
            <person name="Mizuno T."/>
            <person name="Morinaga M."/>
            <person name="Sasaki M."/>
            <person name="Togashi T."/>
            <person name="Oyama M."/>
            <person name="Hata H."/>
            <person name="Watanabe M."/>
            <person name="Komatsu T."/>
            <person name="Mizushima-Sugano J."/>
            <person name="Satoh T."/>
            <person name="Shirai Y."/>
            <person name="Takahashi Y."/>
            <person name="Nakagawa K."/>
            <person name="Okumura K."/>
            <person name="Nagase T."/>
            <person name="Nomura N."/>
            <person name="Kikuchi H."/>
            <person name="Masuho Y."/>
            <person name="Yamashita R."/>
            <person name="Nakai K."/>
            <person name="Yada T."/>
            <person name="Nakamura Y."/>
            <person name="Ohara O."/>
            <person name="Isogai T."/>
            <person name="Sugano S."/>
        </authorList>
    </citation>
    <scope>NUCLEOTIDE SEQUENCE [LARGE SCALE MRNA]</scope>
    <source>
        <tissue>Trachea</tissue>
    </source>
</reference>
<reference key="9">
    <citation type="submission" date="2005-07" db="EMBL/GenBank/DDBJ databases">
        <authorList>
            <person name="Mural R.J."/>
            <person name="Istrail S."/>
            <person name="Sutton G.G."/>
            <person name="Florea L."/>
            <person name="Halpern A.L."/>
            <person name="Mobarry C.M."/>
            <person name="Lippert R."/>
            <person name="Walenz B."/>
            <person name="Shatkay H."/>
            <person name="Dew I."/>
            <person name="Miller J.R."/>
            <person name="Flanigan M.J."/>
            <person name="Edwards N.J."/>
            <person name="Bolanos R."/>
            <person name="Fasulo D."/>
            <person name="Halldorsson B.V."/>
            <person name="Hannenhalli S."/>
            <person name="Turner R."/>
            <person name="Yooseph S."/>
            <person name="Lu F."/>
            <person name="Nusskern D.R."/>
            <person name="Shue B.C."/>
            <person name="Zheng X.H."/>
            <person name="Zhong F."/>
            <person name="Delcher A.L."/>
            <person name="Huson D.H."/>
            <person name="Kravitz S.A."/>
            <person name="Mouchard L."/>
            <person name="Reinert K."/>
            <person name="Remington K.A."/>
            <person name="Clark A.G."/>
            <person name="Waterman M.S."/>
            <person name="Eichler E.E."/>
            <person name="Adams M.D."/>
            <person name="Hunkapiller M.W."/>
            <person name="Myers E.W."/>
            <person name="Venter J.C."/>
        </authorList>
    </citation>
    <scope>NUCLEOTIDE SEQUENCE [LARGE SCALE GENOMIC DNA]</scope>
</reference>
<reference key="10">
    <citation type="journal article" date="2004" name="Genome Res.">
        <title>The status, quality, and expansion of the NIH full-length cDNA project: the Mammalian Gene Collection (MGC).</title>
        <authorList>
            <consortium name="The MGC Project Team"/>
        </authorList>
    </citation>
    <scope>NUCLEOTIDE SEQUENCE [LARGE SCALE MRNA]</scope>
    <source>
        <tissue>Retina</tissue>
        <tissue>Skin</tissue>
    </source>
</reference>
<reference key="11">
    <citation type="journal article" date="1983" name="EMBO J.">
        <title>The beta-2-microglobulin mRNA in human Daudi cells has a mutated initiation codon but is still inducible by interferon.</title>
        <authorList>
            <person name="Rosa F."/>
            <person name="Berissi H."/>
            <person name="Weissenbach J."/>
            <person name="Maroteaux L."/>
            <person name="Fellous M."/>
            <person name="Revel M."/>
        </authorList>
    </citation>
    <scope>NUCLEOTIDE SEQUENCE [MRNA] OF 1-21</scope>
</reference>
<reference key="12">
    <citation type="journal article" date="1981" name="Proc. Natl. Acad. Sci. U.S.A.">
        <title>Use of synthetic oligonucleotides as hybridization probes: isolation of cloned cDNA sequences for human beta 2-microglobulin.</title>
        <authorList>
            <person name="Suggs S.V."/>
            <person name="Wallace R.B."/>
            <person name="Hirose T."/>
            <person name="Kawashima E.H."/>
            <person name="Itakura K."/>
        </authorList>
    </citation>
    <scope>NUCLEOTIDE SEQUENCE [MRNA] OF 10-119</scope>
</reference>
<reference key="13">
    <citation type="journal article" date="1973" name="Biochemistry">
        <title>The complete amino acid sequence of beta 2-microglobulin.</title>
        <authorList>
            <person name="Cunningham B.A."/>
            <person name="Wang J.L."/>
            <person name="Berggard I."/>
            <person name="Peterson P.A."/>
        </authorList>
    </citation>
    <scope>PROTEIN SEQUENCE OF 21-119</scope>
</reference>
<reference key="14">
    <citation type="journal article" date="1986" name="Proc. Natl. Acad. Sci. U.S.A.">
        <title>Polymerization of intact beta 2-microglobulin in tissue causes amyloidosis in patients on chronic hemodialysis.</title>
        <authorList>
            <person name="Gorevic P.D."/>
            <person name="Munoz P.C."/>
            <person name="Casey T.T."/>
            <person name="DiRaimondo C.R."/>
            <person name="Stone W.J."/>
            <person name="Prelli F.C."/>
            <person name="Rodrigues M.M."/>
            <person name="Poulik M.D."/>
            <person name="Frangione B."/>
        </authorList>
    </citation>
    <scope>PROTEIN SEQUENCE OF 21-119</scope>
    <scope>SUBUNIT</scope>
    <scope>INVOLVEMENT IN AMYLOIDOSIS</scope>
</reference>
<reference key="15">
    <citation type="journal article" date="1992" name="Nephrol. Dial. Transplant.">
        <title>Biochemical characterization of serum and urinary beta 2 microglobulin in end-stage renal disease patients.</title>
        <authorList>
            <person name="Argiles A."/>
            <person name="Derancourt J."/>
            <person name="Jauregui-Adell J."/>
            <person name="Mion C."/>
            <person name="Demaille J.G."/>
        </authorList>
    </citation>
    <scope>PROTEIN SEQUENCE OF 21-40</scope>
    <scope>SUBCELLULAR LOCATION</scope>
</reference>
<reference key="16">
    <citation type="journal article" date="1994" name="Nephrol. Dial. Transplant.">
        <title>Isolation of a granulocyte inhibitory protein from uraemic patients with homology of beta 2-microglobulin.</title>
        <authorList>
            <person name="Haag-Weber M."/>
            <person name="Mai B."/>
            <person name="Hoerl W.H."/>
        </authorList>
    </citation>
    <scope>PROTEIN SEQUENCE OF 21-41</scope>
    <source>
        <tissue>Plasma</tissue>
    </source>
</reference>
<reference key="17">
    <citation type="journal article" date="1995" name="Clin. Chim. Acta">
        <title>Amino acid sequence of a modified beta 2-microglobulin in renal failure patient urine and long-term dialysis patient blood.</title>
        <authorList>
            <person name="Momoi T."/>
            <person name="Suzuki M."/>
            <person name="Titani K."/>
            <person name="Hisanaga S."/>
            <person name="Ogawa H."/>
            <person name="Saito A."/>
        </authorList>
    </citation>
    <scope>PROTEIN SEQUENCE OF 22-119</scope>
    <scope>SUBCELLULAR LOCATION</scope>
    <scope>PYROGLUTAMATE FORMATION AT GLN-22 (FORM PI 5.3)</scope>
    <source>
        <tissue>Urine</tissue>
    </source>
</reference>
<reference key="18">
    <citation type="journal article" date="2015" name="J. Proteome Res.">
        <title>Human basal tear peptidome characterization by CID, HCD, and ETD followed by in silico and in vitro analyses for antimicrobial peptide identification.</title>
        <authorList>
            <person name="Azkargorta M."/>
            <person name="Soria J."/>
            <person name="Ojeda C."/>
            <person name="Guzman F."/>
            <person name="Acera A."/>
            <person name="Iloro I."/>
            <person name="Suarez T."/>
            <person name="Elortza F."/>
        </authorList>
    </citation>
    <scope>PROTEIN SEQUENCE OF 21-30</scope>
    <scope>IDENTIFICATION BY MASS SPECTROMETRY</scope>
    <source>
        <tissue>Tear</tissue>
    </source>
</reference>
<reference key="19">
    <citation type="journal article" date="2014" name="J. Proteomics">
        <title>An enzyme assisted RP-RPLC approach for in-depth analysis of human liver phosphoproteome.</title>
        <authorList>
            <person name="Bian Y."/>
            <person name="Song C."/>
            <person name="Cheng K."/>
            <person name="Dong M."/>
            <person name="Wang F."/>
            <person name="Huang J."/>
            <person name="Sun D."/>
            <person name="Wang L."/>
            <person name="Ye M."/>
            <person name="Zou H."/>
        </authorList>
    </citation>
    <scope>IDENTIFICATION BY MASS SPECTROMETRY [LARGE SCALE ANALYSIS]</scope>
    <source>
        <tissue>Liver</tissue>
    </source>
</reference>
<reference key="20">
    <citation type="journal article" date="2015" name="Proteomics">
        <title>N-terminome analysis of the human mitochondrial proteome.</title>
        <authorList>
            <person name="Vaca Jacome A.S."/>
            <person name="Rabilloud T."/>
            <person name="Schaeffer-Reiss C."/>
            <person name="Rompais M."/>
            <person name="Ayoub D."/>
            <person name="Lane L."/>
            <person name="Bairoch A."/>
            <person name="Van Dorsselaer A."/>
            <person name="Carapito C."/>
        </authorList>
    </citation>
    <scope>IDENTIFICATION BY MASS SPECTROMETRY [LARGE SCALE ANALYSIS]</scope>
</reference>
<reference key="21">
    <citation type="journal article" date="1998" name="Curr. Biol.">
        <title>TAP- and tapasin-dependent HLA-E surface expression correlates with the binding of an MHC class I leader peptide.</title>
        <authorList>
            <person name="Braud V.M."/>
            <person name="Allan D.S."/>
            <person name="Wilson D."/>
            <person name="McMichael A.J."/>
        </authorList>
    </citation>
    <scope>SUBUNIT</scope>
    <scope>INTERACTION WITH HLA-E</scope>
</reference>
<reference key="22">
    <citation type="journal article" date="2000" name="J. Immunol.">
        <title>HLA-F is a predominantly empty, intracellular, TAP-associated MHC class Ib protein with a restricted expression pattern.</title>
        <authorList>
            <person name="Wainwright S.D."/>
            <person name="Biro P.A."/>
            <person name="Holmes C.H."/>
        </authorList>
    </citation>
    <scope>SUBUNIT</scope>
    <scope>INTERACTION WITH HLA-F</scope>
</reference>
<reference key="23">
    <citation type="journal article" date="2014" name="PLoS Pathog.">
        <title>The ESAT-6 protein of Mycobacterium tuberculosis interacts with beta-2-microglobulin (beta2M) affecting antigen presentation function of macrophage.</title>
        <authorList>
            <person name="Sreejit G."/>
            <person name="Ahmed A."/>
            <person name="Parveen N."/>
            <person name="Jha V."/>
            <person name="Valluri V.L."/>
            <person name="Ghosh S."/>
            <person name="Mukhopadhyay S."/>
        </authorList>
    </citation>
    <scope>FUNCTION</scope>
    <scope>INTERACTION WITH M.TUBERCULOSIS ESXA</scope>
    <scope>SUBCELLULAR LOCATION</scope>
    <source>
        <tissue>Macrophage</tissue>
    </source>
</reference>
<reference key="24">
    <citation type="journal article" date="1994" name="Biochemistry">
        <title>Glycation of human beta 2-microglobulin in patients with hemodialysis-associated amyloidosis: identification of the glycated sites.</title>
        <authorList>
            <person name="Miyata T."/>
            <person name="Inagi R."/>
            <person name="Wada Y."/>
            <person name="Ueda Y."/>
            <person name="Iida Y."/>
            <person name="Takahashi M."/>
            <person name="Taniguchi N."/>
            <person name="Maeda K."/>
        </authorList>
    </citation>
    <scope>INVOLVEMENT IN HEMODIALYSIS-ASSOCIATED AMYLOIDOSIS</scope>
    <scope>GLYCATION AT ILE-21; LYS-39; LYS-61; LYS-68; LYS-78; LYS-111 AND LYS-114</scope>
    <scope>IDENTIFICATION BY MASS SPECTROMETRY</scope>
</reference>
<reference key="25">
    <citation type="journal article" date="2011" name="BMC Syst. Biol.">
        <title>Initial characterization of the human central proteome.</title>
        <authorList>
            <person name="Burkard T.R."/>
            <person name="Planyavsky M."/>
            <person name="Kaupe I."/>
            <person name="Breitwieser F.P."/>
            <person name="Buerckstuemmer T."/>
            <person name="Bennett K.L."/>
            <person name="Superti-Furga G."/>
            <person name="Colinge J."/>
        </authorList>
    </citation>
    <scope>IDENTIFICATION BY MASS SPECTROMETRY [LARGE SCALE ANALYSIS]</scope>
</reference>
<reference key="26">
    <citation type="journal article" date="2012" name="N. Engl. J. Med.">
        <title>Hereditary systemic amyloidosis due to Asp76Asn variant beta2-microglobulin.</title>
        <authorList>
            <person name="Valleix S."/>
            <person name="Gillmore J.D."/>
            <person name="Bridoux F."/>
            <person name="Mangione P.P."/>
            <person name="Dogan A."/>
            <person name="Nedelec B."/>
            <person name="Boimard M."/>
            <person name="Touchard G."/>
            <person name="Goujon J.M."/>
            <person name="Lacombe C."/>
            <person name="Lozeron P."/>
            <person name="Adams D."/>
            <person name="Lacroix C."/>
            <person name="Maisonobe T."/>
            <person name="Plante-Bordeneuve V."/>
            <person name="Vrana J.A."/>
            <person name="Theis J.D."/>
            <person name="Giorgetti S."/>
            <person name="Porcari R."/>
            <person name="Ricagno S."/>
            <person name="Bolognesi M."/>
            <person name="Stoppini M."/>
            <person name="Delpech M."/>
            <person name="Pepys M.B."/>
            <person name="Hawkins P.N."/>
            <person name="Bellotti V."/>
        </authorList>
    </citation>
    <scope>INVOLVEMENT IN AMYLD6</scope>
    <scope>VARIANT AMYLD6 ASN-96</scope>
    <scope>CHARACTERIZATION OF VARIANT AMYLD6 ASN-96</scope>
</reference>
<reference key="27">
    <citation type="journal article" date="1987" name="Nature">
        <title>Structure of the human class I histocompatibility antigen, HLA-A2.</title>
        <authorList>
            <person name="Bjorkman P.J."/>
            <person name="Saper M.A."/>
            <person name="Samraoui B."/>
            <person name="Bennett W.S."/>
            <person name="Strominger J.L."/>
            <person name="Wiley D.C."/>
        </authorList>
    </citation>
    <scope>X-RAY CRYSTALLOGRAPHY (3.5 ANGSTROMS)</scope>
</reference>
<reference key="28">
    <citation type="journal article" date="1991" name="J. Mol. Biol.">
        <title>Refined structure of the human histocompatibility antigen HLA-A2 at 2.6-A resolution.</title>
        <authorList>
            <person name="Saper M.A."/>
            <person name="Bjorkman P.J."/>
            <person name="Wiley D.C."/>
        </authorList>
    </citation>
    <scope>X-RAY CRYSTALLOGRAPHY (2.6 ANGSTROMS)</scope>
</reference>
<reference key="29">
    <citation type="journal article" date="1992" name="Biochemistry">
        <title>1H NMR assignments and secondary structure of human beta 2-microglobulin in solution.</title>
        <authorList>
            <person name="Okon M."/>
            <person name="Bray P."/>
            <person name="Vucelic D."/>
        </authorList>
    </citation>
    <scope>STRUCTURE BY NMR</scope>
</reference>
<reference key="30">
    <citation type="journal article" date="1995" name="Proc. Natl. Acad. Sci. U.S.A.">
        <title>The three-dimensional structure of a class I major histocompatibility complex molecule missing the alpha 3 domain of the heavy chain.</title>
        <authorList>
            <person name="Collins E.J."/>
            <person name="Garboczi D.N."/>
            <person name="Karpusas M.N."/>
            <person name="Wiley D.C."/>
        </authorList>
    </citation>
    <scope>X-RAY CRYSTALLOGRAPHY (2.3 ANGSTROMS)</scope>
</reference>
<reference key="31">
    <citation type="journal article" date="1996" name="Immunity">
        <title>Bound water structure and polymorphic amino acids act together to allow the binding of different peptides to MHC class I HLA-B53.</title>
        <authorList>
            <person name="Smith K.J."/>
            <person name="Reid S.W."/>
            <person name="Harlos K."/>
            <person name="McMichael A.J."/>
            <person name="Stuart D.I."/>
            <person name="Bell J.I."/>
            <person name="Jones E.Y."/>
        </authorList>
    </citation>
    <scope>X-RAY CRYSTALLOGRAPHY (2.3 ANGSTROMS)</scope>
</reference>
<reference key="32">
    <citation type="journal article" date="2002" name="Proc. Natl. Acad. Sci. U.S.A.">
        <title>Crystal structure of monomeric human beta-2-microglobulin reveals clues to its amyloidogenic properties.</title>
        <authorList>
            <person name="Trinh C.H."/>
            <person name="Smith D.P."/>
            <person name="Kalverda A.P."/>
            <person name="Phillips S.E."/>
            <person name="Radford S.E."/>
        </authorList>
    </citation>
    <scope>X-RAY CRYSTALLOGRAPHY (1.8 ANGSTROMS) OF 21-119</scope>
    <scope>DISULFIDE BOND</scope>
</reference>
<reference key="33">
    <citation type="journal article" date="2003" name="Nat. Immunol.">
        <title>A structural basis for immunodominant human T cell receptor recognition.</title>
        <authorList>
            <person name="Stewart-Jones G.B.E."/>
            <person name="McMichael A.J."/>
            <person name="Bell J.I."/>
            <person name="Stuart D.I."/>
            <person name="Jones E.Y."/>
        </authorList>
    </citation>
    <scope>X-RAY CRYSTALLOGRAPHY (1.4 ANGSTROMS) OF 21-119 OF HLA-A/B2M HETERODIMER IN COMPLEX WITH TRAC AND TRBC1</scope>
    <scope>DISULFIDE BOND</scope>
</reference>
<reference key="34">
    <citation type="journal article" date="2006" name="J. Biol. Chem.">
        <title>Conformation of amyloid fibrils of beta2-microglobulin probed by tryptophan mutagenesis.</title>
        <authorList>
            <person name="Kihara M."/>
            <person name="Chatani E."/>
            <person name="Iwata K."/>
            <person name="Yamamoto K."/>
            <person name="Matsuura T."/>
            <person name="Nakagawa A."/>
            <person name="Naiki H."/>
            <person name="Goto Y."/>
        </authorList>
    </citation>
    <scope>X-RAY CRYSTALLOGRAPHY (1.7 ANGSTROMS) OF 21-119</scope>
    <scope>AMYLOID FORMATION</scope>
    <scope>DISULFIDE BOND</scope>
</reference>
<reference key="35">
    <citation type="journal article" date="2006" name="Nat. Struct. Mol. Biol.">
        <title>A native to amyloidogenic transition regulated by a backbone trigger.</title>
        <authorList>
            <person name="Eakin C.M."/>
            <person name="Berman A.J."/>
            <person name="Miranker A.D."/>
        </authorList>
    </citation>
    <scope>X-RAY CRYSTALLOGRAPHY (1.7 ANGSTROMS) OF 21-119</scope>
    <scope>DISULFIDE BOND</scope>
</reference>
<reference key="36">
    <citation type="journal article" date="2006" name="Proc. Natl. Acad. Sci. U.S.A.">
        <title>Structural basis for recognition of the nonclassical MHC molecule HLA-G by the leukocyte Ig-like receptor B2 (LILRB2/LIR2/ILT4/CD85d).</title>
        <authorList>
            <person name="Shiroishi M."/>
            <person name="Kuroki K."/>
            <person name="Rasubala L."/>
            <person name="Tsumoto K."/>
            <person name="Kumagai I."/>
            <person name="Kurimoto E."/>
            <person name="Kato K."/>
            <person name="Kohda D."/>
            <person name="Maenaka K."/>
        </authorList>
    </citation>
    <scope>X-RAY CRYSTALLOGRAPHY (2.50 ANGSTROMS) OF 21-119 IN COMPLEX WITH HLA-G AND SELF-PEPTIDE</scope>
</reference>
<reference key="37">
    <citation type="journal article" date="2007" name="J. Biochem.">
        <title>High-resolution crystal structure of beta2-microglobulin formed at pH 7.0.</title>
        <authorList>
            <person name="Iwata K."/>
            <person name="Matsuura T."/>
            <person name="Sakurai K."/>
            <person name="Nakagawa A."/>
            <person name="Goto Y."/>
        </authorList>
    </citation>
    <scope>X-RAY CRYSTALLOGRAPHY (1.13 ANGSTROMS) OF 21-119</scope>
    <scope>DISULFIDE BOND</scope>
</reference>
<reference key="38">
    <citation type="journal article" date="2008" name="Biochem. Biophys. Res. Commun.">
        <title>DE loop mutations affect beta2-microglobulin stability and amyloid aggregation.</title>
        <authorList>
            <person name="Ricagno S."/>
            <person name="Colombo M."/>
            <person name="de Rosa M."/>
            <person name="Sangiovanni E."/>
            <person name="Giorgetti S."/>
            <person name="Raimondi S."/>
            <person name="Bellotti V."/>
            <person name="Bolognesi M."/>
        </authorList>
    </citation>
    <scope>X-RAY CRYSTALLOGRAPHY (1.8 ANGSTROMS) OF 21-119</scope>
    <scope>MUTAGENESIS OF ASP-79</scope>
    <scope>DISULFIDE BOND</scope>
</reference>
<reference key="39">
    <citation type="journal article" date="2008" name="J. Mol. Biol.">
        <title>The controlling roles of Trp60 and Trp95 in beta2-microglobulin function, folding and amyloid aggregation properties.</title>
        <authorList>
            <person name="Esposito G."/>
            <person name="Ricagno S."/>
            <person name="Corazza A."/>
            <person name="Rennella E."/>
            <person name="Guemral D."/>
            <person name="Mimmi M.C."/>
            <person name="Betto E."/>
            <person name="Pucillo C.E."/>
            <person name="Fogolari F."/>
            <person name="Viglino P."/>
            <person name="Raimondi S."/>
            <person name="Giorgetti S."/>
            <person name="Bolognesi B."/>
            <person name="Merlini G."/>
            <person name="Stoppini M."/>
            <person name="Bolognesi M."/>
            <person name="Bellotti V."/>
        </authorList>
    </citation>
    <scope>X-RAY CRYSTALLOGRAPHY (1.8 ANGSTROMS) OF 21-119</scope>
    <scope>MUTAGENESIS OF TRP-80</scope>
    <scope>DISULFIDE BOND</scope>
</reference>
<reference key="40">
    <citation type="journal article" date="2009" name="Biochem. Biophys. Res. Commun.">
        <title>Human beta-2 microglobulin W60V mutant structure: Implications for stability and amyloid aggregation.</title>
        <authorList>
            <person name="Ricagno S."/>
            <person name="Raimondi S."/>
            <person name="Giorgetti S."/>
            <person name="Bellotti V."/>
            <person name="Bolognesi M."/>
        </authorList>
    </citation>
    <scope>X-RAY CRYSTALLOGRAPHY (1.8 ANGSTROMS) OF 21-119</scope>
    <scope>MUTAGENESIS OF TRP-80</scope>
    <scope>DISULFIDE BOND</scope>
</reference>
<reference key="41">
    <citation type="journal article" date="2014" name="Nature">
        <title>T-cell activation by transitory neo-antigens derived from distinct microbial pathways.</title>
        <authorList>
            <person name="Corbett A.J."/>
            <person name="Eckle S.B."/>
            <person name="Birkinshaw R.W."/>
            <person name="Liu L."/>
            <person name="Patel O."/>
            <person name="Mahony J."/>
            <person name="Chen Z."/>
            <person name="Reantragoon R."/>
            <person name="Meehan B."/>
            <person name="Cao H."/>
            <person name="Williamson N.A."/>
            <person name="Strugnell R.A."/>
            <person name="Van Sinderen D."/>
            <person name="Mak J.Y."/>
            <person name="Fairlie D.P."/>
            <person name="Kjer-Nielsen L."/>
            <person name="Rossjohn J."/>
            <person name="McCluskey J."/>
        </authorList>
    </citation>
    <scope>X-RAY CRYSTALLOGRAPHY (2.10 ANGSTROMS) OF 21-119 IN COMPLEX WITH MR1 AND METABOLITE ANTIGEN</scope>
</reference>
<reference key="42">
    <citation type="journal article" date="2006" name="Proc. Natl. Acad. Sci. U.S.A.">
        <title>Familial hypercatabolic hypoproteinemia caused by deficiency of the neonatal Fc receptor, FcRn, due to a mutant beta2-microglobulin gene.</title>
        <authorList>
            <person name="Wani M.A."/>
            <person name="Haynes L.D."/>
            <person name="Kim J."/>
            <person name="Bronson C.L."/>
            <person name="Chaudhury C."/>
            <person name="Mohanty S."/>
            <person name="Waldmann T.A."/>
            <person name="Robinson J.M."/>
            <person name="Anderson C.L."/>
        </authorList>
    </citation>
    <scope>VARIANT IMD43 PRO-11</scope>
    <scope>CHARACTERIZATION OF VARIANT IMD43 PRO-11</scope>
</reference>
<name>B2MG_HUMAN</name>
<proteinExistence type="evidence at protein level"/>
<keyword id="KW-0002">3D-structure</keyword>
<keyword id="KW-0034">Amyloid</keyword>
<keyword id="KW-1008">Amyloidosis</keyword>
<keyword id="KW-0903">Direct protein sequencing</keyword>
<keyword id="KW-0225">Disease variant</keyword>
<keyword id="KW-1015">Disulfide bond</keyword>
<keyword id="KW-0971">Glycation</keyword>
<keyword id="KW-0325">Glycoprotein</keyword>
<keyword id="KW-0391">Immunity</keyword>
<keyword id="KW-0393">Immunoglobulin domain</keyword>
<keyword id="KW-0490">MHC I</keyword>
<keyword id="KW-1267">Proteomics identification</keyword>
<keyword id="KW-0873">Pyrrolidone carboxylic acid</keyword>
<keyword id="KW-1185">Reference proteome</keyword>
<keyword id="KW-0964">Secreted</keyword>
<keyword id="KW-0732">Signal</keyword>